<gene>
    <name evidence="108 117" type="primary">RET</name>
    <name type="synonym">CDHF12</name>
    <name type="synonym">CDHR16</name>
    <name type="synonym">PTC</name>
</gene>
<feature type="signal peptide" evidence="2">
    <location>
        <begin position="1"/>
        <end position="28"/>
    </location>
</feature>
<feature type="chain" id="PRO_0000024450" description="Proto-oncogene tyrosine-protein kinase receptor Ret">
    <location>
        <begin position="29"/>
        <end position="1114"/>
    </location>
</feature>
<feature type="chain" id="PRO_0000415292" description="Extracellular cell-membrane anchored RET cadherin 120 kDa fragment" evidence="113">
    <location>
        <begin position="29"/>
        <end position="707"/>
    </location>
</feature>
<feature type="chain" id="PRO_0000415293" description="Soluble RET kinase fragment" evidence="113">
    <location>
        <begin position="708"/>
        <end position="1017"/>
    </location>
</feature>
<feature type="topological domain" description="Extracellular" evidence="2">
    <location>
        <begin position="29"/>
        <end position="635"/>
    </location>
</feature>
<feature type="transmembrane region" description="Helical" evidence="2">
    <location>
        <begin position="636"/>
        <end position="657"/>
    </location>
</feature>
<feature type="topological domain" description="Cytoplasmic" evidence="2">
    <location>
        <begin position="658"/>
        <end position="1114"/>
    </location>
</feature>
<feature type="domain" description="Cadherin" evidence="3">
    <location>
        <begin position="168"/>
        <end position="272"/>
    </location>
</feature>
<feature type="domain" description="Protein kinase" evidence="4">
    <location>
        <begin position="724"/>
        <end position="1016"/>
    </location>
</feature>
<feature type="region of interest" description="Cadherin-like region 1 (CLD1)" evidence="111">
    <location>
        <begin position="29"/>
        <end position="153"/>
    </location>
</feature>
<feature type="region of interest" description="Cadherin-like region 3 (CLD3)" evidence="111">
    <location>
        <begin position="265"/>
        <end position="379"/>
    </location>
</feature>
<feature type="region of interest" description="Cadherin-like region 4 (CLD4)" evidence="111">
    <location>
        <begin position="405"/>
        <end position="506"/>
    </location>
</feature>
<feature type="active site" description="Proton acceptor" evidence="4 5">
    <location>
        <position position="874"/>
    </location>
</feature>
<feature type="binding site" evidence="61 115 128 133">
    <location>
        <position position="178"/>
    </location>
    <ligand>
        <name>Ca(2+)</name>
        <dbReference type="ChEBI" id="CHEBI:29108"/>
        <label>1</label>
    </ligand>
</feature>
<feature type="binding site" evidence="61 133">
    <location>
        <position position="179"/>
    </location>
    <ligand>
        <name>Ca(2+)</name>
        <dbReference type="ChEBI" id="CHEBI:29108"/>
        <label>1</label>
    </ligand>
</feature>
<feature type="binding site" evidence="61 115 128 133">
    <location>
        <position position="230"/>
    </location>
    <ligand>
        <name>Ca(2+)</name>
        <dbReference type="ChEBI" id="CHEBI:29108"/>
        <label>1</label>
    </ligand>
</feature>
<feature type="binding site" evidence="61 133">
    <location>
        <position position="232"/>
    </location>
    <ligand>
        <name>Ca(2+)</name>
        <dbReference type="ChEBI" id="CHEBI:29108"/>
        <label>1</label>
    </ligand>
</feature>
<feature type="binding site" evidence="61 133">
    <location>
        <position position="232"/>
    </location>
    <ligand>
        <name>Ca(2+)</name>
        <dbReference type="ChEBI" id="CHEBI:29108"/>
        <label>2</label>
    </ligand>
</feature>
<feature type="binding site" evidence="61 115 128 133">
    <location>
        <position position="264"/>
    </location>
    <ligand>
        <name>Ca(2+)</name>
        <dbReference type="ChEBI" id="CHEBI:29108"/>
        <label>2</label>
    </ligand>
</feature>
<feature type="binding site" evidence="61 115 128 133">
    <location>
        <position position="265"/>
    </location>
    <ligand>
        <name>Ca(2+)</name>
        <dbReference type="ChEBI" id="CHEBI:29108"/>
        <label>2</label>
    </ligand>
</feature>
<feature type="binding site" evidence="61 115 128 133">
    <location>
        <position position="266"/>
    </location>
    <ligand>
        <name>Ca(2+)</name>
        <dbReference type="ChEBI" id="CHEBI:29108"/>
        <label>3</label>
    </ligand>
</feature>
<feature type="binding site" evidence="61 115 128 133">
    <location>
        <position position="267"/>
    </location>
    <ligand>
        <name>Ca(2+)</name>
        <dbReference type="ChEBI" id="CHEBI:29108"/>
        <label>2</label>
    </ligand>
</feature>
<feature type="binding site" evidence="61 133">
    <location>
        <position position="267"/>
    </location>
    <ligand>
        <name>Ca(2+)</name>
        <dbReference type="ChEBI" id="CHEBI:29108"/>
        <label>4</label>
    </ligand>
</feature>
<feature type="binding site" evidence="61 115 128 133">
    <location>
        <position position="268"/>
    </location>
    <ligand>
        <name>Ca(2+)</name>
        <dbReference type="ChEBI" id="CHEBI:29108"/>
        <label>3</label>
    </ligand>
</feature>
<feature type="binding site" evidence="61 115 128 133">
    <location>
        <position position="300"/>
    </location>
    <ligand>
        <name>Ca(2+)</name>
        <dbReference type="ChEBI" id="CHEBI:29108"/>
        <label>3</label>
    </ligand>
</feature>
<feature type="binding site" evidence="61 133">
    <location>
        <position position="302"/>
    </location>
    <ligand>
        <name>Ca(2+)</name>
        <dbReference type="ChEBI" id="CHEBI:29108"/>
        <label>2</label>
    </ligand>
</feature>
<feature type="binding site" evidence="61 115 128 133">
    <location>
        <position position="302"/>
    </location>
    <ligand>
        <name>Ca(2+)</name>
        <dbReference type="ChEBI" id="CHEBI:29108"/>
        <label>3</label>
    </ligand>
</feature>
<feature type="binding site" evidence="61 133">
    <location>
        <position position="378"/>
    </location>
    <ligand>
        <name>Ca(2+)</name>
        <dbReference type="ChEBI" id="CHEBI:29108"/>
        <label>3</label>
    </ligand>
</feature>
<feature type="binding site" evidence="61 133">
    <location>
        <position position="564"/>
    </location>
    <ligand>
        <name>Ca(2+)</name>
        <dbReference type="ChEBI" id="CHEBI:29108"/>
        <label>4</label>
    </ligand>
</feature>
<feature type="binding site" evidence="61 133">
    <location>
        <position position="565"/>
    </location>
    <ligand>
        <name>Ca(2+)</name>
        <dbReference type="ChEBI" id="CHEBI:29108"/>
        <label>4</label>
    </ligand>
</feature>
<feature type="binding site" evidence="61 133">
    <location>
        <position position="567"/>
    </location>
    <ligand>
        <name>Ca(2+)</name>
        <dbReference type="ChEBI" id="CHEBI:29108"/>
        <label>4</label>
    </ligand>
</feature>
<feature type="binding site" evidence="61 133">
    <location>
        <position position="569"/>
    </location>
    <ligand>
        <name>Ca(2+)</name>
        <dbReference type="ChEBI" id="CHEBI:29108"/>
        <label>4</label>
    </ligand>
</feature>
<feature type="binding site" evidence="61 133">
    <location>
        <position position="574"/>
    </location>
    <ligand>
        <name>Ca(2+)</name>
        <dbReference type="ChEBI" id="CHEBI:29108"/>
        <label>4</label>
    </ligand>
</feature>
<feature type="binding site" evidence="61 133">
    <location>
        <position position="584"/>
    </location>
    <ligand>
        <name>Ca(2+)</name>
        <dbReference type="ChEBI" id="CHEBI:29108"/>
        <label>4</label>
    </ligand>
</feature>
<feature type="binding site" evidence="4 114 126">
    <location>
        <begin position="730"/>
        <end position="738"/>
    </location>
    <ligand>
        <name>ATP</name>
        <dbReference type="ChEBI" id="CHEBI:30616"/>
    </ligand>
</feature>
<feature type="binding site" evidence="4 114">
    <location>
        <position position="758"/>
    </location>
    <ligand>
        <name>ATP</name>
        <dbReference type="ChEBI" id="CHEBI:30616"/>
    </ligand>
</feature>
<feature type="binding site" evidence="38 124">
    <location>
        <begin position="805"/>
        <end position="807"/>
    </location>
    <ligand>
        <name>semaxanib</name>
        <dbReference type="ChEBI" id="CHEBI:91083"/>
        <note>inhibitor</note>
    </ligand>
</feature>
<feature type="site" description="Breakpoint for translocation to form the TRIM27/RET oncogene" evidence="59">
    <location>
        <begin position="587"/>
        <end position="588"/>
    </location>
</feature>
<feature type="site" description="Cleavage; by caspase-3" evidence="45">
    <location>
        <begin position="707"/>
        <end position="708"/>
    </location>
</feature>
<feature type="site" description="Breakpoint for translocation to form PCM1-RET; RET-CCDC6; RET-GOLGA5; RET-TRIM24 and RET-TRIM33 oncogenes" evidence="8 16 50 54">
    <location>
        <begin position="712"/>
        <end position="713"/>
    </location>
</feature>
<feature type="site" description="Cleavage; by caspase-3" evidence="45">
    <location>
        <begin position="1017"/>
        <end position="1018"/>
    </location>
</feature>
<feature type="modified residue" description="Phosphotyrosine; by autocatalysis" evidence="51">
    <location>
        <position position="687"/>
    </location>
</feature>
<feature type="modified residue" description="Phosphoserine" evidence="138">
    <location>
        <position position="696"/>
    </location>
</feature>
<feature type="modified residue" description="Phosphotyrosine; by autocatalysis" evidence="24">
    <location>
        <position position="806"/>
    </location>
</feature>
<feature type="modified residue" description="Phosphotyrosine; by autocatalysis" evidence="24">
    <location>
        <position position="809"/>
    </location>
</feature>
<feature type="modified residue" description="Phosphotyrosine; by autocatalysis" evidence="51">
    <location>
        <position position="826"/>
    </location>
</feature>
<feature type="modified residue" description="Phosphotyrosine; by autocatalysis" evidence="24 26 51">
    <location>
        <position position="900"/>
    </location>
</feature>
<feature type="modified residue" description="Phosphotyrosine; by autocatalysis" evidence="24 26 38 51 56">
    <location>
        <position position="905"/>
    </location>
</feature>
<feature type="modified residue" description="Phosphotyrosine; by autocatalysis" evidence="24 51">
    <location>
        <position position="981"/>
    </location>
</feature>
<feature type="modified residue" description="Phosphotyrosine; by autocatalysis" evidence="17 51">
    <location>
        <position position="1015"/>
    </location>
</feature>
<feature type="modified residue" description="Phosphotyrosine; by autocatalysis" evidence="51">
    <location>
        <position position="1029"/>
    </location>
</feature>
<feature type="modified residue" description="Phosphotyrosine; by autocatalysis" evidence="17 24 51 56">
    <location>
        <position position="1062"/>
    </location>
</feature>
<feature type="modified residue" description="Phosphotyrosine; by autocatalysis" evidence="24">
    <location>
        <position position="1090"/>
    </location>
</feature>
<feature type="modified residue" description="Phosphotyrosine; by autocatalysis" evidence="24">
    <location>
        <position position="1096"/>
    </location>
</feature>
<feature type="glycosylation site" description="N-linked (GlcNAc...) asparagine" evidence="2">
    <location>
        <position position="98"/>
    </location>
</feature>
<feature type="glycosylation site" description="N-linked (GlcNAc...) asparagine" evidence="40">
    <location>
        <position position="151"/>
    </location>
</feature>
<feature type="glycosylation site" description="N-linked (GlcNAc...) asparagine" evidence="2">
    <location>
        <position position="199"/>
    </location>
</feature>
<feature type="glycosylation site" description="N-linked (GlcNAc...) asparagine" evidence="2">
    <location>
        <position position="336"/>
    </location>
</feature>
<feature type="glycosylation site" description="N-linked (GlcNAc...) asparagine" evidence="2">
    <location>
        <position position="343"/>
    </location>
</feature>
<feature type="glycosylation site" description="N-linked (GlcNAc...) asparagine" evidence="2">
    <location>
        <position position="361"/>
    </location>
</feature>
<feature type="glycosylation site" description="N-linked (GlcNAc...) asparagine" evidence="2">
    <location>
        <position position="367"/>
    </location>
</feature>
<feature type="glycosylation site" description="N-linked (GlcNAc...) asparagine" evidence="2">
    <location>
        <position position="377"/>
    </location>
</feature>
<feature type="glycosylation site" description="N-linked (GlcNAc...) asparagine" evidence="2">
    <location>
        <position position="394"/>
    </location>
</feature>
<feature type="glycosylation site" description="N-linked (GlcNAc...) asparagine" evidence="2">
    <location>
        <position position="448"/>
    </location>
</feature>
<feature type="glycosylation site" description="N-linked (GlcNAc...) asparagine" evidence="2">
    <location>
        <position position="468"/>
    </location>
</feature>
<feature type="glycosylation site" description="N-linked (GlcNAc...) asparagine" evidence="2">
    <location>
        <position position="554"/>
    </location>
</feature>
<feature type="glycosylation site" description="O-linked (GlcNAc) serine" evidence="53">
    <location>
        <position position="688"/>
    </location>
</feature>
<feature type="disulfide bond" evidence="40 52 61 125 128 129 133 134 135 136 137">
    <location>
        <begin position="137"/>
        <end position="142"/>
    </location>
</feature>
<feature type="disulfide bond" evidence="40 52 61 125 128 129 133 134 135 136 137">
    <location>
        <begin position="157"/>
        <end position="197"/>
    </location>
</feature>
<feature type="disulfide bond" evidence="40 52 61 125 128 129 133 134 135 136 137">
    <location>
        <begin position="166"/>
        <end position="243"/>
    </location>
</feature>
<feature type="disulfide bond" evidence="61 133 134 135 136 137">
    <location>
        <begin position="426"/>
        <end position="430"/>
    </location>
</feature>
<feature type="disulfide bond" evidence="61 129 133 134 135 136 137">
    <location>
        <begin position="449"/>
        <end position="478"/>
    </location>
</feature>
<feature type="disulfide bond" evidence="61 133 134 135 136 137">
    <location>
        <begin position="515"/>
        <end position="531"/>
    </location>
</feature>
<feature type="disulfide bond" evidence="61 133 134 135 136 137">
    <location>
        <begin position="519"/>
        <end position="541"/>
    </location>
</feature>
<feature type="disulfide bond" evidence="61 133 134 135 136 137">
    <location>
        <begin position="528"/>
        <end position="558"/>
    </location>
</feature>
<feature type="disulfide bond" evidence="61 133 134 135 136 137">
    <location>
        <begin position="565"/>
        <end position="581"/>
    </location>
</feature>
<feature type="disulfide bond" evidence="61 133 134 135 136 137">
    <location>
        <begin position="570"/>
        <end position="585"/>
    </location>
</feature>
<feature type="disulfide bond" evidence="61 133 134 135 136 137">
    <location>
        <begin position="609"/>
        <end position="620"/>
    </location>
</feature>
<feature type="disulfide bond" evidence="61 133 134 135 136 137">
    <location>
        <begin position="611"/>
        <end position="618"/>
    </location>
</feature>
<feature type="disulfide bond" evidence="61 133 134 135 136 137">
    <location>
        <begin position="630"/>
        <end position="634"/>
    </location>
</feature>
<feature type="splice variant" id="VSP_040735" description="In isoform 2." evidence="106 107 109">
    <original>MSDPNWPGESPVPLTRADGTNTGFPRYPNDSVYANWMLSPSAAKLMDTFDS</original>
    <variation>RISHAFTRF</variation>
    <location>
        <begin position="1064"/>
        <end position="1114"/>
    </location>
</feature>
<feature type="sequence variant" id="VAR_009459" description="In HSCR1; sporadic form; dbSNP:rs1837067697." evidence="63">
    <original>P</original>
    <variation>L</variation>
    <location>
        <position position="20"/>
    </location>
</feature>
<feature type="sequence variant" id="VAR_006295" description="In HSCR1; familial form; dbSNP:rs76764689." evidence="12 79">
    <original>S</original>
    <variation>L</variation>
    <location>
        <position position="32"/>
    </location>
</feature>
<feature type="sequence variant" id="VAR_009492" description="In HSCR1; dbSNP:rs2132657920." evidence="64 85">
    <original>L</original>
    <variation>P</variation>
    <location>
        <position position="40"/>
    </location>
</feature>
<feature type="sequence variant" id="VAR_006296" description="In HSCR1; familial form; dbSNP:rs77596424." evidence="79">
    <original>P</original>
    <variation>L</variation>
    <location>
        <position position="64"/>
    </location>
</feature>
<feature type="sequence variant" id="VAR_018153" description="In dbSNP:rs192489011." evidence="23">
    <original>R</original>
    <variation>H</variation>
    <location>
        <position position="67"/>
    </location>
</feature>
<feature type="sequence variant" id="VAR_009460" description="In HSCR1; dbSNP:rs1588862595." evidence="12">
    <original>R</original>
    <variation>C</variation>
    <location>
        <position position="77"/>
    </location>
</feature>
<feature type="sequence variant" id="VAR_006297" description="In HSCR1; uncertain significance; dbSNP:rs1477699803." evidence="63">
    <original>G</original>
    <variation>S</variation>
    <location>
        <position position="93"/>
    </location>
</feature>
<feature type="sequence variant" id="VAR_067101" description="In HSCR1; uncertain significance; dbSNP:rs747483905." evidence="48">
    <original>R</original>
    <variation>C</variation>
    <location>
        <position position="114"/>
    </location>
</feature>
<feature type="sequence variant" id="VAR_018154" description="In dbSNP:rs76397662." evidence="21 23 48">
    <original>R</original>
    <variation>H</variation>
    <location>
        <position position="114"/>
    </location>
</feature>
<feature type="sequence variant" id="VAR_006298" description="In HSCR1; sporadic form; dbSNP:rs2132680131.">
    <original>C</original>
    <variation>S</variation>
    <location>
        <position position="142"/>
    </location>
</feature>
<feature type="sequence variant" id="VAR_035711" description="In HSCR1; also in a colorectal cancer sample; somatic mutation; dbSNP:rs1588863999." evidence="27 48">
    <original>V</original>
    <variation>G</variation>
    <location>
        <position position="145"/>
    </location>
</feature>
<feature type="sequence variant" id="VAR_067102" description="In HSCR1; dbSNP:rs999019810." evidence="48">
    <original>P</original>
    <variation>L</variation>
    <location>
        <position position="155"/>
    </location>
</feature>
<feature type="sequence variant" id="VAR_009461" description="In HSCR1; uncertain significance; dbSNP:rs2132681401." evidence="105">
    <original>C</original>
    <variation>Y</variation>
    <location>
        <position position="157"/>
    </location>
</feature>
<feature type="sequence variant" id="VAR_041762" description="In a colorectal adenocarcinoma sample; somatic mutation; dbSNP:rs149403911." evidence="28">
    <original>R</original>
    <variation>Q</variation>
    <location>
        <position position="163"/>
    </location>
</feature>
<feature type="sequence variant" id="VAR_009462" description="In HSCR1; sporadic form." evidence="88">
    <original>F</original>
    <variation>S</variation>
    <location>
        <position position="174"/>
    </location>
</feature>
<feature type="sequence variant" id="VAR_067103" description="In HSCR1; dbSNP:rs774097284." evidence="48">
    <original>R</original>
    <variation>P</variation>
    <location>
        <position position="175"/>
    </location>
</feature>
<feature type="sequence variant" id="VAR_009463" description="In HSCR1; sporadic form; dbSNP:rs370736139." evidence="87">
    <original>R</original>
    <variation>P</variation>
    <location>
        <position position="180"/>
    </location>
</feature>
<feature type="sequence variant" id="VAR_009464" description="In HSCR1; sporadic form." evidence="88">
    <original>C</original>
    <variation>Y</variation>
    <location>
        <position position="197"/>
    </location>
</feature>
<feature type="sequence variant" id="VAR_044392" description="In a patient with renal agenesis; uncertain significance; prevents phosphorylation in response to GDNF; dbSNP:rs76736111." evidence="31">
    <original>P</original>
    <variation>T</variation>
    <location>
        <position position="198"/>
    </location>
</feature>
<feature type="sequence variant" id="VAR_006299" description="In HSCR1; familial form; dbSNP:rs79661516." evidence="62">
    <original>R</original>
    <variation>H</variation>
    <location>
        <position position="231"/>
    </location>
</feature>
<feature type="sequence variant" id="VAR_006300" description="In HSCR1; familial form; dbSNP:rs562449603." evidence="62">
    <original>E</original>
    <variation>K</variation>
    <location>
        <position position="251"/>
    </location>
</feature>
<feature type="sequence variant" id="VAR_067104" description="In HSCR1; dbSNP:rs541929171." evidence="48">
    <original>T</original>
    <variation>A</variation>
    <location>
        <position position="278"/>
    </location>
</feature>
<feature type="sequence variant" id="VAR_041763" description="Found in two patients with Hirschsprung disease; dbSNP:rs35118262." evidence="28 48">
    <original>T</original>
    <variation>N</variation>
    <location>
        <position position="278"/>
    </location>
</feature>
<feature type="sequence variant" id="VAR_067105" description="In HSCR1; dbSNP:rs541929171." evidence="48">
    <original>T</original>
    <variation>P</variation>
    <location>
        <position position="278"/>
    </location>
</feature>
<feature type="sequence variant" id="VAR_006301" description="In HSCR1; sporadic form; dbSNP:rs1564491460." evidence="13">
    <original>R</original>
    <variation>Q</variation>
    <location>
        <position position="287"/>
    </location>
</feature>
<feature type="sequence variant" id="VAR_041764" description="Found in patients with Hirschsprung disease; uncertain significance; dbSNP:rs34682185." evidence="28 48">
    <original>V</original>
    <variation>M</variation>
    <location>
        <position position="292"/>
    </location>
</feature>
<feature type="sequence variant" id="VAR_067106" description="In HSCR1; dbSNP:rs2132719351." evidence="48">
    <original>D</original>
    <variation>N</variation>
    <location>
        <position position="300"/>
    </location>
</feature>
<feature type="sequence variant" id="VAR_009465" description="In HSCR1; dbSNP:rs77702891." evidence="48 87">
    <original>R</original>
    <variation>Q</variation>
    <location>
        <position position="313"/>
    </location>
</feature>
<feature type="sequence variant" id="VAR_067107" description="In HSCR1; dbSNP:rs1060499894." evidence="48">
    <original>S</original>
    <variation>I</variation>
    <location>
        <position position="316"/>
    </location>
</feature>
<feature type="sequence variant" id="VAR_006302" description="In HSCR1; dbSNP:rs80236571." evidence="63 79">
    <original>R</original>
    <variation>Q</variation>
    <location>
        <position position="330"/>
    </location>
</feature>
<feature type="sequence variant" id="VAR_067108" description="In HSCR1; dbSNP:rs774829203." evidence="48">
    <original>S</original>
    <variation>L</variation>
    <location>
        <position position="339"/>
    </location>
</feature>
<feature type="sequence variant" id="VAR_067109" description="In HSCR1; dbSNP:rs1837785429." evidence="48">
    <original>D</original>
    <variation>Y</variation>
    <location>
        <position position="353"/>
    </location>
</feature>
<feature type="sequence variant" id="VAR_009466" description="In HSCR1; uncertain significance." evidence="105">
    <original>N</original>
    <variation>K</variation>
    <location>
        <position position="359"/>
    </location>
</feature>
<feature type="sequence variant" id="VAR_067110" description="In HSCR1; dbSNP:rs762472027." evidence="48">
    <original>R</original>
    <variation>Q</variation>
    <location>
        <position position="360"/>
    </location>
</feature>
<feature type="sequence variant" id="VAR_009467" description="In HSCR1; dbSNP:rs1424549058." evidence="12 27">
    <original>R</original>
    <variation>W</variation>
    <location>
        <position position="360"/>
    </location>
</feature>
<feature type="sequence variant" id="VAR_044393" description="In a patient with renal agenesis; uncertain significance; constitutively phosphorylated; expressed only the immature intracellular form." evidence="31">
    <original>V</original>
    <variation>A</variation>
    <location>
        <position position="376"/>
    </location>
</feature>
<feature type="sequence variant" id="VAR_006303" description="In HSCR1; familial form; dbSNP:rs78098482." evidence="79">
    <original>F</original>
    <variation>L</variation>
    <location>
        <position position="393"/>
    </location>
</feature>
<feature type="sequence variant" id="VAR_044394" description="In a patient with renal agenesis; uncertain significance; prevents phosphorylation in response to GDNF." evidence="31">
    <original>N</original>
    <variation>H</variation>
    <location>
        <position position="394"/>
    </location>
</feature>
<feature type="sequence variant" id="VAR_009468" description="In HSCR1; dbSNP:rs376465385." evidence="12">
    <original>N</original>
    <variation>K</variation>
    <location>
        <position position="394"/>
    </location>
</feature>
<feature type="sequence variant" id="VAR_067111" description="In HSCR1; dbSNP:rs183729115." evidence="48">
    <original>V</original>
    <variation>M</variation>
    <location>
        <position position="397"/>
    </location>
</feature>
<feature type="sequence variant" id="VAR_006304" description="In HSCR1; sporadic form; dbSNP:rs1554818362." evidence="64">
    <original>P</original>
    <variation>L</variation>
    <location>
        <position position="399"/>
    </location>
</feature>
<feature type="sequence variant" id="VAR_067112" description="In HSCR1; dbSNP:rs746970700." evidence="48">
    <original>V</original>
    <variation>M</variation>
    <location>
        <position position="412"/>
    </location>
</feature>
<feature type="sequence variant" id="VAR_067113" description="In HSCR1; dbSNP:rs767601598." evidence="48">
    <original>G</original>
    <variation>R</variation>
    <location>
        <position position="423"/>
    </location>
</feature>
<feature type="sequence variant" id="VAR_018155" description="Found in a patient with congenital central hypoventilation syndrome; uncertain significance; dbSNP:rs552057730." evidence="23">
    <original>A</original>
    <variation>E</variation>
    <location>
        <position position="432"/>
    </location>
</feature>
<feature type="sequence variant" id="VAR_006305" description="In HSCR1; sporadic form; dbSNP:rs138624658.">
    <original>R</original>
    <variation>Q</variation>
    <location>
        <position position="475"/>
    </location>
</feature>
<feature type="sequence variant" id="VAR_067114" description="In HSCR1; dbSNP:rs537874538." evidence="48">
    <original>E</original>
    <variation>K</variation>
    <location>
        <position position="480"/>
    </location>
</feature>
<feature type="sequence variant" id="VAR_018156" description="In dbSNP:rs9282834." evidence="23 28">
    <original>D</original>
    <variation>N</variation>
    <location>
        <position position="489"/>
    </location>
</feature>
<feature type="sequence variant" id="VAR_009469" description="In MTC; familial form." evidence="7">
    <original>C</original>
    <variation>CEEC</variation>
    <location>
        <position position="531"/>
    </location>
</feature>
<feature type="sequence variant" id="VAR_067115" description="In HSCR1." evidence="48">
    <location>
        <begin position="549"/>
        <end position="550"/>
    </location>
</feature>
<feature type="sequence variant" id="VAR_035712" description="In a colorectal cancer sample; somatic mutation." evidence="27">
    <original>G</original>
    <variation>E</variation>
    <location>
        <position position="593"/>
    </location>
</feature>
<feature type="sequence variant" id="VAR_067116" description="In HSCR1; dbSNP:rs1483605155." evidence="48">
    <original>E</original>
    <variation>Q</variation>
    <location>
        <position position="595"/>
    </location>
</feature>
<feature type="sequence variant" id="VAR_008966" description="In dbSNP:rs377767393." evidence="11">
    <original>R</original>
    <variation>Q</variation>
    <location>
        <position position="600"/>
    </location>
</feature>
<feature type="sequence variant" id="VAR_009470" description="In MEN2A; dbSNP:rs77558292." evidence="84">
    <original>C</original>
    <variation>G</variation>
    <location>
        <position position="609"/>
    </location>
</feature>
<feature type="sequence variant" id="VAR_009471" description="In MEN2A; dbSNP:rs77558292." evidence="84">
    <original>C</original>
    <variation>R</variation>
    <location>
        <position position="609"/>
    </location>
</feature>
<feature type="sequence variant" id="VAR_006307" description="In HSCR1; familial form; dbSNP:rs377767396." evidence="70">
    <original>C</original>
    <variation>W</variation>
    <location>
        <position position="609"/>
    </location>
</feature>
<feature type="sequence variant" id="VAR_006306" description="In MTC, MEN2A and HSCR1; familial and sporadic forms; dbSNP:rs77939446." evidence="63 67 95 105">
    <original>C</original>
    <variation>Y</variation>
    <location>
        <position position="609"/>
    </location>
</feature>
<feature type="sequence variant" id="VAR_009472" description="In MTC; familial form; dbSNP:rs377767391." evidence="103">
    <original>C</original>
    <variation>G</variation>
    <location>
        <position position="611"/>
    </location>
</feature>
<feature type="sequence variant" id="VAR_009473" description="In MEN2A; dbSNP:rs377767391." evidence="84">
    <original>C</original>
    <variation>R</variation>
    <location>
        <position position="611"/>
    </location>
</feature>
<feature type="sequence variant" id="VAR_009474" description="In MEN2A; dbSNP:rs377767391." evidence="84">
    <original>C</original>
    <variation>S</variation>
    <location>
        <position position="611"/>
    </location>
</feature>
<feature type="sequence variant" id="VAR_006308" description="In MEN2A and MTC; familial form; dbSNP:rs80069458." evidence="77">
    <original>C</original>
    <variation>W</variation>
    <location>
        <position position="611"/>
    </location>
</feature>
<feature type="sequence variant" id="VAR_006309" description="In MEN2A; dbSNP:rs377767397." evidence="86">
    <original>C</original>
    <variation>Y</variation>
    <location>
        <position position="611"/>
    </location>
</feature>
<feature type="sequence variant" id="VAR_006312" description="In MEN2A and MTC; familial form; dbSNP:rs79781594." evidence="86">
    <original>C</original>
    <variation>F</variation>
    <location>
        <position position="618"/>
    </location>
</feature>
<feature type="sequence variant" id="VAR_006310" description="In MEN2A; dbSNP:rs76262710." evidence="76">
    <original>C</original>
    <variation>G</variation>
    <location>
        <position position="618"/>
    </location>
</feature>
<feature type="sequence variant" id="VAR_006311" description="In MEN2A, MTC and HSCR1; dbSNP:rs76262710." evidence="67 70 74 92">
    <original>C</original>
    <variation>R</variation>
    <location>
        <position position="618"/>
    </location>
</feature>
<feature type="sequence variant" id="VAR_006313" description="In MEN2A, HSCR1 and MTC; familial and sporadic forms; dbSNP:rs79781594." evidence="67 68 74 77 95">
    <original>C</original>
    <variation>S</variation>
    <location>
        <position position="618"/>
    </location>
</feature>
<feature type="sequence variant" id="VAR_006314" description="In MEN2A and MTC; familial form; dbSNP:rs79781594." evidence="77">
    <original>C</original>
    <variation>Y</variation>
    <location>
        <position position="618"/>
    </location>
</feature>
<feature type="sequence variant" id="VAR_006318" description="In MEN2A and MTC; familial form; dbSNP:rs77503355." evidence="74">
    <original>C</original>
    <variation>F</variation>
    <location>
        <position position="620"/>
    </location>
</feature>
<feature type="sequence variant" id="VAR_006315" description="In MEN2A and MTC; familial and sporadic forms; dbSNP:rs77316810." evidence="86">
    <original>C</original>
    <variation>G</variation>
    <location>
        <position position="620"/>
    </location>
</feature>
<feature type="sequence variant" id="VAR_006316" description="In MEN2A, MTC and HSCR1; familial and sporadic forms; dbSNP:rs77316810." evidence="63 70 74 77 87 95 105">
    <original>C</original>
    <variation>R</variation>
    <location>
        <position position="620"/>
    </location>
</feature>
<feature type="sequence variant" id="VAR_006317" description="In MEN2A and MTC; familial form; dbSNP:rs77503355." evidence="67 68">
    <original>C</original>
    <variation>S</variation>
    <location>
        <position position="620"/>
    </location>
</feature>
<feature type="sequence variant" id="VAR_009475" description="In MEN2A and HSCR1; dbSNP:rs79890926." evidence="95">
    <original>C</original>
    <variation>W</variation>
    <location>
        <position position="620"/>
    </location>
</feature>
<feature type="sequence variant" id="VAR_006319" description="In MEN2A; dbSNP:rs77503355." evidence="77">
    <original>C</original>
    <variation>Y</variation>
    <location>
        <position position="620"/>
    </location>
</feature>
<feature type="sequence variant" id="VAR_009476" description="In HSCR1; sporadic form; dbSNP:rs1255575160." evidence="6">
    <original>Q</original>
    <variation>K</variation>
    <location>
        <position position="626"/>
    </location>
</feature>
<feature type="sequence variant" id="VAR_006320" description="In MEN2A and MTC; familial form; dbSNP:rs377767405." evidence="86">
    <original>C</original>
    <variation>F</variation>
    <location>
        <position position="630"/>
    </location>
</feature>
<feature type="sequence variant" id="VAR_009477" description="In MTC; sporadic form; dbSNP:rs377767405." evidence="91">
    <original>C</original>
    <variation>S</variation>
    <location>
        <position position="630"/>
    </location>
</feature>
<feature type="sequence variant" id="VAR_009478" description="In MTC; familial and sporadic forms; dbSNP:rs377767405." evidence="91">
    <original>C</original>
    <variation>Y</variation>
    <location>
        <position position="630"/>
    </location>
</feature>
<feature type="sequence variant" id="VAR_006321" description="In thyroid carcinoma; somatic mutation; dbSNP:rs121913308.">
    <original>D</original>
    <variation>G</variation>
    <location>
        <position position="631"/>
    </location>
</feature>
<feature type="sequence variant" id="VAR_006322" description="In MEN2A; dbSNP:rs377767408." evidence="76">
    <original>ELC</original>
    <variation>DVR</variation>
    <location>
        <begin position="632"/>
        <end position="634"/>
    </location>
</feature>
<feature type="sequence variant" id="VAR_006329" description="In MEN2A.">
    <original>CR</original>
    <variation>WG</variation>
    <location>
        <begin position="634"/>
        <end position="635"/>
    </location>
</feature>
<feature type="sequence variant" id="VAR_009479" description="In MEN2A." evidence="89">
    <original>C</original>
    <variation>CHELC</variation>
    <location>
        <position position="634"/>
    </location>
</feature>
<feature type="sequence variant" id="VAR_006324" description="In MEN2A and pheochromocytoma; dbSNP:rs75996173." evidence="20 74 76">
    <original>C</original>
    <variation>F</variation>
    <location>
        <position position="634"/>
    </location>
</feature>
<feature type="sequence variant" id="VAR_006323" description="In MEN2A and pheochromocytoma; dbSNP:rs75076352." evidence="20 74 76">
    <original>C</original>
    <variation>G</variation>
    <location>
        <position position="634"/>
    </location>
</feature>
<feature type="sequence variant" id="VAR_006326" description="In MEN2A, pheochromocytoma and MTC; familial form; also found as somatic mutation in a sporadic thyroid carcinoma; dbSNP:rs75076352." evidence="20 68 77">
    <original>C</original>
    <variation>R</variation>
    <location>
        <position position="634"/>
    </location>
</feature>
<feature type="sequence variant" id="VAR_006327" description="In MEN2A, pheochromocytoma and MTC; familial form; dbSNP:rs75076352." evidence="20 76">
    <original>C</original>
    <variation>S</variation>
    <location>
        <position position="634"/>
    </location>
</feature>
<feature type="sequence variant" id="VAR_006328" description="In MEN2A, pheochromocytoma and MTC; familial form; dbSNP:rs77709286." evidence="20">
    <original>C</original>
    <variation>W</variation>
    <location>
        <position position="634"/>
    </location>
</feature>
<feature type="sequence variant" id="VAR_006325" description="In MEN2A, pheochromocytoma and MTC; familial form; dbSNP:rs75996173." evidence="20 68 74 76">
    <original>C</original>
    <variation>Y</variation>
    <location>
        <position position="634"/>
    </location>
</feature>
<feature type="sequence variant" id="VAR_006330" description="In MEN2A." evidence="97">
    <original>T</original>
    <variation>TCRT</variation>
    <location>
        <position position="636"/>
    </location>
</feature>
<feature type="sequence variant" id="VAR_012743" description="In MTC; sporadic form; dbSNP:rs2132845622." evidence="19">
    <original>A</original>
    <variation>G</variation>
    <location>
        <position position="639"/>
    </location>
</feature>
<feature type="sequence variant" id="VAR_009480" description="In MEN2A; dbSNP:rs78935588." evidence="10">
    <original>A</original>
    <variation>G</variation>
    <location>
        <position position="640"/>
    </location>
</feature>
<feature type="sequence variant" id="VAR_012744" description="In MTC; sporadic form." evidence="19">
    <original>A</original>
    <variation>G</variation>
    <location>
        <position position="641"/>
    </location>
</feature>
<feature type="sequence variant" id="VAR_067117" description="In HSCR1; dbSNP:rs2132851042." evidence="48">
    <original>P</original>
    <variation>L</variation>
    <location>
        <position position="679"/>
    </location>
</feature>
<feature type="sequence variant" id="VAR_006331" description="In HSCR1; sporadic form." evidence="13">
    <original>S</original>
    <variation>P</variation>
    <location>
        <position position="690"/>
    </location>
</feature>
<feature type="sequence variant" id="VAR_006332" description="In dbSNP:rs1799939." evidence="23 28 91 99">
    <original>G</original>
    <variation>S</variation>
    <location>
        <position position="691"/>
    </location>
</feature>
<feature type="sequence variant" id="VAR_067118" description="In HSCR1; dbSNP:rs141185224." evidence="48">
    <original>R</original>
    <variation>Q</variation>
    <location>
        <position position="694"/>
    </location>
</feature>
<feature type="sequence variant" id="VAR_088874" description="Confers resistance to vandetanib, lenvatinib, cabozantinib and nintedanib inhibitors; dbSNP:rs1838076782." evidence="58">
    <original>L</original>
    <variation>I</variation>
    <location>
        <position position="730"/>
    </location>
</feature>
<feature type="sequence variant" id="VAR_088875" description="Confers resistance to vandetanib, cabozantinib and nintedanib inhibitors; dbSNP:rs1838076782." evidence="58">
    <original>L</original>
    <variation>V</variation>
    <location>
        <position position="730"/>
    </location>
</feature>
<feature type="sequence variant" id="VAR_088876" description="Confers resistance to cabozantinib inhibitor." evidence="58">
    <original>E</original>
    <variation>K</variation>
    <location>
        <position position="732"/>
    </location>
</feature>
<feature type="sequence variant" id="VAR_088877" description="Confers resistance to vandetanib, lenvatinib, cabozantinib and nintedanib inhibitors; dbSNP:rs2132906265." evidence="58">
    <original>V</original>
    <variation>A</variation>
    <location>
        <position position="738"/>
    </location>
</feature>
<feature type="sequence variant" id="VAR_041765" description="In dbSNP:rs34288963." evidence="28">
    <original>R</original>
    <variation>T</variation>
    <location>
        <position position="749"/>
    </location>
</feature>
<feature type="sequence variant" id="VAR_009481" description="In HSCR1; sporadic form; dbSNP:rs2132910256." evidence="64">
    <original>E</original>
    <variation>Q</variation>
    <location>
        <position position="762"/>
    </location>
</feature>
<feature type="sequence variant" id="VAR_009493" description="In HSCR1; dbSNP:rs75075748." evidence="64 78 85">
    <original>S</original>
    <variation>P</variation>
    <location>
        <position position="765"/>
    </location>
</feature>
<feature type="sequence variant" id="VAR_006334" description="In HSCR1; sporadic form; dbSNP:rs2132928081." evidence="13">
    <original>S</original>
    <variation>R</variation>
    <location>
        <position position="767"/>
    </location>
</feature>
<feature type="sequence variant" id="VAR_006335" description="In MTC; familial and sporadic forms; dbSNP:rs78014899." evidence="65 66 84">
    <original>E</original>
    <variation>D</variation>
    <location>
        <position position="768"/>
    </location>
</feature>
<feature type="sequence variant" id="VAR_044395" description="In a patient with renal agenesis; uncertain significance; constitutively phosphorylated; dbSNP:rs75686697." evidence="31">
    <original>V</original>
    <variation>I</variation>
    <location>
        <position position="778"/>
    </location>
</feature>
<feature type="sequence variant" id="VAR_067119" description="In HSCR1; dbSNP:rs587778656." evidence="48">
    <original>N</original>
    <variation>S</variation>
    <location>
        <position position="783"/>
    </location>
</feature>
<feature type="sequence variant" id="VAR_009482" description="In MEN2A and MTC; familial form; dbSNP:rs75030001." evidence="100">
    <original>L</original>
    <variation>F</variation>
    <location>
        <position position="790"/>
    </location>
</feature>
<feature type="sequence variant" id="VAR_009483" description="In HSCR1, pheochromocytoma, MTC and MEN2A; familial form; dbSNP:rs77724903." evidence="20 87 100">
    <original>Y</original>
    <variation>F</variation>
    <location>
        <position position="791"/>
    </location>
</feature>
<feature type="sequence variant" id="VAR_006336" description="In MTC; familial form; confers resistance to vandetanib, lenvatinib, cabozantinib and nintedanib inhibitors; dbSNP:rs79658334." evidence="58 65">
    <original>V</original>
    <variation>L</variation>
    <location>
        <position position="804"/>
    </location>
</feature>
<feature type="sequence variant" id="VAR_006337" description="In MTC; familial form; faster autophosphorylation and activation, leading to enhanced activity; confers resistance to vandetanib, lenvatinib, cabozantinib and nintedanib inhibitors; dbSNP:rs79658334." evidence="15 51 58 98">
    <original>V</original>
    <variation>M</variation>
    <location>
        <position position="804"/>
    </location>
</feature>
<feature type="sequence variant" id="VAR_088878" description="Confers resistance to vandetanib, lenvatinib, cabozantinib and nintedanib inhibitors; dbSNP:rs1838154415." evidence="58">
    <original>Y</original>
    <variation>N</variation>
    <location>
        <position position="806"/>
    </location>
</feature>
<feature type="sequence variant" id="VAR_088879" description="Confers resistance to vandetanib, lenvatinib and cabozantinib inhibitors; dbSNP:rs1554819523." evidence="58">
    <original>A</original>
    <variation>V</variation>
    <location>
        <position position="807"/>
    </location>
</feature>
<feature type="sequence variant" id="VAR_088880" description="Found in a patient with lung adenocarcinoma; confers resistance to vandetanib inhibitor; dbSNP:rs2132943470." evidence="60">
    <original>G</original>
    <variation>A</variation>
    <location>
        <position position="810"/>
    </location>
</feature>
<feature type="sequence variant" id="VAR_088881" description="Confers resistance to vandetanib, lenvatinib, cabozantinib and nintedanib inhibitors; dbSNP:rs764784013." evidence="58">
    <original>G</original>
    <variation>S</variation>
    <location>
        <position position="810"/>
    </location>
</feature>
<feature type="sequence variant" id="VAR_009484" description="In HSCR1; sporadic form; dbSNP:rs1318733775." evidence="6">
    <original>R</original>
    <variation>Q</variation>
    <location>
        <position position="813"/>
    </location>
</feature>
<feature type="sequence variant" id="VAR_041766" description="In dbSNP:rs34617196." evidence="28">
    <original>Y</original>
    <variation>S</variation>
    <location>
        <position position="826"/>
    </location>
</feature>
<feature type="sequence variant" id="VAR_067120" description="In HSCR1; dbSNP:rs200127630." evidence="48">
    <original>G</original>
    <variation>R</variation>
    <location>
        <position position="830"/>
    </location>
</feature>
<feature type="sequence variant" id="VAR_011582" description="In MTC; familial form; dbSNP:rs55947360." evidence="15 28">
    <original>R</original>
    <variation>L</variation>
    <location>
        <position position="844"/>
    </location>
</feature>
<feature type="sequence variant" id="VAR_088882" description="Confers resistance to vandetanib, lenvatinib and cabozantinib inhibitors; dbSNP:rs145170911." evidence="58">
    <original>V</original>
    <variation>I</variation>
    <location>
        <position position="871"/>
    </location>
</feature>
<feature type="sequence variant" id="VAR_006338" description="In HSCR1; sporadic form; dbSNP:rs1451004715." evidence="13">
    <original>R</original>
    <variation>Q</variation>
    <location>
        <position position="873"/>
    </location>
</feature>
<feature type="sequence variant" id="VAR_088883" description="In MTC; confers resistance to nintedanib inhibitor; dbSNP:rs377767427." evidence="58 60">
    <original>L</original>
    <variation>V</variation>
    <location>
        <position position="881"/>
    </location>
</feature>
<feature type="sequence variant" id="VAR_009485" description="In MEN2B; somatic mutation in sporadic medullary thyroid carcinoma; requires 2 nucleotide substitutions; dbSNP:rs377767429." evidence="93 94">
    <original>A</original>
    <variation>F</variation>
    <location>
        <position position="883"/>
    </location>
</feature>
<feature type="sequence variant" id="VAR_009486" description="In MTC; familial form; dbSNP:rs75234356." evidence="96">
    <original>S</original>
    <variation>A</variation>
    <location>
        <position position="891"/>
    </location>
</feature>
<feature type="sequence variant" id="VAR_006339" description="In HSCR1; sporadic form; dbSNP:rs768188546 and dbSNP:rs2132962164." evidence="90">
    <original>F</original>
    <variation>L</variation>
    <location>
        <position position="893"/>
    </location>
</feature>
<feature type="sequence variant" id="VAR_044396" description="In a patient with renal agenesis; uncertain significance; constitutively phosphorylated; expressed only the immature intracellular form; dbSNP:rs2132962245." evidence="31">
    <original>G</original>
    <variation>S</variation>
    <location>
        <position position="894"/>
    </location>
</feature>
<feature type="sequence variant" id="VAR_006340" description="In HSCR1; sporadic form; dbSNP:rs76087194." evidence="64 78">
    <original>R</original>
    <variation>Q</variation>
    <location>
        <position position="897"/>
    </location>
</feature>
<feature type="sequence variant" id="VAR_006341" description="In HSCR1; sporadic form; dbSNP:rs377767430." evidence="14">
    <original>K</original>
    <variation>E</variation>
    <location>
        <position position="907"/>
    </location>
</feature>
<feature type="sequence variant" id="VAR_067121" description="In HSCR1." evidence="48">
    <original>K</original>
    <variation>T</variation>
    <location>
        <position position="907"/>
    </location>
</feature>
<feature type="sequence variant" id="VAR_006342" description="In MEN2B and MTC; sporadic form; somatic mutation; also found in a patient with renal agenesis; faster autophosphorylation and activation, leading to enhanced activity; dbSNP:rs74799832." evidence="31 51 58 71 72 73 81 84">
    <original>M</original>
    <variation>T</variation>
    <location>
        <position position="918"/>
    </location>
</feature>
<feature type="sequence variant" id="VAR_006343" description="In HSCR1; sporadic form; dbSNP:rs2132985306." evidence="75">
    <original>E</original>
    <variation>K</variation>
    <location>
        <position position="921"/>
    </location>
</feature>
<feature type="sequence variant" id="VAR_012745" description="In MTC; sporadic form; dbSNP:rs377767432." evidence="19">
    <original>S</original>
    <variation>F</variation>
    <location>
        <position position="922"/>
    </location>
</feature>
<feature type="sequence variant" id="VAR_009487" description="In dbSNP:rs377767432." evidence="81">
    <original>S</original>
    <variation>Y</variation>
    <location>
        <position position="922"/>
    </location>
</feature>
<feature type="sequence variant" id="VAR_006345" description="In MEN2B and MTC; familial form.">
    <original>T</original>
    <variation>M</variation>
    <location>
        <position position="946"/>
    </location>
</feature>
<feature type="sequence variant" id="VAR_067122" description="In HSCR1." evidence="48">
    <original>F</original>
    <variation>L</variation>
    <location>
        <position position="961"/>
    </location>
</feature>
<feature type="sequence variant" id="VAR_006346" description="In HSCR1; familial form; dbSNP:rs76534745." evidence="64 78">
    <original>R</original>
    <variation>G</variation>
    <location>
        <position position="972"/>
    </location>
</feature>
<feature type="sequence variant" id="VAR_006347" description="In HSCR1; familial form." evidence="64">
    <original>P</original>
    <variation>L</variation>
    <location>
        <position position="973"/>
    </location>
</feature>
<feature type="sequence variant" id="VAR_006348" description="In HSCR1; sporadic form.">
    <original>M</original>
    <variation>T</variation>
    <location>
        <position position="980"/>
    </location>
</feature>
<feature type="sequence variant" id="VAR_006349" description="In dbSNP:rs17158558." evidence="23 25 28 63 104">
    <original>R</original>
    <variation>C</variation>
    <location>
        <position position="982"/>
    </location>
</feature>
<feature type="sequence variant" id="VAR_088884" description="Confers resistance to lenvatinib and cabozantinib inhibitors; dbSNP:rs2133017302." evidence="58">
    <original>F</original>
    <variation>V</variation>
    <location>
        <position position="998"/>
    </location>
</feature>
<feature type="sequence variant" id="VAR_018157" description="In HSCR1; dbSNP:rs79853121." evidence="99">
    <original>P</original>
    <variation>L</variation>
    <location>
        <position position="1039"/>
    </location>
</feature>
<feature type="sequence variant" id="VAR_009488" description="In dbSNP:rs79853121.">
    <original>P</original>
    <variation>Q</variation>
    <location>
        <position position="1039"/>
    </location>
</feature>
<feature type="sequence variant" id="VAR_044397" description="In a patient with renal agenesis; uncertain significance; prevents phosphorylation in response to GDNF; dbSNP:rs1490712863." evidence="31">
    <original>P</original>
    <variation>L</variation>
    <location>
        <position position="1049"/>
    </location>
</feature>
<feature type="sequence variant" id="VAR_067123" description="In HSCR1; dbSNP:rs1564501947." evidence="48">
    <original>L</original>
    <variation>V</variation>
    <location>
        <position position="1052"/>
    </location>
</feature>
<feature type="sequence variant" id="VAR_009489" description="In HSCR1." evidence="9 105">
    <location>
        <position position="1059"/>
    </location>
</feature>
<feature type="sequence variant" id="VAR_009490" description="In HSCR1; dbSNP:rs536486113." evidence="9 105">
    <original>L</original>
    <variation>P</variation>
    <location>
        <position position="1061"/>
    </location>
</feature>
<feature type="sequence variant" id="VAR_067124" description="In HSCR1; dbSNP:rs587778659." evidence="48">
    <original>Y</original>
    <variation>C</variation>
    <location>
        <position position="1062"/>
    </location>
</feature>
<feature type="sequence variant" id="VAR_009491" description="In HSCR1; familial form; dbSNP:rs149513065." evidence="48">
    <original>M</original>
    <variation>T</variation>
    <location>
        <position position="1064"/>
    </location>
</feature>
<feature type="sequence variant" id="VAR_044398" description="In a patient with renal agenesis; uncertain significance; prevents phosphorylation in response to GDNF; dbSNP:rs775583354." evidence="31">
    <original>P</original>
    <variation>S</variation>
    <location>
        <position position="1067"/>
    </location>
</feature>
<feature type="sequence variant" id="VAR_041767" description="In a bladder transitional cell carcinoma sample; somatic mutation." evidence="28">
    <original>F</original>
    <variation>Y</variation>
    <location>
        <position position="1112"/>
    </location>
</feature>
<feature type="mutagenesis site" description="Defects in maturation and processing." evidence="18">
    <original>Y</original>
    <variation>S</variation>
    <location>
        <position position="36"/>
    </location>
</feature>
<feature type="mutagenesis site" description="Defects in maturation and processing." evidence="18">
    <original>Y</original>
    <variation>A</variation>
    <location>
        <position position="41"/>
    </location>
</feature>
<feature type="mutagenesis site" description="Defects in maturation and processing." evidence="18">
    <original>W</original>
    <variation>A</variation>
    <location>
        <position position="85"/>
    </location>
</feature>
<feature type="mutagenesis site" description="Impaired cleavage by caspase-3 and loss of induced cell death." evidence="45">
    <original>D</original>
    <variation>N</variation>
    <location>
        <position position="707"/>
    </location>
</feature>
<feature type="mutagenesis site" description="Loss of induced cell death, but increased cell aggregation." evidence="45">
    <location>
        <begin position="708"/>
        <end position="1114"/>
    </location>
</feature>
<feature type="mutagenesis site" description="Enhanced protein autophosphorylation due to enhanced substrate presentation in trans." evidence="51">
    <original>E</original>
    <variation>A</variation>
    <location>
        <position position="734"/>
    </location>
</feature>
<feature type="mutagenesis site" description="Loss of kinase activity. No effect on interaction with and dissociation from CBLC and CD2AP." evidence="32 45 51">
    <original>K</original>
    <variation>R</variation>
    <variation>M</variation>
    <location>
        <position position="758"/>
    </location>
</feature>
<feature type="mutagenesis site" description="Enhanced protein autophosphorylation due to enhanced substrate presentation in trans." evidence="51">
    <original>R</original>
    <variation>A</variation>
    <location>
        <position position="912"/>
    </location>
</feature>
<feature type="mutagenesis site" description="Enhanced protein autophosphorylation due to enhanced substrate presentation in trans." evidence="51">
    <original>I</original>
    <variation>A</variation>
    <location>
        <position position="913"/>
    </location>
</feature>
<feature type="mutagenesis site" description="Abolishes GFRAL-mediated MAPK1/MAPK2 phosphorylation." evidence="57">
    <original>Y</original>
    <variation>F</variation>
    <location>
        <position position="1062"/>
    </location>
</feature>
<feature type="sequence conflict" description="In Ref. 6; AAA36786." evidence="110" ref="6">
    <original>I</original>
    <variation>V</variation>
    <location>
        <position position="647"/>
    </location>
</feature>
<feature type="sequence conflict" description="In Ref. 1; BAF84496." evidence="110" ref="1">
    <original>A</original>
    <variation>S</variation>
    <location>
        <position position="664"/>
    </location>
</feature>
<feature type="sequence conflict" description="In Ref. 9; AAA36524." evidence="110" ref="9">
    <original>A</original>
    <variation>G</variation>
    <location>
        <position position="750"/>
    </location>
</feature>
<feature type="sequence conflict" description="In Ref. 6; AAA36786." evidence="110" ref="6">
    <original>S</original>
    <variation>P</variation>
    <location>
        <position position="904"/>
    </location>
</feature>
<feature type="strand" evidence="139">
    <location>
        <begin position="30"/>
        <end position="32"/>
    </location>
</feature>
<feature type="strand" evidence="139">
    <location>
        <begin position="34"/>
        <end position="41"/>
    </location>
</feature>
<feature type="strand" evidence="139">
    <location>
        <begin position="49"/>
        <end position="52"/>
    </location>
</feature>
<feature type="strand" evidence="139">
    <location>
        <begin position="70"/>
        <end position="73"/>
    </location>
</feature>
<feature type="helix" evidence="139">
    <location>
        <begin position="75"/>
        <end position="77"/>
    </location>
</feature>
<feature type="strand" evidence="139">
    <location>
        <begin position="79"/>
        <end position="82"/>
    </location>
</feature>
<feature type="strand" evidence="139">
    <location>
        <begin position="85"/>
        <end position="88"/>
    </location>
</feature>
<feature type="turn" evidence="139">
    <location>
        <begin position="90"/>
        <end position="92"/>
    </location>
</feature>
<feature type="strand" evidence="139">
    <location>
        <begin position="94"/>
        <end position="99"/>
    </location>
</feature>
<feature type="helix" evidence="139">
    <location>
        <begin position="103"/>
        <end position="111"/>
    </location>
</feature>
<feature type="strand" evidence="139">
    <location>
        <begin position="120"/>
        <end position="126"/>
    </location>
</feature>
<feature type="turn" evidence="139">
    <location>
        <begin position="139"/>
        <end position="141"/>
    </location>
</feature>
<feature type="strand" evidence="139">
    <location>
        <begin position="142"/>
        <end position="152"/>
    </location>
</feature>
<feature type="helix" evidence="139">
    <location>
        <begin position="157"/>
        <end position="159"/>
    </location>
</feature>
<feature type="helix" evidence="139">
    <location>
        <begin position="162"/>
        <end position="166"/>
    </location>
</feature>
<feature type="strand" evidence="139">
    <location>
        <begin position="174"/>
        <end position="178"/>
    </location>
</feature>
<feature type="strand" evidence="139">
    <location>
        <begin position="184"/>
        <end position="187"/>
    </location>
</feature>
<feature type="helix" evidence="139">
    <location>
        <begin position="191"/>
        <end position="196"/>
    </location>
</feature>
<feature type="strand" evidence="139">
    <location>
        <begin position="202"/>
        <end position="208"/>
    </location>
</feature>
<feature type="strand" evidence="139">
    <location>
        <begin position="212"/>
        <end position="215"/>
    </location>
</feature>
<feature type="strand" evidence="139">
    <location>
        <begin position="222"/>
        <end position="227"/>
    </location>
</feature>
<feature type="turn" evidence="139">
    <location>
        <begin position="231"/>
        <end position="233"/>
    </location>
</feature>
<feature type="strand" evidence="139">
    <location>
        <begin position="235"/>
        <end position="245"/>
    </location>
</feature>
<feature type="strand" evidence="139">
    <location>
        <begin position="252"/>
        <end position="263"/>
    </location>
</feature>
<feature type="helix" evidence="142">
    <location>
        <begin position="705"/>
        <end position="710"/>
    </location>
</feature>
<feature type="turn" evidence="142">
    <location>
        <begin position="715"/>
        <end position="717"/>
    </location>
</feature>
<feature type="helix" evidence="142">
    <location>
        <begin position="721"/>
        <end position="723"/>
    </location>
</feature>
<feature type="strand" evidence="142">
    <location>
        <begin position="724"/>
        <end position="733"/>
    </location>
</feature>
<feature type="strand" evidence="142">
    <location>
        <begin position="736"/>
        <end position="744"/>
    </location>
</feature>
<feature type="helix" evidence="140">
    <location>
        <begin position="746"/>
        <end position="748"/>
    </location>
</feature>
<feature type="strand" evidence="142">
    <location>
        <begin position="751"/>
        <end position="759"/>
    </location>
</feature>
<feature type="helix" evidence="142">
    <location>
        <begin position="766"/>
        <end position="781"/>
    </location>
</feature>
<feature type="strand" evidence="142">
    <location>
        <begin position="790"/>
        <end position="794"/>
    </location>
</feature>
<feature type="strand" evidence="142">
    <location>
        <begin position="796"/>
        <end position="798"/>
    </location>
</feature>
<feature type="strand" evidence="142">
    <location>
        <begin position="801"/>
        <end position="805"/>
    </location>
</feature>
<feature type="helix" evidence="142">
    <location>
        <begin position="812"/>
        <end position="819"/>
    </location>
</feature>
<feature type="strand" evidence="142">
    <location>
        <begin position="822"/>
        <end position="826"/>
    </location>
</feature>
<feature type="strand" evidence="141">
    <location>
        <begin position="844"/>
        <end position="846"/>
    </location>
</feature>
<feature type="helix" evidence="142">
    <location>
        <begin position="848"/>
        <end position="867"/>
    </location>
</feature>
<feature type="helix" evidence="142">
    <location>
        <begin position="877"/>
        <end position="879"/>
    </location>
</feature>
<feature type="strand" evidence="142">
    <location>
        <begin position="880"/>
        <end position="883"/>
    </location>
</feature>
<feature type="helix" evidence="142">
    <location>
        <begin position="884"/>
        <end position="886"/>
    </location>
</feature>
<feature type="strand" evidence="142">
    <location>
        <begin position="887"/>
        <end position="890"/>
    </location>
</feature>
<feature type="helix" evidence="143">
    <location>
        <begin position="893"/>
        <end position="895"/>
    </location>
</feature>
<feature type="turn" evidence="142">
    <location>
        <begin position="900"/>
        <end position="902"/>
    </location>
</feature>
<feature type="helix" evidence="142">
    <location>
        <begin position="915"/>
        <end position="917"/>
    </location>
</feature>
<feature type="helix" evidence="142">
    <location>
        <begin position="920"/>
        <end position="925"/>
    </location>
</feature>
<feature type="helix" evidence="142">
    <location>
        <begin position="930"/>
        <end position="945"/>
    </location>
</feature>
<feature type="helix" evidence="142">
    <location>
        <begin position="957"/>
        <end position="959"/>
    </location>
</feature>
<feature type="helix" evidence="142">
    <location>
        <begin position="960"/>
        <end position="965"/>
    </location>
</feature>
<feature type="helix" evidence="142">
    <location>
        <begin position="978"/>
        <end position="987"/>
    </location>
</feature>
<feature type="helix" evidence="142">
    <location>
        <begin position="992"/>
        <end position="994"/>
    </location>
</feature>
<feature type="helix" evidence="142">
    <location>
        <begin position="998"/>
        <end position="1010"/>
    </location>
</feature>
<accession>P07949</accession>
<accession>A8K6Z2</accession>
<accession>Q15250</accession>
<accession>Q9BTB0</accession>
<accession>Q9H4A2</accession>
<dbReference type="EC" id="2.7.10.1" evidence="51 56"/>
<dbReference type="EMBL" id="AK291807">
    <property type="protein sequence ID" value="BAF84496.1"/>
    <property type="molecule type" value="mRNA"/>
</dbReference>
<dbReference type="EMBL" id="AC010864">
    <property type="status" value="NOT_ANNOTATED_CDS"/>
    <property type="molecule type" value="Genomic_DNA"/>
</dbReference>
<dbReference type="EMBL" id="BC004257">
    <property type="protein sequence ID" value="AAH04257.1"/>
    <property type="molecule type" value="mRNA"/>
</dbReference>
<dbReference type="EMBL" id="X15262">
    <property type="protein sequence ID" value="CAA33333.1"/>
    <property type="molecule type" value="mRNA"/>
</dbReference>
<dbReference type="EMBL" id="X12949">
    <property type="protein sequence ID" value="CAA31408.1"/>
    <property type="molecule type" value="mRNA"/>
</dbReference>
<dbReference type="EMBL" id="M16029">
    <property type="protein sequence ID" value="AAA36786.1"/>
    <property type="status" value="ALT_INIT"/>
    <property type="molecule type" value="mRNA"/>
</dbReference>
<dbReference type="EMBL" id="X15786">
    <property type="protein sequence ID" value="CAA33787.1"/>
    <property type="status" value="ALT_INIT"/>
    <property type="molecule type" value="mRNA"/>
</dbReference>
<dbReference type="EMBL" id="M31213">
    <property type="protein sequence ID" value="AAA36524.1"/>
    <property type="status" value="ALT_INIT"/>
    <property type="molecule type" value="mRNA"/>
</dbReference>
<dbReference type="EMBL" id="AJ297349">
    <property type="protein sequence ID" value="CAC14882.1"/>
    <property type="status" value="ALT_INIT"/>
    <property type="molecule type" value="mRNA"/>
</dbReference>
<dbReference type="CCDS" id="CCDS53525.1">
    <molecule id="P07949-2"/>
</dbReference>
<dbReference type="CCDS" id="CCDS7200.1">
    <molecule id="P07949-1"/>
</dbReference>
<dbReference type="PIR" id="A27203">
    <property type="entry name" value="TVHURE"/>
</dbReference>
<dbReference type="PIR" id="A34630">
    <property type="entry name" value="A34630"/>
</dbReference>
<dbReference type="PIR" id="B34735">
    <property type="entry name" value="B34735"/>
</dbReference>
<dbReference type="PIR" id="S05582">
    <property type="entry name" value="S05582"/>
</dbReference>
<dbReference type="RefSeq" id="NP_001393672.1">
    <molecule id="P07949-1"/>
    <property type="nucleotide sequence ID" value="NM_001406743.1"/>
</dbReference>
<dbReference type="RefSeq" id="NP_065681.1">
    <molecule id="P07949-2"/>
    <property type="nucleotide sequence ID" value="NM_020630.7"/>
</dbReference>
<dbReference type="RefSeq" id="NP_066124.1">
    <molecule id="P07949-1"/>
    <property type="nucleotide sequence ID" value="NM_020975.6"/>
</dbReference>
<dbReference type="PDB" id="2IVS">
    <property type="method" value="X-ray"/>
    <property type="resolution" value="2.00 A"/>
    <property type="chains" value="A/B=705-1013"/>
</dbReference>
<dbReference type="PDB" id="2IVT">
    <property type="method" value="X-ray"/>
    <property type="resolution" value="2.60 A"/>
    <property type="chains" value="A=705-1013"/>
</dbReference>
<dbReference type="PDB" id="2IVU">
    <property type="method" value="X-ray"/>
    <property type="resolution" value="2.50 A"/>
    <property type="chains" value="A=705-1013"/>
</dbReference>
<dbReference type="PDB" id="2IVV">
    <property type="method" value="X-ray"/>
    <property type="resolution" value="2.25 A"/>
    <property type="chains" value="A=705-1013"/>
</dbReference>
<dbReference type="PDB" id="2X2K">
    <property type="method" value="X-ray"/>
    <property type="resolution" value="2.60 A"/>
    <property type="chains" value="A=705-1013"/>
</dbReference>
<dbReference type="PDB" id="2X2L">
    <property type="method" value="X-ray"/>
    <property type="resolution" value="2.00 A"/>
    <property type="chains" value="A=705-1013"/>
</dbReference>
<dbReference type="PDB" id="2X2M">
    <property type="method" value="X-ray"/>
    <property type="resolution" value="2.50 A"/>
    <property type="chains" value="A/B=705-1013"/>
</dbReference>
<dbReference type="PDB" id="2X2U">
    <property type="method" value="X-ray"/>
    <property type="resolution" value="2.00 A"/>
    <property type="chains" value="A=29-270"/>
</dbReference>
<dbReference type="PDB" id="4CKI">
    <property type="method" value="X-ray"/>
    <property type="resolution" value="2.12 A"/>
    <property type="chains" value="A=705-1013"/>
</dbReference>
<dbReference type="PDB" id="4CKJ">
    <property type="method" value="X-ray"/>
    <property type="resolution" value="1.65 A"/>
    <property type="chains" value="A=705-1013"/>
</dbReference>
<dbReference type="PDB" id="4UX8">
    <property type="method" value="EM"/>
    <property type="resolution" value="24.00 A"/>
    <property type="chains" value="A/B=29-635"/>
</dbReference>
<dbReference type="PDB" id="5AMN">
    <property type="method" value="X-ray"/>
    <property type="resolution" value="2.57 A"/>
    <property type="chains" value="A=705-1012"/>
</dbReference>
<dbReference type="PDB" id="5FM2">
    <property type="method" value="X-ray"/>
    <property type="resolution" value="3.30 A"/>
    <property type="chains" value="A=659-1013"/>
</dbReference>
<dbReference type="PDB" id="5FM3">
    <property type="method" value="X-ray"/>
    <property type="resolution" value="2.95 A"/>
    <property type="chains" value="A=659-1013"/>
</dbReference>
<dbReference type="PDB" id="6FEK">
    <property type="method" value="X-ray"/>
    <property type="resolution" value="2.30 A"/>
    <property type="chains" value="A=705-1013"/>
</dbReference>
<dbReference type="PDB" id="6GL7">
    <property type="method" value="EM"/>
    <property type="resolution" value="6.30 A"/>
    <property type="chains" value="E/F=29-635"/>
</dbReference>
<dbReference type="PDB" id="6I82">
    <property type="method" value="X-ray"/>
    <property type="resolution" value="2.05 A"/>
    <property type="chains" value="A/B=705-1013"/>
</dbReference>
<dbReference type="PDB" id="6I83">
    <property type="method" value="X-ray"/>
    <property type="resolution" value="1.88 A"/>
    <property type="chains" value="A=705-1013"/>
</dbReference>
<dbReference type="PDB" id="6NE7">
    <property type="method" value="X-ray"/>
    <property type="resolution" value="1.99 A"/>
    <property type="chains" value="A=705-1013"/>
</dbReference>
<dbReference type="PDB" id="6NEC">
    <property type="method" value="X-ray"/>
    <property type="resolution" value="1.87 A"/>
    <property type="chains" value="A/C=705-1013"/>
</dbReference>
<dbReference type="PDB" id="6NJA">
    <property type="method" value="X-ray"/>
    <property type="resolution" value="1.92 A"/>
    <property type="chains" value="A=705-1013"/>
</dbReference>
<dbReference type="PDB" id="6Q2J">
    <property type="method" value="EM"/>
    <property type="resolution" value="4.10 A"/>
    <property type="chains" value="E/F=29-635"/>
</dbReference>
<dbReference type="PDB" id="6Q2N">
    <property type="method" value="EM"/>
    <property type="resolution" value="4.40 A"/>
    <property type="chains" value="E/F=29-635"/>
</dbReference>
<dbReference type="PDB" id="6Q2O">
    <property type="method" value="EM"/>
    <property type="resolution" value="3.65 A"/>
    <property type="chains" value="E/F=29-635"/>
</dbReference>
<dbReference type="PDB" id="6Q2R">
    <property type="method" value="EM"/>
    <property type="resolution" value="4.30 A"/>
    <property type="chains" value="E/F/Y/Z=29-635"/>
</dbReference>
<dbReference type="PDB" id="6Q2S">
    <property type="method" value="EM"/>
    <property type="resolution" value="3.80 A"/>
    <property type="chains" value="E/F=29-635"/>
</dbReference>
<dbReference type="PDB" id="6VHG">
    <property type="method" value="X-ray"/>
    <property type="resolution" value="2.30 A"/>
    <property type="chains" value="A=705-1013"/>
</dbReference>
<dbReference type="PDB" id="7DU8">
    <property type="method" value="X-ray"/>
    <property type="resolution" value="2.75 A"/>
    <property type="chains" value="A/B=705-1013"/>
</dbReference>
<dbReference type="PDB" id="7DU9">
    <property type="method" value="X-ray"/>
    <property type="resolution" value="2.31 A"/>
    <property type="chains" value="A/B=705-1013"/>
</dbReference>
<dbReference type="PDB" id="7DUA">
    <property type="method" value="X-ray"/>
    <property type="resolution" value="1.64 A"/>
    <property type="chains" value="A/B=705-1013"/>
</dbReference>
<dbReference type="PDB" id="7JU5">
    <property type="method" value="X-ray"/>
    <property type="resolution" value="1.90 A"/>
    <property type="chains" value="A/B=705-1013"/>
</dbReference>
<dbReference type="PDB" id="7JU6">
    <property type="method" value="X-ray"/>
    <property type="resolution" value="2.06 A"/>
    <property type="chains" value="A/B=705-1013"/>
</dbReference>
<dbReference type="PDB" id="7NZN">
    <property type="method" value="X-ray"/>
    <property type="resolution" value="2.39 A"/>
    <property type="chains" value="A=705-1013"/>
</dbReference>
<dbReference type="PDB" id="7RUN">
    <property type="method" value="X-ray"/>
    <property type="resolution" value="3.51 A"/>
    <property type="chains" value="A/B=705-1013"/>
</dbReference>
<dbReference type="PDBsum" id="2IVS"/>
<dbReference type="PDBsum" id="2IVT"/>
<dbReference type="PDBsum" id="2IVU"/>
<dbReference type="PDBsum" id="2IVV"/>
<dbReference type="PDBsum" id="2X2K"/>
<dbReference type="PDBsum" id="2X2L"/>
<dbReference type="PDBsum" id="2X2M"/>
<dbReference type="PDBsum" id="2X2U"/>
<dbReference type="PDBsum" id="4CKI"/>
<dbReference type="PDBsum" id="4CKJ"/>
<dbReference type="PDBsum" id="4UX8"/>
<dbReference type="PDBsum" id="5AMN"/>
<dbReference type="PDBsum" id="5FM2"/>
<dbReference type="PDBsum" id="5FM3"/>
<dbReference type="PDBsum" id="6FEK"/>
<dbReference type="PDBsum" id="6GL7"/>
<dbReference type="PDBsum" id="6I82"/>
<dbReference type="PDBsum" id="6I83"/>
<dbReference type="PDBsum" id="6NE7"/>
<dbReference type="PDBsum" id="6NEC"/>
<dbReference type="PDBsum" id="6NJA"/>
<dbReference type="PDBsum" id="6Q2J"/>
<dbReference type="PDBsum" id="6Q2N"/>
<dbReference type="PDBsum" id="6Q2O"/>
<dbReference type="PDBsum" id="6Q2R"/>
<dbReference type="PDBsum" id="6Q2S"/>
<dbReference type="PDBsum" id="6VHG"/>
<dbReference type="PDBsum" id="7DU8"/>
<dbReference type="PDBsum" id="7DU9"/>
<dbReference type="PDBsum" id="7DUA"/>
<dbReference type="PDBsum" id="7JU5"/>
<dbReference type="PDBsum" id="7JU6"/>
<dbReference type="PDBsum" id="7NZN"/>
<dbReference type="PDBsum" id="7RUN"/>
<dbReference type="EMDB" id="EMD-0026"/>
<dbReference type="EMDB" id="EMD-11777"/>
<dbReference type="EMDB" id="EMD-20572"/>
<dbReference type="EMDB" id="EMD-20575"/>
<dbReference type="EMDB" id="EMD-20576"/>
<dbReference type="EMDB" id="EMD-20578"/>
<dbReference type="EMDB" id="EMD-20579"/>
<dbReference type="EMDB" id="EMD-2712"/>
<dbReference type="SMR" id="P07949"/>
<dbReference type="BioGRID" id="111911">
    <property type="interactions" value="269"/>
</dbReference>
<dbReference type="CORUM" id="P07949"/>
<dbReference type="DIP" id="DIP-41449N"/>
<dbReference type="FunCoup" id="P07949">
    <property type="interactions" value="619"/>
</dbReference>
<dbReference type="IntAct" id="P07949">
    <property type="interactions" value="222"/>
</dbReference>
<dbReference type="MINT" id="P07949"/>
<dbReference type="STRING" id="9606.ENSP00000347942"/>
<dbReference type="BindingDB" id="P07949"/>
<dbReference type="ChEMBL" id="CHEMBL2041"/>
<dbReference type="DrugBank" id="DB01809">
    <property type="generic name" value="1-Ter-Butyl-3-P-Tolyl-1h-Pyrazolo[3,4-D]Pyrimidin-4-Ylamine"/>
</dbReference>
<dbReference type="DrugBank" id="DB15068">
    <property type="generic name" value="Agerafenib"/>
</dbReference>
<dbReference type="DrugBank" id="DB12742">
    <property type="generic name" value="Amuvatinib"/>
</dbReference>
<dbReference type="DrugBank" id="DB08875">
    <property type="generic name" value="Cabozantinib"/>
</dbReference>
<dbReference type="DrugBank" id="DB12147">
    <property type="generic name" value="Erdafitinib"/>
</dbReference>
<dbReference type="DrugBank" id="DB12010">
    <property type="generic name" value="Fostamatinib"/>
</dbReference>
<dbReference type="DrugBank" id="DB00619">
    <property type="generic name" value="Imatinib"/>
</dbReference>
<dbReference type="DrugBank" id="DB09078">
    <property type="generic name" value="Lenvatinib"/>
</dbReference>
<dbReference type="DrugBank" id="DB08901">
    <property type="generic name" value="Ponatinib"/>
</dbReference>
<dbReference type="DrugBank" id="DB15822">
    <property type="generic name" value="Pralsetinib"/>
</dbReference>
<dbReference type="DrugBank" id="DB08896">
    <property type="generic name" value="Regorafenib"/>
</dbReference>
<dbReference type="DrugBank" id="DB15685">
    <property type="generic name" value="Selpercatinib"/>
</dbReference>
<dbReference type="DrugBank" id="DB06436">
    <property type="generic name" value="Semaxanib"/>
</dbReference>
<dbReference type="DrugBank" id="DB15036">
    <property type="generic name" value="Sitravatinib"/>
</dbReference>
<dbReference type="DrugBank" id="DB00398">
    <property type="generic name" value="Sorafenib"/>
</dbReference>
<dbReference type="DrugBank" id="DB07159">
    <property type="generic name" value="Tamatinib"/>
</dbReference>
<dbReference type="DrugBank" id="DB05294">
    <property type="generic name" value="Vandetanib"/>
</dbReference>
<dbReference type="DrugBank" id="DB05014">
    <property type="generic name" value="XL999"/>
</dbReference>
<dbReference type="DrugCentral" id="P07949"/>
<dbReference type="GuidetoPHARMACOLOGY" id="2185"/>
<dbReference type="TCDB" id="8.A.23.1.44">
    <property type="family name" value="the basigin (basigin) family"/>
</dbReference>
<dbReference type="GlyCosmos" id="P07949">
    <property type="glycosylation" value="12 sites, No reported glycans"/>
</dbReference>
<dbReference type="GlyGen" id="P07949">
    <property type="glycosylation" value="20 sites, 4 N-linked glycans (4 sites)"/>
</dbReference>
<dbReference type="iPTMnet" id="P07949"/>
<dbReference type="PhosphoSitePlus" id="P07949"/>
<dbReference type="BioMuta" id="RET"/>
<dbReference type="DMDM" id="547807"/>
<dbReference type="CPTAC" id="CPTAC-3059"/>
<dbReference type="jPOST" id="P07949"/>
<dbReference type="MassIVE" id="P07949"/>
<dbReference type="PaxDb" id="9606-ENSP00000347942"/>
<dbReference type="PeptideAtlas" id="P07949"/>
<dbReference type="ProteomicsDB" id="52047">
    <molecule id="P07949-1"/>
</dbReference>
<dbReference type="ProteomicsDB" id="52048">
    <molecule id="P07949-2"/>
</dbReference>
<dbReference type="TopDownProteomics" id="P07949-2">
    <molecule id="P07949-2"/>
</dbReference>
<dbReference type="Antibodypedia" id="1904">
    <property type="antibodies" value="1290 antibodies from 41 providers"/>
</dbReference>
<dbReference type="DNASU" id="5979"/>
<dbReference type="Ensembl" id="ENST00000340058.6">
    <molecule id="P07949-2"/>
    <property type="protein sequence ID" value="ENSP00000344798.4"/>
    <property type="gene ID" value="ENSG00000165731.22"/>
</dbReference>
<dbReference type="Ensembl" id="ENST00000355710.8">
    <molecule id="P07949-1"/>
    <property type="protein sequence ID" value="ENSP00000347942.3"/>
    <property type="gene ID" value="ENSG00000165731.22"/>
</dbReference>
<dbReference type="GeneID" id="5979"/>
<dbReference type="KEGG" id="hsa:5979"/>
<dbReference type="MANE-Select" id="ENST00000355710.8">
    <property type="protein sequence ID" value="ENSP00000347942.3"/>
    <property type="RefSeq nucleotide sequence ID" value="NM_020975.6"/>
    <property type="RefSeq protein sequence ID" value="NP_066124.1"/>
</dbReference>
<dbReference type="UCSC" id="uc001jak.2">
    <molecule id="P07949-1"/>
    <property type="organism name" value="human"/>
</dbReference>
<dbReference type="AGR" id="HGNC:9967"/>
<dbReference type="CTD" id="5979"/>
<dbReference type="DisGeNET" id="5979"/>
<dbReference type="GeneCards" id="RET"/>
<dbReference type="GeneReviews" id="RET"/>
<dbReference type="HGNC" id="HGNC:9967">
    <property type="gene designation" value="RET"/>
</dbReference>
<dbReference type="HPA" id="ENSG00000165731">
    <property type="expression patterns" value="Tissue enhanced (adrenal gland, brain, parathyroid gland)"/>
</dbReference>
<dbReference type="MalaCards" id="RET"/>
<dbReference type="MIM" id="114500">
    <property type="type" value="phenotype"/>
</dbReference>
<dbReference type="MIM" id="142623">
    <property type="type" value="phenotype"/>
</dbReference>
<dbReference type="MIM" id="155240">
    <property type="type" value="phenotype"/>
</dbReference>
<dbReference type="MIM" id="162300">
    <property type="type" value="phenotype"/>
</dbReference>
<dbReference type="MIM" id="164761">
    <property type="type" value="gene"/>
</dbReference>
<dbReference type="MIM" id="171300">
    <property type="type" value="phenotype"/>
</dbReference>
<dbReference type="MIM" id="171400">
    <property type="type" value="phenotype"/>
</dbReference>
<dbReference type="neXtProt" id="NX_P07949"/>
<dbReference type="OpenTargets" id="ENSG00000165731"/>
<dbReference type="Orphanet" id="146">
    <property type="disease" value="Differentiated thyroid carcinoma"/>
</dbReference>
<dbReference type="Orphanet" id="99361">
    <property type="disease" value="Familial medullary thyroid carcinoma"/>
</dbReference>
<dbReference type="Orphanet" id="99803">
    <property type="disease" value="Haddad syndrome"/>
</dbReference>
<dbReference type="Orphanet" id="29072">
    <property type="disease" value="Hereditary pheochromocytoma-paraganglioma"/>
</dbReference>
<dbReference type="Orphanet" id="388">
    <property type="disease" value="Hirschsprung disease"/>
</dbReference>
<dbReference type="Orphanet" id="247698">
    <property type="disease" value="Multiple endocrine neoplasia type 2A"/>
</dbReference>
<dbReference type="Orphanet" id="247709">
    <property type="disease" value="Multiple endocrine neoplasia type 2B"/>
</dbReference>
<dbReference type="Orphanet" id="1848">
    <property type="disease" value="Renal agenesis, bilateral"/>
</dbReference>
<dbReference type="Orphanet" id="93100">
    <property type="disease" value="Renal agenesis, unilateral"/>
</dbReference>
<dbReference type="Orphanet" id="276621">
    <property type="disease" value="Sporadic pheochromocytoma/secreting paraganglioma"/>
</dbReference>
<dbReference type="PharmGKB" id="PA34335"/>
<dbReference type="VEuPathDB" id="HostDB:ENSG00000165731"/>
<dbReference type="eggNOG" id="KOG0200">
    <property type="taxonomic scope" value="Eukaryota"/>
</dbReference>
<dbReference type="GeneTree" id="ENSGT00940000158499"/>
<dbReference type="HOGENOM" id="CLU_009530_0_0_1"/>
<dbReference type="InParanoid" id="P07949"/>
<dbReference type="OMA" id="VENQDPH"/>
<dbReference type="OrthoDB" id="4062651at2759"/>
<dbReference type="PAN-GO" id="P07949">
    <property type="GO annotations" value="7 GO annotations based on evolutionary models"/>
</dbReference>
<dbReference type="PhylomeDB" id="P07949"/>
<dbReference type="TreeFam" id="TF317640"/>
<dbReference type="BRENDA" id="2.7.10.1">
    <property type="organism ID" value="2681"/>
</dbReference>
<dbReference type="PathwayCommons" id="P07949"/>
<dbReference type="Reactome" id="R-HSA-5673001">
    <property type="pathway name" value="RAF/MAP kinase cascade"/>
</dbReference>
<dbReference type="Reactome" id="R-HSA-8853659">
    <property type="pathway name" value="RET signaling"/>
</dbReference>
<dbReference type="Reactome" id="R-HSA-9768919">
    <property type="pathway name" value="NPAS4 regulates expression of target genes"/>
</dbReference>
<dbReference type="Reactome" id="R-HSA-9830364">
    <property type="pathway name" value="Formation of the nephric duct"/>
</dbReference>
<dbReference type="Reactome" id="R-HSA-9830674">
    <property type="pathway name" value="Formation of the ureteric bud"/>
</dbReference>
<dbReference type="SignaLink" id="P07949"/>
<dbReference type="SIGNOR" id="P07949"/>
<dbReference type="BioGRID-ORCS" id="5979">
    <property type="hits" value="18 hits in 1194 CRISPR screens"/>
</dbReference>
<dbReference type="ChiTaRS" id="RET">
    <property type="organism name" value="human"/>
</dbReference>
<dbReference type="EvolutionaryTrace" id="P07949"/>
<dbReference type="GeneWiki" id="RET_proto-oncogene"/>
<dbReference type="GenomeRNAi" id="5979"/>
<dbReference type="Pharos" id="P07949">
    <property type="development level" value="Tclin"/>
</dbReference>
<dbReference type="PRO" id="PR:P07949"/>
<dbReference type="Proteomes" id="UP000005640">
    <property type="component" value="Chromosome 10"/>
</dbReference>
<dbReference type="RNAct" id="P07949">
    <property type="molecule type" value="protein"/>
</dbReference>
<dbReference type="Bgee" id="ENSG00000165731">
    <property type="expression patterns" value="Expressed in substantia nigra pars reticulata and 130 other cell types or tissues"/>
</dbReference>
<dbReference type="ExpressionAtlas" id="P07949">
    <property type="expression patterns" value="baseline and differential"/>
</dbReference>
<dbReference type="GO" id="GO:0030424">
    <property type="term" value="C:axon"/>
    <property type="evidence" value="ECO:0000318"/>
    <property type="project" value="GO_Central"/>
</dbReference>
<dbReference type="GO" id="GO:0010008">
    <property type="term" value="C:endosome membrane"/>
    <property type="evidence" value="ECO:0000314"/>
    <property type="project" value="UniProtKB"/>
</dbReference>
<dbReference type="GO" id="GO:0005886">
    <property type="term" value="C:plasma membrane"/>
    <property type="evidence" value="ECO:0000314"/>
    <property type="project" value="UniProtKB"/>
</dbReference>
<dbReference type="GO" id="GO:0098797">
    <property type="term" value="C:plasma membrane protein complex"/>
    <property type="evidence" value="ECO:0000314"/>
    <property type="project" value="CAFA"/>
</dbReference>
<dbReference type="GO" id="GO:0043235">
    <property type="term" value="C:receptor complex"/>
    <property type="evidence" value="ECO:0000314"/>
    <property type="project" value="MGI"/>
</dbReference>
<dbReference type="GO" id="GO:0005524">
    <property type="term" value="F:ATP binding"/>
    <property type="evidence" value="ECO:0007669"/>
    <property type="project" value="UniProtKB-KW"/>
</dbReference>
<dbReference type="GO" id="GO:0005509">
    <property type="term" value="F:calcium ion binding"/>
    <property type="evidence" value="ECO:0000314"/>
    <property type="project" value="UniProtKB"/>
</dbReference>
<dbReference type="GO" id="GO:0004713">
    <property type="term" value="F:protein tyrosine kinase activity"/>
    <property type="evidence" value="ECO:0000304"/>
    <property type="project" value="ProtInc"/>
</dbReference>
<dbReference type="GO" id="GO:0038023">
    <property type="term" value="F:signaling receptor activity"/>
    <property type="evidence" value="ECO:0000304"/>
    <property type="project" value="ProtInc"/>
</dbReference>
<dbReference type="GO" id="GO:0004714">
    <property type="term" value="F:transmembrane receptor protein tyrosine kinase activity"/>
    <property type="evidence" value="ECO:0000314"/>
    <property type="project" value="UniProtKB"/>
</dbReference>
<dbReference type="GO" id="GO:0007411">
    <property type="term" value="P:axon guidance"/>
    <property type="evidence" value="ECO:0000304"/>
    <property type="project" value="Reactome"/>
</dbReference>
<dbReference type="GO" id="GO:0007169">
    <property type="term" value="P:cell surface receptor protein tyrosine kinase signaling pathway"/>
    <property type="evidence" value="ECO:0000318"/>
    <property type="project" value="GO_Central"/>
</dbReference>
<dbReference type="GO" id="GO:0071300">
    <property type="term" value="P:cellular response to retinoic acid"/>
    <property type="evidence" value="ECO:0000315"/>
    <property type="project" value="BHF-UCL"/>
</dbReference>
<dbReference type="GO" id="GO:0001838">
    <property type="term" value="P:embryonic epithelial tube formation"/>
    <property type="evidence" value="ECO:0007669"/>
    <property type="project" value="Ensembl"/>
</dbReference>
<dbReference type="GO" id="GO:0048484">
    <property type="term" value="P:enteric nervous system development"/>
    <property type="evidence" value="ECO:0007669"/>
    <property type="project" value="Ensembl"/>
</dbReference>
<dbReference type="GO" id="GO:0160144">
    <property type="term" value="P:GDF15-GFRAL signaling pathway"/>
    <property type="evidence" value="ECO:0000314"/>
    <property type="project" value="UniProt"/>
</dbReference>
<dbReference type="GO" id="GO:0035860">
    <property type="term" value="P:glial cell-derived neurotrophic factor receptor signaling pathway"/>
    <property type="evidence" value="ECO:0000314"/>
    <property type="project" value="UniProtKB"/>
</dbReference>
<dbReference type="GO" id="GO:0007156">
    <property type="term" value="P:homophilic cell adhesion via plasma membrane adhesion molecules"/>
    <property type="evidence" value="ECO:0007669"/>
    <property type="project" value="InterPro"/>
</dbReference>
<dbReference type="GO" id="GO:0097021">
    <property type="term" value="P:lymphocyte migration into lymphoid organs"/>
    <property type="evidence" value="ECO:0000250"/>
    <property type="project" value="UniProtKB"/>
</dbReference>
<dbReference type="GO" id="GO:0000165">
    <property type="term" value="P:MAPK cascade"/>
    <property type="evidence" value="ECO:0007669"/>
    <property type="project" value="Ensembl"/>
</dbReference>
<dbReference type="GO" id="GO:0033619">
    <property type="term" value="P:membrane protein proteolysis"/>
    <property type="evidence" value="ECO:0000314"/>
    <property type="project" value="UniProtKB"/>
</dbReference>
<dbReference type="GO" id="GO:0001755">
    <property type="term" value="P:neural crest cell migration"/>
    <property type="evidence" value="ECO:0007669"/>
    <property type="project" value="Ensembl"/>
</dbReference>
<dbReference type="GO" id="GO:0007158">
    <property type="term" value="P:neuron cell-cell adhesion"/>
    <property type="evidence" value="ECO:0000315"/>
    <property type="project" value="UniProtKB"/>
</dbReference>
<dbReference type="GO" id="GO:0042551">
    <property type="term" value="P:neuron maturation"/>
    <property type="evidence" value="ECO:0007669"/>
    <property type="project" value="Ensembl"/>
</dbReference>
<dbReference type="GO" id="GO:0061146">
    <property type="term" value="P:Peyer's patch morphogenesis"/>
    <property type="evidence" value="ECO:0000250"/>
    <property type="project" value="UniProtKB"/>
</dbReference>
<dbReference type="GO" id="GO:0033630">
    <property type="term" value="P:positive regulation of cell adhesion mediated by integrin"/>
    <property type="evidence" value="ECO:0000314"/>
    <property type="project" value="UniProtKB"/>
</dbReference>
<dbReference type="GO" id="GO:0030335">
    <property type="term" value="P:positive regulation of cell migration"/>
    <property type="evidence" value="ECO:0000314"/>
    <property type="project" value="UniProtKB"/>
</dbReference>
<dbReference type="GO" id="GO:0045793">
    <property type="term" value="P:positive regulation of cell size"/>
    <property type="evidence" value="ECO:0007669"/>
    <property type="project" value="Ensembl"/>
</dbReference>
<dbReference type="GO" id="GO:0045893">
    <property type="term" value="P:positive regulation of DNA-templated transcription"/>
    <property type="evidence" value="ECO:0000250"/>
    <property type="project" value="UniProtKB"/>
</dbReference>
<dbReference type="GO" id="GO:2001241">
    <property type="term" value="P:positive regulation of extrinsic apoptotic signaling pathway in absence of ligand"/>
    <property type="evidence" value="ECO:0000315"/>
    <property type="project" value="UniProtKB"/>
</dbReference>
<dbReference type="GO" id="GO:0010628">
    <property type="term" value="P:positive regulation of gene expression"/>
    <property type="evidence" value="ECO:0007669"/>
    <property type="project" value="Ensembl"/>
</dbReference>
<dbReference type="GO" id="GO:0043410">
    <property type="term" value="P:positive regulation of MAPK cascade"/>
    <property type="evidence" value="ECO:0000314"/>
    <property type="project" value="UniProtKB"/>
</dbReference>
<dbReference type="GO" id="GO:0072300">
    <property type="term" value="P:positive regulation of metanephric glomerulus development"/>
    <property type="evidence" value="ECO:0000250"/>
    <property type="project" value="UniProtKB"/>
</dbReference>
<dbReference type="GO" id="GO:0010976">
    <property type="term" value="P:positive regulation of neuron projection development"/>
    <property type="evidence" value="ECO:0000315"/>
    <property type="project" value="BHF-UCL"/>
</dbReference>
<dbReference type="GO" id="GO:0051897">
    <property type="term" value="P:positive regulation of phosphatidylinositol 3-kinase/protein kinase B signal transduction"/>
    <property type="evidence" value="ECO:0000315"/>
    <property type="project" value="UniProtKB"/>
</dbReference>
<dbReference type="GO" id="GO:0007497">
    <property type="term" value="P:posterior midgut development"/>
    <property type="evidence" value="ECO:0000304"/>
    <property type="project" value="ProtInc"/>
</dbReference>
<dbReference type="GO" id="GO:0050770">
    <property type="term" value="P:regulation of axonogenesis"/>
    <property type="evidence" value="ECO:0007669"/>
    <property type="project" value="Ensembl"/>
</dbReference>
<dbReference type="GO" id="GO:0030155">
    <property type="term" value="P:regulation of cell adhesion"/>
    <property type="evidence" value="ECO:0000314"/>
    <property type="project" value="UniProtKB"/>
</dbReference>
<dbReference type="GO" id="GO:0048265">
    <property type="term" value="P:response to pain"/>
    <property type="evidence" value="ECO:0000250"/>
    <property type="project" value="UniProtKB"/>
</dbReference>
<dbReference type="GO" id="GO:0007165">
    <property type="term" value="P:signal transduction"/>
    <property type="evidence" value="ECO:0000304"/>
    <property type="project" value="ProtInc"/>
</dbReference>
<dbReference type="GO" id="GO:0035799">
    <property type="term" value="P:ureter maturation"/>
    <property type="evidence" value="ECO:0007669"/>
    <property type="project" value="Ensembl"/>
</dbReference>
<dbReference type="GO" id="GO:0001657">
    <property type="term" value="P:ureteric bud development"/>
    <property type="evidence" value="ECO:0007669"/>
    <property type="project" value="Ensembl"/>
</dbReference>
<dbReference type="CDD" id="cd11304">
    <property type="entry name" value="Cadherin_repeat"/>
    <property type="match status" value="1"/>
</dbReference>
<dbReference type="CDD" id="cd05045">
    <property type="entry name" value="PTKc_RET"/>
    <property type="match status" value="1"/>
</dbReference>
<dbReference type="FunFam" id="1.10.510.10:FF:000190">
    <property type="entry name" value="Proto-oncogene tyrosine-protein kinase receptor Ret"/>
    <property type="match status" value="1"/>
</dbReference>
<dbReference type="FunFam" id="2.60.40.60:FF:000132">
    <property type="entry name" value="Proto-oncogene tyrosine-protein kinase receptor Ret"/>
    <property type="match status" value="1"/>
</dbReference>
<dbReference type="FunFam" id="2.60.40.60:FF:000205">
    <property type="entry name" value="Proto-oncogene tyrosine-protein kinase receptor Ret"/>
    <property type="match status" value="1"/>
</dbReference>
<dbReference type="FunFam" id="3.30.200.20:FF:000234">
    <property type="entry name" value="Proto-oncogene tyrosine-protein kinase receptor Ret"/>
    <property type="match status" value="1"/>
</dbReference>
<dbReference type="Gene3D" id="2.60.40.60">
    <property type="entry name" value="Cadherins"/>
    <property type="match status" value="2"/>
</dbReference>
<dbReference type="Gene3D" id="3.30.200.20">
    <property type="entry name" value="Phosphorylase Kinase, domain 1"/>
    <property type="match status" value="1"/>
</dbReference>
<dbReference type="Gene3D" id="1.10.510.10">
    <property type="entry name" value="Transferase(Phosphotransferase) domain 1"/>
    <property type="match status" value="1"/>
</dbReference>
<dbReference type="InterPro" id="IPR002126">
    <property type="entry name" value="Cadherin-like_dom"/>
</dbReference>
<dbReference type="InterPro" id="IPR015919">
    <property type="entry name" value="Cadherin-like_sf"/>
</dbReference>
<dbReference type="InterPro" id="IPR011009">
    <property type="entry name" value="Kinase-like_dom_sf"/>
</dbReference>
<dbReference type="InterPro" id="IPR000719">
    <property type="entry name" value="Prot_kinase_dom"/>
</dbReference>
<dbReference type="InterPro" id="IPR017441">
    <property type="entry name" value="Protein_kinase_ATP_BS"/>
</dbReference>
<dbReference type="InterPro" id="IPR041163">
    <property type="entry name" value="Ret_CLD1"/>
</dbReference>
<dbReference type="InterPro" id="IPR040667">
    <property type="entry name" value="Ret_CLD3"/>
</dbReference>
<dbReference type="InterPro" id="IPR041317">
    <property type="entry name" value="RET_CLD4"/>
</dbReference>
<dbReference type="InterPro" id="IPR055162">
    <property type="entry name" value="RET_CRD"/>
</dbReference>
<dbReference type="InterPro" id="IPR050122">
    <property type="entry name" value="RTK"/>
</dbReference>
<dbReference type="InterPro" id="IPR001245">
    <property type="entry name" value="Ser-Thr/Tyr_kinase_cat_dom"/>
</dbReference>
<dbReference type="InterPro" id="IPR008266">
    <property type="entry name" value="Tyr_kinase_AS"/>
</dbReference>
<dbReference type="InterPro" id="IPR020635">
    <property type="entry name" value="Tyr_kinase_cat_dom"/>
</dbReference>
<dbReference type="InterPro" id="IPR016249">
    <property type="entry name" value="Tyr_kinase_Ret_rcpt"/>
</dbReference>
<dbReference type="PANTHER" id="PTHR24416:SF485">
    <property type="entry name" value="PROTO-ONCOGENE TYROSINE-PROTEIN KINASE RECEPTOR RET"/>
    <property type="match status" value="1"/>
</dbReference>
<dbReference type="PANTHER" id="PTHR24416">
    <property type="entry name" value="TYROSINE-PROTEIN KINASE RECEPTOR"/>
    <property type="match status" value="1"/>
</dbReference>
<dbReference type="Pfam" id="PF00028">
    <property type="entry name" value="Cadherin"/>
    <property type="match status" value="1"/>
</dbReference>
<dbReference type="Pfam" id="PF07714">
    <property type="entry name" value="PK_Tyr_Ser-Thr"/>
    <property type="match status" value="1"/>
</dbReference>
<dbReference type="Pfam" id="PF17756">
    <property type="entry name" value="RET_CLD1"/>
    <property type="match status" value="1"/>
</dbReference>
<dbReference type="Pfam" id="PF17812">
    <property type="entry name" value="RET_CLD3"/>
    <property type="match status" value="1"/>
</dbReference>
<dbReference type="Pfam" id="PF17813">
    <property type="entry name" value="RET_CLD4"/>
    <property type="match status" value="1"/>
</dbReference>
<dbReference type="Pfam" id="PF22540">
    <property type="entry name" value="RET_CRD"/>
    <property type="match status" value="1"/>
</dbReference>
<dbReference type="PIRSF" id="PIRSF000631">
    <property type="entry name" value="TyrPK_receptor_Ret"/>
    <property type="match status" value="1"/>
</dbReference>
<dbReference type="PRINTS" id="PR00109">
    <property type="entry name" value="TYRKINASE"/>
</dbReference>
<dbReference type="SMART" id="SM00219">
    <property type="entry name" value="TyrKc"/>
    <property type="match status" value="1"/>
</dbReference>
<dbReference type="SUPFAM" id="SSF49313">
    <property type="entry name" value="Cadherin-like"/>
    <property type="match status" value="1"/>
</dbReference>
<dbReference type="SUPFAM" id="SSF56112">
    <property type="entry name" value="Protein kinase-like (PK-like)"/>
    <property type="match status" value="1"/>
</dbReference>
<dbReference type="PROSITE" id="PS50268">
    <property type="entry name" value="CADHERIN_2"/>
    <property type="match status" value="1"/>
</dbReference>
<dbReference type="PROSITE" id="PS00107">
    <property type="entry name" value="PROTEIN_KINASE_ATP"/>
    <property type="match status" value="1"/>
</dbReference>
<dbReference type="PROSITE" id="PS50011">
    <property type="entry name" value="PROTEIN_KINASE_DOM"/>
    <property type="match status" value="1"/>
</dbReference>
<dbReference type="PROSITE" id="PS00109">
    <property type="entry name" value="PROTEIN_KINASE_TYR"/>
    <property type="match status" value="1"/>
</dbReference>
<protein>
    <recommendedName>
        <fullName evidence="110">Proto-oncogene tyrosine-protein kinase receptor Ret</fullName>
        <ecNumber evidence="51 56">2.7.10.1</ecNumber>
    </recommendedName>
    <alternativeName>
        <fullName>Cadherin family member 12</fullName>
    </alternativeName>
    <alternativeName>
        <fullName evidence="108">Proto-oncogene c-Ret</fullName>
    </alternativeName>
    <component>
        <recommendedName>
            <fullName evidence="113">Soluble RET kinase fragment</fullName>
        </recommendedName>
    </component>
    <component>
        <recommendedName>
            <fullName evidence="113">Extracellular cell-membrane anchored RET cadherin 120 kDa fragment</fullName>
        </recommendedName>
    </component>
</protein>
<evidence type="ECO:0000250" key="1">
    <source>
        <dbReference type="UniProtKB" id="P35546"/>
    </source>
</evidence>
<evidence type="ECO:0000255" key="2"/>
<evidence type="ECO:0000255" key="3">
    <source>
        <dbReference type="PROSITE-ProRule" id="PRU00043"/>
    </source>
</evidence>
<evidence type="ECO:0000255" key="4">
    <source>
        <dbReference type="PROSITE-ProRule" id="PRU00159"/>
    </source>
</evidence>
<evidence type="ECO:0000255" key="5">
    <source>
        <dbReference type="PROSITE-ProRule" id="PRU10028"/>
    </source>
</evidence>
<evidence type="ECO:0000269" key="6">
    <source>
    </source>
</evidence>
<evidence type="ECO:0000269" key="7">
    <source>
    </source>
</evidence>
<evidence type="ECO:0000269" key="8">
    <source>
    </source>
</evidence>
<evidence type="ECO:0000269" key="9">
    <source>
    </source>
</evidence>
<evidence type="ECO:0000269" key="10">
    <source>
    </source>
</evidence>
<evidence type="ECO:0000269" key="11">
    <source>
    </source>
</evidence>
<evidence type="ECO:0000269" key="12">
    <source>
    </source>
</evidence>
<evidence type="ECO:0000269" key="13">
    <source>
    </source>
</evidence>
<evidence type="ECO:0000269" key="14">
    <source>
    </source>
</evidence>
<evidence type="ECO:0000269" key="15">
    <source>
    </source>
</evidence>
<evidence type="ECO:0000269" key="16">
    <source>
    </source>
</evidence>
<evidence type="ECO:0000269" key="17">
    <source>
    </source>
</evidence>
<evidence type="ECO:0000269" key="18">
    <source>
    </source>
</evidence>
<evidence type="ECO:0000269" key="19">
    <source>
    </source>
</evidence>
<evidence type="ECO:0000269" key="20">
    <source>
    </source>
</evidence>
<evidence type="ECO:0000269" key="21">
    <source>
    </source>
</evidence>
<evidence type="ECO:0000269" key="22">
    <source>
    </source>
</evidence>
<evidence type="ECO:0000269" key="23">
    <source>
    </source>
</evidence>
<evidence type="ECO:0000269" key="24">
    <source>
    </source>
</evidence>
<evidence type="ECO:0000269" key="25">
    <source>
    </source>
</evidence>
<evidence type="ECO:0000269" key="26">
    <source>
    </source>
</evidence>
<evidence type="ECO:0000269" key="27">
    <source>
    </source>
</evidence>
<evidence type="ECO:0000269" key="28">
    <source>
    </source>
</evidence>
<evidence type="ECO:0000269" key="29">
    <source>
    </source>
</evidence>
<evidence type="ECO:0000269" key="30">
    <source>
    </source>
</evidence>
<evidence type="ECO:0000269" key="31">
    <source>
    </source>
</evidence>
<evidence type="ECO:0000269" key="32">
    <source>
    </source>
</evidence>
<evidence type="ECO:0000269" key="33">
    <source>
    </source>
</evidence>
<evidence type="ECO:0000269" key="34">
    <source>
    </source>
</evidence>
<evidence type="ECO:0000269" key="35">
    <source>
    </source>
</evidence>
<evidence type="ECO:0000269" key="36">
    <source>
    </source>
</evidence>
<evidence type="ECO:0000269" key="37">
    <source>
    </source>
</evidence>
<evidence type="ECO:0000269" key="38">
    <source>
    </source>
</evidence>
<evidence type="ECO:0000269" key="39">
    <source>
    </source>
</evidence>
<evidence type="ECO:0000269" key="40">
    <source>
    </source>
</evidence>
<evidence type="ECO:0000269" key="41">
    <source>
    </source>
</evidence>
<evidence type="ECO:0000269" key="42">
    <source>
    </source>
</evidence>
<evidence type="ECO:0000269" key="43">
    <source>
    </source>
</evidence>
<evidence type="ECO:0000269" key="44">
    <source>
    </source>
</evidence>
<evidence type="ECO:0000269" key="45">
    <source>
    </source>
</evidence>
<evidence type="ECO:0000269" key="46">
    <source>
    </source>
</evidence>
<evidence type="ECO:0000269" key="47">
    <source>
    </source>
</evidence>
<evidence type="ECO:0000269" key="48">
    <source>
    </source>
</evidence>
<evidence type="ECO:0000269" key="49">
    <source>
    </source>
</evidence>
<evidence type="ECO:0000269" key="50">
    <source>
    </source>
</evidence>
<evidence type="ECO:0000269" key="51">
    <source>
    </source>
</evidence>
<evidence type="ECO:0000269" key="52">
    <source>
    </source>
</evidence>
<evidence type="ECO:0000269" key="53">
    <source>
    </source>
</evidence>
<evidence type="ECO:0000269" key="54">
    <source>
    </source>
</evidence>
<evidence type="ECO:0000269" key="55">
    <source>
    </source>
</evidence>
<evidence type="ECO:0000269" key="56">
    <source>
    </source>
</evidence>
<evidence type="ECO:0000269" key="57">
    <source>
    </source>
</evidence>
<evidence type="ECO:0000269" key="58">
    <source>
    </source>
</evidence>
<evidence type="ECO:0000269" key="59">
    <source>
    </source>
</evidence>
<evidence type="ECO:0000269" key="60">
    <source>
    </source>
</evidence>
<evidence type="ECO:0000269" key="61">
    <source>
    </source>
</evidence>
<evidence type="ECO:0000269" key="62">
    <source>
    </source>
</evidence>
<evidence type="ECO:0000269" key="63">
    <source>
    </source>
</evidence>
<evidence type="ECO:0000269" key="64">
    <source>
    </source>
</evidence>
<evidence type="ECO:0000269" key="65">
    <source>
    </source>
</evidence>
<evidence type="ECO:0000269" key="66">
    <source>
    </source>
</evidence>
<evidence type="ECO:0000269" key="67">
    <source>
    </source>
</evidence>
<evidence type="ECO:0000269" key="68">
    <source>
    </source>
</evidence>
<evidence type="ECO:0000269" key="69">
    <source>
    </source>
</evidence>
<evidence type="ECO:0000269" key="70">
    <source>
    </source>
</evidence>
<evidence type="ECO:0000269" key="71">
    <source>
    </source>
</evidence>
<evidence type="ECO:0000269" key="72">
    <source>
    </source>
</evidence>
<evidence type="ECO:0000269" key="73">
    <source>
    </source>
</evidence>
<evidence type="ECO:0000269" key="74">
    <source>
    </source>
</evidence>
<evidence type="ECO:0000269" key="75">
    <source>
    </source>
</evidence>
<evidence type="ECO:0000269" key="76">
    <source>
    </source>
</evidence>
<evidence type="ECO:0000269" key="77">
    <source>
    </source>
</evidence>
<evidence type="ECO:0000269" key="78">
    <source>
    </source>
</evidence>
<evidence type="ECO:0000269" key="79">
    <source>
    </source>
</evidence>
<evidence type="ECO:0000269" key="80">
    <source>
    </source>
</evidence>
<evidence type="ECO:0000269" key="81">
    <source>
    </source>
</evidence>
<evidence type="ECO:0000269" key="82">
    <source>
    </source>
</evidence>
<evidence type="ECO:0000269" key="83">
    <source>
    </source>
</evidence>
<evidence type="ECO:0000269" key="84">
    <source>
    </source>
</evidence>
<evidence type="ECO:0000269" key="85">
    <source>
    </source>
</evidence>
<evidence type="ECO:0000269" key="86">
    <source>
    </source>
</evidence>
<evidence type="ECO:0000269" key="87">
    <source>
    </source>
</evidence>
<evidence type="ECO:0000269" key="88">
    <source>
    </source>
</evidence>
<evidence type="ECO:0000269" key="89">
    <source>
    </source>
</evidence>
<evidence type="ECO:0000269" key="90">
    <source>
    </source>
</evidence>
<evidence type="ECO:0000269" key="91">
    <source>
    </source>
</evidence>
<evidence type="ECO:0000269" key="92">
    <source>
    </source>
</evidence>
<evidence type="ECO:0000269" key="93">
    <source>
    </source>
</evidence>
<evidence type="ECO:0000269" key="94">
    <source>
    </source>
</evidence>
<evidence type="ECO:0000269" key="95">
    <source>
    </source>
</evidence>
<evidence type="ECO:0000269" key="96">
    <source>
    </source>
</evidence>
<evidence type="ECO:0000269" key="97">
    <source>
    </source>
</evidence>
<evidence type="ECO:0000269" key="98">
    <source>
    </source>
</evidence>
<evidence type="ECO:0000269" key="99">
    <source>
    </source>
</evidence>
<evidence type="ECO:0000269" key="100">
    <source>
    </source>
</evidence>
<evidence type="ECO:0000269" key="101">
    <source>
    </source>
</evidence>
<evidence type="ECO:0000269" key="102">
    <source>
    </source>
</evidence>
<evidence type="ECO:0000269" key="103">
    <source>
    </source>
</evidence>
<evidence type="ECO:0000269" key="104">
    <source>
    </source>
</evidence>
<evidence type="ECO:0000269" key="105">
    <source ref="71"/>
</evidence>
<evidence type="ECO:0000303" key="106">
    <source>
    </source>
</evidence>
<evidence type="ECO:0000303" key="107">
    <source>
    </source>
</evidence>
<evidence type="ECO:0000303" key="108">
    <source>
    </source>
</evidence>
<evidence type="ECO:0000303" key="109">
    <source>
    </source>
</evidence>
<evidence type="ECO:0000305" key="110"/>
<evidence type="ECO:0000305" key="111">
    <source>
    </source>
</evidence>
<evidence type="ECO:0000305" key="112">
    <source>
    </source>
</evidence>
<evidence type="ECO:0000305" key="113">
    <source>
    </source>
</evidence>
<evidence type="ECO:0000305" key="114">
    <source>
    </source>
</evidence>
<evidence type="ECO:0000305" key="115">
    <source>
    </source>
</evidence>
<evidence type="ECO:0000305" key="116">
    <source>
    </source>
</evidence>
<evidence type="ECO:0000312" key="117">
    <source>
        <dbReference type="HGNC" id="HGNC:9967"/>
    </source>
</evidence>
<evidence type="ECO:0007744" key="118">
    <source>
        <dbReference type="PDB" id="2IVS"/>
    </source>
</evidence>
<evidence type="ECO:0007744" key="119">
    <source>
        <dbReference type="PDB" id="2IVT"/>
    </source>
</evidence>
<evidence type="ECO:0007744" key="120">
    <source>
        <dbReference type="PDB" id="2IVU"/>
    </source>
</evidence>
<evidence type="ECO:0007744" key="121">
    <source>
        <dbReference type="PDB" id="2IVV"/>
    </source>
</evidence>
<evidence type="ECO:0007744" key="122">
    <source>
        <dbReference type="PDB" id="2X2K"/>
    </source>
</evidence>
<evidence type="ECO:0007744" key="123">
    <source>
        <dbReference type="PDB" id="2X2L"/>
    </source>
</evidence>
<evidence type="ECO:0007744" key="124">
    <source>
        <dbReference type="PDB" id="2X2M"/>
    </source>
</evidence>
<evidence type="ECO:0007744" key="125">
    <source>
        <dbReference type="PDB" id="2X2U"/>
    </source>
</evidence>
<evidence type="ECO:0007744" key="126">
    <source>
        <dbReference type="PDB" id="4CKI"/>
    </source>
</evidence>
<evidence type="ECO:0007744" key="127">
    <source>
        <dbReference type="PDB" id="4CKJ"/>
    </source>
</evidence>
<evidence type="ECO:0007744" key="128">
    <source>
        <dbReference type="PDB" id="4UX8"/>
    </source>
</evidence>
<evidence type="ECO:0007744" key="129">
    <source>
        <dbReference type="PDB" id="6GL7"/>
    </source>
</evidence>
<evidence type="ECO:0007744" key="130">
    <source>
        <dbReference type="PDB" id="6NE7"/>
    </source>
</evidence>
<evidence type="ECO:0007744" key="131">
    <source>
        <dbReference type="PDB" id="6NEC"/>
    </source>
</evidence>
<evidence type="ECO:0007744" key="132">
    <source>
        <dbReference type="PDB" id="6NJA"/>
    </source>
</evidence>
<evidence type="ECO:0007744" key="133">
    <source>
        <dbReference type="PDB" id="6Q2J"/>
    </source>
</evidence>
<evidence type="ECO:0007744" key="134">
    <source>
        <dbReference type="PDB" id="6Q2N"/>
    </source>
</evidence>
<evidence type="ECO:0007744" key="135">
    <source>
        <dbReference type="PDB" id="6Q2O"/>
    </source>
</evidence>
<evidence type="ECO:0007744" key="136">
    <source>
        <dbReference type="PDB" id="6Q2R"/>
    </source>
</evidence>
<evidence type="ECO:0007744" key="137">
    <source>
        <dbReference type="PDB" id="6Q2S"/>
    </source>
</evidence>
<evidence type="ECO:0007744" key="138">
    <source>
    </source>
</evidence>
<evidence type="ECO:0007829" key="139">
    <source>
        <dbReference type="PDB" id="2X2U"/>
    </source>
</evidence>
<evidence type="ECO:0007829" key="140">
    <source>
        <dbReference type="PDB" id="6NEC"/>
    </source>
</evidence>
<evidence type="ECO:0007829" key="141">
    <source>
        <dbReference type="PDB" id="6NJA"/>
    </source>
</evidence>
<evidence type="ECO:0007829" key="142">
    <source>
        <dbReference type="PDB" id="7DUA"/>
    </source>
</evidence>
<evidence type="ECO:0007829" key="143">
    <source>
        <dbReference type="PDB" id="7JU5"/>
    </source>
</evidence>
<sequence>MAKATSGAAGLRLLLLLLLPLLGKVALGLYFSRDAYWEKLYVDQAAGTPLLYVHALRDAPEEVPSFRLGQHLYGTYRTRLHENNWICIQEDTGLLYLNRSLDHSSWEKLSVRNRGFPLLTVYLKVFLSPTSLREGECQWPGCARVYFSFFNTSFPACSSLKPRELCFPETRPSFRIRENRPPGTFHQFRLLPVQFLCPNISVAYRLLEGEGLPFRCAPDSLEVSTRWALDREQREKYELVAVCTVHAGAREEVVMVPFPVTVYDEDDSAPTFPAGVDTASAVVEFKRKEDTVVATLRVFDADVVPASGELVRRYTSTLLPGDTWAQQTFRVEHWPNETSVQANGSFVRATVHDYRLVLNRNLSISENRTMQLAVLVNDSDFQGPGAGVLLLHFNVSVLPVSLHLPSTYSLSVSRRARRFAQIGKVCVENCQAFSGINVQYKLHSSGANCSTLGVVTSAEDTSGILFVNDTKALRRPKCAELHYMVVATDQQTSRQAQAQLLVTVEGSYVAEEAGCPLSCAVSKRRLECEECGGLGSPTGRCEWRQGDGKGITRNFSTCSPSTKTCPDGHCDVVETQDINICPQDCLRGSIVGGHEPGEPRGIKAGYGTCNCFPEEEKCFCEPEDIQDPLCDELCRTVIAAAVLFSFIVSVLLSAFCIHCYHKFAHKPPISSAEMTFRRPAQAFPVSYSSSGARRPSLDSMENQVSVDAFKILEDPKWEFPRKNLVLGKTLGEGEFGKVVKATAFHLKGRAGYTTVAVKMLKENASPSELRDLLSEFNVLKQVNHPHVIKLYGACSQDGPLLLIVEYAKYGSLRGFLRESRKVGPGYLGSGGSRNSSSLDHPDERALTMGDLISFAWQISQGMQYLAEMKLVHRDLAARNILVAEGRKMKISDFGLSRDVYEEDSYVKRSQGRIPVKWMAIESLFDHIYTTQSDVWSFGVLLWEIVTLGGNPYPGIPPERLFNLLKTGHRMERPDNCSEEMYRLMLQCWKQEPDKRPVFADISKDLEKMMVKRRDYLDLAASTPSDSLIYDDGLSEEETPLVDCNNAPLPRALPSTWIENKLYGMSDPNWPGESPVPLTRADGTNTGFPRYPNDSVYANWMLSPSAAKLMDTFDS</sequence>
<comment type="function">
    <text evidence="1 37 42 43 45 46 47 49 51 52 55 56 57 60">Receptor tyrosine-protein kinase involved in numerous cellular mechanisms including cell proliferation, neuronal navigation, cell migration, and cell differentiation in response to glia cell line-derived growth family factors (GDNF, NRTN, ARTN, PSPN and GDF15) (PubMed:20064382, PubMed:20616503, PubMed:20702524, PubMed:21357690, PubMed:21454698, PubMed:24560924, PubMed:28846097, PubMed:28846099, PubMed:28953886, PubMed:31118272). In contrast to most receptor tyrosine kinases, RET requires not only its cognate ligands but also coreceptors, for activation (PubMed:21994944, PubMed:23333276, PubMed:28846097, PubMed:28846099, PubMed:28953886). GDNF ligands (GDNF, NRTN, ARTN, PSPN and GDF15) first bind their corresponding GDNFR coreceptors (GFRA1, GFRA2, GFRA3, GFRA4 and GFRAL, respectively), triggering RET autophosphorylation and activation, leading to activation of downstream signaling pathways, including the MAPK- and AKT-signaling pathways (PubMed:21994944, PubMed:23333276, PubMed:24560924, PubMed:25242331, PubMed:28846097, PubMed:28846099, PubMed:28953886). Acts as a dependence receptor via the GDNF-GFRA1 signaling: in the presence of the ligand GDNF in somatotrophs within pituitary, promotes survival and down regulates growth hormone (GH) production, but triggers apoptosis in absence of GDNF (PubMed:20616503, PubMed:21994944). Required for the molecular mechanisms orchestration during intestine organogenesis via the ARTN-GFRA3 signaling: involved in the development of enteric nervous system and renal organogenesis during embryonic life, and promotes the formation of Peyer's patch-like structures, a major component of the gut-associated lymphoid tissue (By similarity). Mediates, through interaction with GDF15-receptor GFRAL, GDF15-induced cell-signaling in the brainstem which triggers an aversive response, characterized by nausea, vomiting, and/or loss of appetite in response to various stresses (PubMed:28846097, PubMed:28846099, PubMed:28953886). Modulates cell adhesion via its cleavage by caspase in sympathetic neurons and mediates cell migration in an integrin (e.g. ITGB1 and ITGB3)-dependent manner (PubMed:20702524, PubMed:21357690). Also active in the absence of ligand, triggering apoptosis through a mechanism that requires receptor intracellular caspase cleavage (PubMed:21357690). Triggers the differentiation of rapidly adapting (RA) mechanoreceptors (PubMed:20064382). Involved in the development of the neural crest (By similarity). Regulates nociceptor survival and size (By similarity). Phosphorylates PTK2/FAK1 (PubMed:21454698).</text>
</comment>
<comment type="function">
    <molecule>Isoform 1</molecule>
    <text evidence="56">Isoform 1 in complex with GFRAL induces higher activation of MAPK-signaling pathway than isoform 2 in complex with GFRAL.</text>
</comment>
<comment type="catalytic activity">
    <reaction evidence="5 51 56">
        <text>L-tyrosyl-[protein] + ATP = O-phospho-L-tyrosyl-[protein] + ADP + H(+)</text>
        <dbReference type="Rhea" id="RHEA:10596"/>
        <dbReference type="Rhea" id="RHEA-COMP:10136"/>
        <dbReference type="Rhea" id="RHEA-COMP:20101"/>
        <dbReference type="ChEBI" id="CHEBI:15378"/>
        <dbReference type="ChEBI" id="CHEBI:30616"/>
        <dbReference type="ChEBI" id="CHEBI:46858"/>
        <dbReference type="ChEBI" id="CHEBI:61978"/>
        <dbReference type="ChEBI" id="CHEBI:456216"/>
        <dbReference type="EC" id="2.7.10.1"/>
    </reaction>
</comment>
<comment type="cofactor">
    <cofactor evidence="18 52 61 101">
        <name>Ca(2+)</name>
        <dbReference type="ChEBI" id="CHEBI:29108"/>
    </cofactor>
</comment>
<comment type="activity regulation">
    <text evidence="29 30 33 38 39 41 44 58 60">Repressed by 4-(3-hydroxyanilino)-quinolines derivatives, indolin-2-one-derivatives, 2-(alkylsulfanyl)-4-(3-thienyl) nicotinonitrile analogs, 3- and 4-substituted beta-carbolin-1-ones, vandetanib, motesanib, sorafenib (BAY 43-9006), cabozantinib (XL184), lenvatinib, sunitinib, nintedanib, and withaferin A (WA) (PubMed:17664273, PubMed:17884497, PubMed:19053769, PubMed:20117004, PubMed:20409618, PubMed:20605972, PubMed:21134556, PubMed:29908090, PubMed:31118272). Inactivation by sorafenib both reduces kinase activity and promotes lysosomal degradation (PubMed:17664273).</text>
</comment>
<comment type="subunit">
    <text evidence="1 32 34 45 46">Phosphorylated form interacts with the PBT domain of DOK2, DOK4 and DOK5 (By similarity). The phosphorylated form interacts with PLCG1 and GRB7 (By similarity). Interacts (not phosphorylated) with PTK2/FAK1 (via FERM domain) (PubMed:21454698). Extracellular cell-membrane anchored RET cadherin fragments form complex in neurons with reduced trophic status, preferentially at the contact sites between somas (PubMed:21357690). Interacts with AIP in the pituitary gland; this interaction prevents the formation of the AIP-survivin complex (PubMed:19366855). Interacts (inactive) with CBLC and CD2AP; dissociates upon activation by GDNF which increases CBLC:CD2AP interaction (PubMed:18753381).</text>
</comment>
<comment type="interaction">
    <interactant intactId="EBI-2480756">
        <id>P07949</id>
    </interactant>
    <interactant intactId="EBI-357361">
        <id>Q9UM73</id>
        <label>ALK</label>
    </interactant>
    <organismsDiffer>false</organismsDiffer>
    <experiments>2</experiments>
</comment>
<comment type="interaction">
    <interactant intactId="EBI-2480756">
        <id>P07949</id>
    </interactant>
    <interactant intactId="EBI-6256193">
        <id>P22455</id>
        <label>FGFR4</label>
    </interactant>
    <organismsDiffer>false</organismsDiffer>
    <experiments>2</experiments>
</comment>
<comment type="interaction">
    <interactant intactId="EBI-2480756">
        <id>P07949</id>
    </interactant>
    <interactant intactId="EBI-945833">
        <id>Q7Z3S9</id>
        <label>NOTCH2NLA</label>
    </interactant>
    <organismsDiffer>false</organismsDiffer>
    <experiments>3</experiments>
</comment>
<comment type="interaction">
    <interactant intactId="EBI-2480756">
        <id>P07949</id>
    </interactant>
    <interactant intactId="EBI-518675">
        <id>P40763</id>
        <label>STAT3</label>
    </interactant>
    <organismsDiffer>false</organismsDiffer>
    <experiments>3</experiments>
</comment>
<comment type="interaction">
    <interactant intactId="EBI-2480756">
        <id>P07949</id>
    </interactant>
    <interactant intactId="EBI-2462036">
        <id>Q9Y490</id>
        <label>TLN1</label>
    </interactant>
    <organismsDiffer>false</organismsDiffer>
    <experiments>2</experiments>
</comment>
<comment type="interaction">
    <interactant intactId="EBI-2480756">
        <id>P07949</id>
    </interactant>
    <interactant intactId="EBI-7395583">
        <id>Q62985</id>
        <label>Sh2b1</label>
    </interactant>
    <organismsDiffer>true</organismsDiffer>
    <experiments>3</experiments>
</comment>
<comment type="interaction">
    <interactant intactId="EBI-4423689">
        <id>P07949-2</id>
    </interactant>
    <interactant intactId="EBI-945833">
        <id>Q7Z3S9</id>
        <label>NOTCH2NLA</label>
    </interactant>
    <organismsDiffer>false</organismsDiffer>
    <experiments>3</experiments>
</comment>
<comment type="subcellular location">
    <subcellularLocation>
        <location evidence="35 47 49 57 101">Cell membrane</location>
        <topology evidence="35">Single-pass type I membrane protein</topology>
    </subcellularLocation>
    <subcellularLocation>
        <location evidence="35 49">Endosome membrane</location>
        <topology evidence="35">Single-pass type I membrane protein</topology>
    </subcellularLocation>
    <text evidence="49 101">Predominantly located on the plasma membrane (PubMed:23333276, PubMed:9575150). In the presence of SORL1 and GFRA1, directed to endosomes (PubMed:23333276).</text>
</comment>
<comment type="alternative products">
    <event type="alternative splicing"/>
    <isoform>
        <id>P07949-1</id>
        <name>1</name>
        <name>RET51</name>
        <sequence type="displayed"/>
    </isoform>
    <isoform>
        <id>P07949-2</id>
        <name>2</name>
        <name>RET9</name>
        <sequence type="described" ref="VSP_040735"/>
    </isoform>
</comment>
<comment type="induction">
    <text evidence="36">Positively regulated by NKX2-1, PHOX2B, SOX10 and PAX3.</text>
</comment>
<comment type="PTM">
    <text evidence="17 24 26 38 51 56">Autophosphorylated on C-terminal tyrosine residues upon ligand stimulation.</text>
</comment>
<comment type="PTM">
    <text evidence="45">Proteolytically cleaved by caspase-3. The soluble RET kinase fragment is able to induce cell death. The extracellular cell-membrane anchored RET cadherin fragment accelerates cell adhesion in sympathetic neurons.</text>
</comment>
<comment type="disease" evidence="6 9 12 13 14 48 62 63 64 70 75 78 79 85 87 88 90 92 95 99 105">
    <disease id="DI-01746">
        <name>Hirschsprung disease 1</name>
        <acronym>HSCR1</acronym>
        <description>A disorder of neural crest development characterized by absence of enteric ganglia along a variable length of the intestine. It is the most common cause of congenital intestinal obstruction. Early symptoms range from complete acute neonatal obstruction, characterized by vomiting, abdominal distention and failure to pass stool, to chronic constipation in the older child.</description>
        <dbReference type="MIM" id="142623"/>
    </disease>
    <text>The disease is caused by variants affecting the gene represented in this entry.</text>
</comment>
<comment type="disease" evidence="7 15 19 51 58 60 65 66 67 69 70 74 77 80 82 84 91 92 96 98 100 102 103">
    <disease id="DI-01957">
        <name>Medullary thyroid carcinoma</name>
        <acronym>MTC</acronym>
        <description>Rare tumor derived from the C cells of the thyroid. Three hereditary forms are known, that are transmitted in an autosomal dominant fashion: (a) multiple neoplasia type 2A (MEN2A), (b) multiple neoplasia type IIB (MEN2B) and (c) familial MTC (FMTC), which occurs in 25-30% of MTC cases and where MTC is the only clinical manifestation.</description>
        <dbReference type="MIM" id="155240"/>
    </disease>
    <text>The disease is caused by variants affecting the gene represented in this entry.</text>
</comment>
<comment type="disease" evidence="51 71 72 73 81 84 93 94">
    <disease id="DI-02009">
        <name>Multiple neoplasia 2B</name>
        <acronym>MEN2B</acronym>
        <description>Uncommon inherited cancer syndrome characterized by predisposition to MTC and phaeochromocytoma which is associated with marfanoid habitus, mucosal neuromas, skeletal and ophthalmic abnormalities, and ganglioneuromas of the intestine tract. Then the disease progresses rapidly with the development of metastatic MTC and a pheochromocytome in 50% of cases.</description>
        <dbReference type="MIM" id="162300"/>
    </disease>
    <text>The disease is caused by variants affecting the gene represented in this entry.</text>
</comment>
<comment type="disease" evidence="20">
    <disease id="DI-02160">
        <name>Pheochromocytoma</name>
        <acronym>PCC</acronym>
        <description>A catecholamine-producing tumor of chromaffin tissue of the adrenal medulla or sympathetic paraganglia. The cardinal symptom, reflecting the increased secretion of epinephrine and norepinephrine, is hypertension, which may be persistent or intermittent.</description>
        <dbReference type="MIM" id="171300"/>
    </disease>
    <text>Disease susceptibility is associated with variants affecting the gene represented in this entry.</text>
</comment>
<comment type="disease" evidence="10 68 69 70 74 76 77 83 84 86 89 95 97">
    <disease id="DI-02008">
        <name>Multiple neoplasia 2A</name>
        <acronym>MEN2A</acronym>
        <description>The most frequent form of medullary thyroid cancer (MTC). It is an inherited cancer syndrome characterized by MTC, phaeochromocytoma and/or hyperparathyroidism.</description>
        <dbReference type="MIM" id="171400"/>
    </disease>
    <text>The disease is caused by variants affecting the gene represented in this entry.</text>
</comment>
<comment type="disease">
    <text evidence="8 16 22 50 54 59">Various chromosomal aberrations involving RET are known. Some of them have been found in papillary thyroid carcinomas (PTCs) (PubMed:10439047, PubMed:10980597, PubMed:12787916, PubMed:2406025). Inversion inv(10)(q11.2;q21) generates the RET/CCDC6 (PTC1) oncogene (PubMed:2406025). Inversion inv(10)(q11.2;q11.2) generates the RET/NCOA4 (PTC3) oncogene. Translocation t(10;14)(q11;q32) with GOLGA5 generates the RET/GOLGA5 (PTC5) oncogene (PubMed:2734021). Translocation t(8;10)(p21.3;q11.2) with PCM1 generates the PCM1/RET fusion (PubMed:10980597). Translocation t(6;10)(p21.3;q11.2) with TRIM27/RFP generates the Delta RFP/RET oncogene (PubMed:12787916). Translocation t(1;10)(p13;q11) with TRIM33 generates the TRIM33/RET (PTC7) oncogene (PubMed:10439047). Translocation t(7;10)(q32;q11) with TRIM24/TIF1 generates the TRIM24/RET (PTC6) oncogene (PubMed:10439047). Translocation t(6;10)(p21.3;q11.2) with TRIM27/RFP generates the TRIM27/RET oncogene (PubMed:3037315).</text>
</comment>
<comment type="disease">
    <text evidence="31">Mutations in RET have been detected in patients with renal agenesis suggesting a possible involvement of this gene in disease pathogenesis.</text>
</comment>
<comment type="miscellaneous">
    <text>Treatment with withaferin A (WA) leads tumor regression in medullary thyroid carcinomas (MTC).</text>
</comment>
<comment type="similarity">
    <text evidence="4">Belongs to the protein kinase superfamily. Tyr protein kinase family.</text>
</comment>
<comment type="caution">
    <text evidence="112 116">Original thought to be dephosphorylated by PTPRJ on Tyr-905, Tyr-1015 and Tyr-1062. However this paper was retracted due to manipulation of immunoblot data.</text>
</comment>
<comment type="sequence caution" evidence="110">
    <conflict type="erroneous initiation">
        <sequence resource="EMBL-CDS" id="AAA36524"/>
    </conflict>
    <text>Extended N-terminus.</text>
</comment>
<comment type="sequence caution" evidence="110">
    <conflict type="erroneous initiation">
        <sequence resource="EMBL-CDS" id="AAA36786"/>
    </conflict>
    <text>Extended N-terminus.</text>
</comment>
<comment type="sequence caution" evidence="110">
    <conflict type="erroneous initiation">
        <sequence resource="EMBL-CDS" id="CAA33787"/>
    </conflict>
    <text>Extended N-terminus.</text>
</comment>
<comment type="sequence caution" evidence="110">
    <conflict type="erroneous initiation">
        <sequence resource="EMBL-CDS" id="CAC14882"/>
    </conflict>
    <text>Extended N-terminus.</text>
</comment>
<comment type="online information" name="Atlas of Genetics and Cytogenetics in Oncology and Haematology">
    <link uri="https://atlasgeneticsoncology.org/gene/76/RET"/>
</comment>
<comment type="online information" name="MEN2 RET database">
    <link uri="http://www.arup.utah.edu/database/MEN2/MEN2_welcome.php"/>
</comment>
<keyword id="KW-0002">3D-structure</keyword>
<keyword id="KW-0025">Alternative splicing</keyword>
<keyword id="KW-0067">ATP-binding</keyword>
<keyword id="KW-0130">Cell adhesion</keyword>
<keyword id="KW-1003">Cell membrane</keyword>
<keyword id="KW-0160">Chromosomal rearrangement</keyword>
<keyword id="KW-0225">Disease variant</keyword>
<keyword id="KW-1015">Disulfide bond</keyword>
<keyword id="KW-0967">Endosome</keyword>
<keyword id="KW-0325">Glycoprotein</keyword>
<keyword id="KW-0367">Hirschsprung disease</keyword>
<keyword id="KW-0418">Kinase</keyword>
<keyword id="KW-0472">Membrane</keyword>
<keyword id="KW-0547">Nucleotide-binding</keyword>
<keyword id="KW-0597">Phosphoprotein</keyword>
<keyword id="KW-1267">Proteomics identification</keyword>
<keyword id="KW-0656">Proto-oncogene</keyword>
<keyword id="KW-0675">Receptor</keyword>
<keyword id="KW-1185">Reference proteome</keyword>
<keyword id="KW-0732">Signal</keyword>
<keyword id="KW-0808">Transferase</keyword>
<keyword id="KW-0812">Transmembrane</keyword>
<keyword id="KW-1133">Transmembrane helix</keyword>
<keyword id="KW-0829">Tyrosine-protein kinase</keyword>
<proteinExistence type="evidence at protein level"/>
<reference key="1">
    <citation type="journal article" date="2004" name="Nat. Genet.">
        <title>Complete sequencing and characterization of 21,243 full-length human cDNAs.</title>
        <authorList>
            <person name="Ota T."/>
            <person name="Suzuki Y."/>
            <person name="Nishikawa T."/>
            <person name="Otsuki T."/>
            <person name="Sugiyama T."/>
            <person name="Irie R."/>
            <person name="Wakamatsu A."/>
            <person name="Hayashi K."/>
            <person name="Sato H."/>
            <person name="Nagai K."/>
            <person name="Kimura K."/>
            <person name="Makita H."/>
            <person name="Sekine M."/>
            <person name="Obayashi M."/>
            <person name="Nishi T."/>
            <person name="Shibahara T."/>
            <person name="Tanaka T."/>
            <person name="Ishii S."/>
            <person name="Yamamoto J."/>
            <person name="Saito K."/>
            <person name="Kawai Y."/>
            <person name="Isono Y."/>
            <person name="Nakamura Y."/>
            <person name="Nagahari K."/>
            <person name="Murakami K."/>
            <person name="Yasuda T."/>
            <person name="Iwayanagi T."/>
            <person name="Wagatsuma M."/>
            <person name="Shiratori A."/>
            <person name="Sudo H."/>
            <person name="Hosoiri T."/>
            <person name="Kaku Y."/>
            <person name="Kodaira H."/>
            <person name="Kondo H."/>
            <person name="Sugawara M."/>
            <person name="Takahashi M."/>
            <person name="Kanda K."/>
            <person name="Yokoi T."/>
            <person name="Furuya T."/>
            <person name="Kikkawa E."/>
            <person name="Omura Y."/>
            <person name="Abe K."/>
            <person name="Kamihara K."/>
            <person name="Katsuta N."/>
            <person name="Sato K."/>
            <person name="Tanikawa M."/>
            <person name="Yamazaki M."/>
            <person name="Ninomiya K."/>
            <person name="Ishibashi T."/>
            <person name="Yamashita H."/>
            <person name="Murakawa K."/>
            <person name="Fujimori K."/>
            <person name="Tanai H."/>
            <person name="Kimata M."/>
            <person name="Watanabe M."/>
            <person name="Hiraoka S."/>
            <person name="Chiba Y."/>
            <person name="Ishida S."/>
            <person name="Ono Y."/>
            <person name="Takiguchi S."/>
            <person name="Watanabe S."/>
            <person name="Yosida M."/>
            <person name="Hotuta T."/>
            <person name="Kusano J."/>
            <person name="Kanehori K."/>
            <person name="Takahashi-Fujii A."/>
            <person name="Hara H."/>
            <person name="Tanase T.-O."/>
            <person name="Nomura Y."/>
            <person name="Togiya S."/>
            <person name="Komai F."/>
            <person name="Hara R."/>
            <person name="Takeuchi K."/>
            <person name="Arita M."/>
            <person name="Imose N."/>
            <person name="Musashino K."/>
            <person name="Yuuki H."/>
            <person name="Oshima A."/>
            <person name="Sasaki N."/>
            <person name="Aotsuka S."/>
            <person name="Yoshikawa Y."/>
            <person name="Matsunawa H."/>
            <person name="Ichihara T."/>
            <person name="Shiohata N."/>
            <person name="Sano S."/>
            <person name="Moriya S."/>
            <person name="Momiyama H."/>
            <person name="Satoh N."/>
            <person name="Takami S."/>
            <person name="Terashima Y."/>
            <person name="Suzuki O."/>
            <person name="Nakagawa S."/>
            <person name="Senoh A."/>
            <person name="Mizoguchi H."/>
            <person name="Goto Y."/>
            <person name="Shimizu F."/>
            <person name="Wakebe H."/>
            <person name="Hishigaki H."/>
            <person name="Watanabe T."/>
            <person name="Sugiyama A."/>
            <person name="Takemoto M."/>
            <person name="Kawakami B."/>
            <person name="Yamazaki M."/>
            <person name="Watanabe K."/>
            <person name="Kumagai A."/>
            <person name="Itakura S."/>
            <person name="Fukuzumi Y."/>
            <person name="Fujimori Y."/>
            <person name="Komiyama M."/>
            <person name="Tashiro H."/>
            <person name="Tanigami A."/>
            <person name="Fujiwara T."/>
            <person name="Ono T."/>
            <person name="Yamada K."/>
            <person name="Fujii Y."/>
            <person name="Ozaki K."/>
            <person name="Hirao M."/>
            <person name="Ohmori Y."/>
            <person name="Kawabata A."/>
            <person name="Hikiji T."/>
            <person name="Kobatake N."/>
            <person name="Inagaki H."/>
            <person name="Ikema Y."/>
            <person name="Okamoto S."/>
            <person name="Okitani R."/>
            <person name="Kawakami T."/>
            <person name="Noguchi S."/>
            <person name="Itoh T."/>
            <person name="Shigeta K."/>
            <person name="Senba T."/>
            <person name="Matsumura K."/>
            <person name="Nakajima Y."/>
            <person name="Mizuno T."/>
            <person name="Morinaga M."/>
            <person name="Sasaki M."/>
            <person name="Togashi T."/>
            <person name="Oyama M."/>
            <person name="Hata H."/>
            <person name="Watanabe M."/>
            <person name="Komatsu T."/>
            <person name="Mizushima-Sugano J."/>
            <person name="Satoh T."/>
            <person name="Shirai Y."/>
            <person name="Takahashi Y."/>
            <person name="Nakagawa K."/>
            <person name="Okumura K."/>
            <person name="Nagase T."/>
            <person name="Nomura N."/>
            <person name="Kikuchi H."/>
            <person name="Masuho Y."/>
            <person name="Yamashita R."/>
            <person name="Nakai K."/>
            <person name="Yada T."/>
            <person name="Nakamura Y."/>
            <person name="Ohara O."/>
            <person name="Isogai T."/>
            <person name="Sugano S."/>
        </authorList>
    </citation>
    <scope>NUCLEOTIDE SEQUENCE [LARGE SCALE MRNA] (ISOFORM 2)</scope>
    <source>
        <tissue>Prostate</tissue>
    </source>
</reference>
<reference key="2">
    <citation type="journal article" date="2004" name="Nature">
        <title>The DNA sequence and comparative analysis of human chromosome 10.</title>
        <authorList>
            <person name="Deloukas P."/>
            <person name="Earthrowl M.E."/>
            <person name="Grafham D.V."/>
            <person name="Rubenfield M."/>
            <person name="French L."/>
            <person name="Steward C.A."/>
            <person name="Sims S.K."/>
            <person name="Jones M.C."/>
            <person name="Searle S."/>
            <person name="Scott C."/>
            <person name="Howe K."/>
            <person name="Hunt S.E."/>
            <person name="Andrews T.D."/>
            <person name="Gilbert J.G.R."/>
            <person name="Swarbreck D."/>
            <person name="Ashurst J.L."/>
            <person name="Taylor A."/>
            <person name="Battles J."/>
            <person name="Bird C.P."/>
            <person name="Ainscough R."/>
            <person name="Almeida J.P."/>
            <person name="Ashwell R.I.S."/>
            <person name="Ambrose K.D."/>
            <person name="Babbage A.K."/>
            <person name="Bagguley C.L."/>
            <person name="Bailey J."/>
            <person name="Banerjee R."/>
            <person name="Bates K."/>
            <person name="Beasley H."/>
            <person name="Bray-Allen S."/>
            <person name="Brown A.J."/>
            <person name="Brown J.Y."/>
            <person name="Burford D.C."/>
            <person name="Burrill W."/>
            <person name="Burton J."/>
            <person name="Cahill P."/>
            <person name="Camire D."/>
            <person name="Carter N.P."/>
            <person name="Chapman J.C."/>
            <person name="Clark S.Y."/>
            <person name="Clarke G."/>
            <person name="Clee C.M."/>
            <person name="Clegg S."/>
            <person name="Corby N."/>
            <person name="Coulson A."/>
            <person name="Dhami P."/>
            <person name="Dutta I."/>
            <person name="Dunn M."/>
            <person name="Faulkner L."/>
            <person name="Frankish A."/>
            <person name="Frankland J.A."/>
            <person name="Garner P."/>
            <person name="Garnett J."/>
            <person name="Gribble S."/>
            <person name="Griffiths C."/>
            <person name="Grocock R."/>
            <person name="Gustafson E."/>
            <person name="Hammond S."/>
            <person name="Harley J.L."/>
            <person name="Hart E."/>
            <person name="Heath P.D."/>
            <person name="Ho T.P."/>
            <person name="Hopkins B."/>
            <person name="Horne J."/>
            <person name="Howden P.J."/>
            <person name="Huckle E."/>
            <person name="Hynds C."/>
            <person name="Johnson C."/>
            <person name="Johnson D."/>
            <person name="Kana A."/>
            <person name="Kay M."/>
            <person name="Kimberley A.M."/>
            <person name="Kershaw J.K."/>
            <person name="Kokkinaki M."/>
            <person name="Laird G.K."/>
            <person name="Lawlor S."/>
            <person name="Lee H.M."/>
            <person name="Leongamornlert D.A."/>
            <person name="Laird G."/>
            <person name="Lloyd C."/>
            <person name="Lloyd D.M."/>
            <person name="Loveland J."/>
            <person name="Lovell J."/>
            <person name="McLaren S."/>
            <person name="McLay K.E."/>
            <person name="McMurray A."/>
            <person name="Mashreghi-Mohammadi M."/>
            <person name="Matthews L."/>
            <person name="Milne S."/>
            <person name="Nickerson T."/>
            <person name="Nguyen M."/>
            <person name="Overton-Larty E."/>
            <person name="Palmer S.A."/>
            <person name="Pearce A.V."/>
            <person name="Peck A.I."/>
            <person name="Pelan S."/>
            <person name="Phillimore B."/>
            <person name="Porter K."/>
            <person name="Rice C.M."/>
            <person name="Rogosin A."/>
            <person name="Ross M.T."/>
            <person name="Sarafidou T."/>
            <person name="Sehra H.K."/>
            <person name="Shownkeen R."/>
            <person name="Skuce C.D."/>
            <person name="Smith M."/>
            <person name="Standring L."/>
            <person name="Sycamore N."/>
            <person name="Tester J."/>
            <person name="Thorpe A."/>
            <person name="Torcasso W."/>
            <person name="Tracey A."/>
            <person name="Tromans A."/>
            <person name="Tsolas J."/>
            <person name="Wall M."/>
            <person name="Walsh J."/>
            <person name="Wang H."/>
            <person name="Weinstock K."/>
            <person name="West A.P."/>
            <person name="Willey D.L."/>
            <person name="Whitehead S.L."/>
            <person name="Wilming L."/>
            <person name="Wray P.W."/>
            <person name="Young L."/>
            <person name="Chen Y."/>
            <person name="Lovering R.C."/>
            <person name="Moschonas N.K."/>
            <person name="Siebert R."/>
            <person name="Fechtel K."/>
            <person name="Bentley D."/>
            <person name="Durbin R.M."/>
            <person name="Hubbard T."/>
            <person name="Doucette-Stamm L."/>
            <person name="Beck S."/>
            <person name="Smith D.R."/>
            <person name="Rogers J."/>
        </authorList>
    </citation>
    <scope>NUCLEOTIDE SEQUENCE [LARGE SCALE GENOMIC DNA]</scope>
</reference>
<reference key="3">
    <citation type="journal article" date="2004" name="Genome Res.">
        <title>The status, quality, and expansion of the NIH full-length cDNA project: the Mammalian Gene Collection (MGC).</title>
        <authorList>
            <consortium name="The MGC Project Team"/>
        </authorList>
    </citation>
    <scope>NUCLEOTIDE SEQUENCE [LARGE SCALE MRNA] (ISOFORM 2)</scope>
    <scope>VARIANT CYS-982</scope>
    <source>
        <tissue>Brain</tissue>
    </source>
</reference>
<reference key="4">
    <citation type="journal article" date="1989" name="Oncogene">
        <title>Isolation of ret proto-oncogene cDNA with an amino-terminal signal sequence.</title>
        <authorList>
            <person name="Takahashi M."/>
        </authorList>
    </citation>
    <scope>NUCLEOTIDE SEQUENCE [MRNA] OF 1-280 (ISOFORMS 1/2)</scope>
</reference>
<reference key="5">
    <citation type="journal article" date="1988" name="Oncogene">
        <title>Cloning and expression of the ret proto-oncogene encoding a tyrosine kinase with two potential transmembrane domains.</title>
        <authorList>
            <person name="Takahashi M."/>
            <person name="Buma Y."/>
            <person name="Iwamoto T."/>
            <person name="Inaguma Y."/>
            <person name="Ikeda H."/>
            <person name="Hiai H."/>
        </authorList>
    </citation>
    <scope>NUCLEOTIDE SEQUENCE [MRNA] OF 255-1114 (ISOFORM 1)</scope>
</reference>
<reference key="6">
    <citation type="journal article" date="1987" name="Mol. Cell. Biol.">
        <title>ret transforming gene encodes a fusion protein homologous to tyrosine kinases.</title>
        <authorList>
            <person name="Takahashi M."/>
            <person name="Cooper G.M."/>
        </authorList>
    </citation>
    <scope>NUCLEOTIDE SEQUENCE [MRNA] OF 588-1063 (ISOFORM 2)</scope>
    <scope>CHROMOSOMAL TRANSLOCATION WITH TRIM27</scope>
</reference>
<reference key="7">
    <citation type="journal article" date="1989" name="Oncogene">
        <title>Activation of the ret-II oncogene without a sequence encoding a transmembrane domain and transforming activity of two ret-II oncogene products differing in carboxy-termini due to alternative splicing.</title>
        <authorList>
            <person name="Ishizaka Y."/>
            <person name="Ochiai M."/>
            <person name="Tahira T."/>
            <person name="Suhimura T."/>
            <person name="Nahao M."/>
        </authorList>
    </citation>
    <scope>NUCLEOTIDE SEQUENCE [MRNA] OF 713-1114 (ISOFORM 1)</scope>
    <scope>CHROMOSOMAL TRANSLOCATION WITH GOLGA5</scope>
    <source>
        <tissue>Fibroblast</tissue>
    </source>
</reference>
<reference key="8">
    <citation type="journal article" date="1989" name="Oncogene">
        <authorList>
            <person name="Ishizaka Y."/>
            <person name="Ochiai M."/>
            <person name="Tahira T."/>
            <person name="Suhimura T."/>
            <person name="Nahao M."/>
        </authorList>
    </citation>
    <scope>ERRATUM OF PUBMED:2734021</scope>
</reference>
<reference key="9">
    <citation type="journal article" date="1990" name="Cell">
        <title>PTC is a novel rearranged form of the ret proto-oncogene and is frequently detected in vivo in human thyroid papillary carcinomas.</title>
        <authorList>
            <person name="Grieco M."/>
            <person name="Santoro M."/>
            <person name="Berlingieri M.T."/>
            <person name="Melillo R.M."/>
            <person name="Donghi R."/>
            <person name="Bongarzone I."/>
            <person name="Pierotti M.A."/>
            <person name="Della Porta G."/>
            <person name="Fusco A."/>
            <person name="Vecchio G."/>
        </authorList>
    </citation>
    <scope>NUCLEOTIDE SEQUENCE [MRNA] OF 713-1114 (ISOFORM 1)</scope>
    <scope>CHROMOSOMAL TRANSLOCATION WITH CCDC6</scope>
    <source>
        <tissue>Thyroid papillary carcinoma</tissue>
    </source>
</reference>
<reference key="10">
    <citation type="journal article" date="2000" name="Oncogene">
        <title>RET/PCM-1: a novel fusion gene in papillary thyroid carcinoma.</title>
        <authorList>
            <person name="Corvi R."/>
            <person name="Berger N."/>
            <person name="Balczon R."/>
            <person name="Romeo G."/>
        </authorList>
    </citation>
    <scope>NUCLEOTIDE SEQUENCE [MRNA] OF 713-770 (ISOFORMS 1/2)</scope>
    <scope>CHROMOSOMAL TRANSLOCATION WITH PCM1</scope>
</reference>
<reference key="11">
    <citation type="journal article" date="1998" name="J. Biol. Chem.">
        <title>Expression of the receptor tyrosine kinase Ret on the plasma membrane is dependent on calcium.</title>
        <authorList>
            <person name="van Weering D.H."/>
            <person name="Moen T.C."/>
            <person name="Braakman I."/>
            <person name="Baas P.D."/>
            <person name="Bos J.L."/>
        </authorList>
    </citation>
    <scope>SUBCELLULAR LOCATION</scope>
    <scope>COFACTOR</scope>
</reference>
<reference key="12">
    <citation type="journal article" date="1999" name="Oncogene">
        <title>The transcription coactivator HTIF1 and a related protein are fused to the RET receptor tyrosine kinase in childhood papillary thyroid carcinomas.</title>
        <authorList>
            <person name="Klugbauer S."/>
            <person name="Rabes H.M."/>
        </authorList>
    </citation>
    <scope>CHROMOSOMAL TRANSLOCATION WITH TRIM33 AND TRIM24</scope>
</reference>
<reference key="13">
    <citation type="journal article" date="2000" name="J. Clin. Endocrinol. Metab.">
        <title>Tyrosines 1015 and 1062 are in vivo autophosphorylation sites in ret and ret-derived oncoproteins.</title>
        <authorList>
            <person name="Salvatore D."/>
            <person name="Barone M.V."/>
            <person name="Salvatore G."/>
            <person name="Melillo R.M."/>
            <person name="Chiappetta G."/>
            <person name="Mineo A."/>
            <person name="Fenzi G."/>
            <person name="Vecchio G."/>
            <person name="Fusco A."/>
            <person name="Santoro M."/>
        </authorList>
    </citation>
    <scope>PHOSPHORYLATION AT TYR-1015 AND TYR-1062</scope>
</reference>
<reference key="14">
    <citation type="journal article" date="2001" name="J. Biol. Chem.">
        <title>Molecular modeling of the extracellular domain of the RET receptor tyrosine kinase reveals multiple cadherin-like domains and a calcium-binding site.</title>
        <authorList>
            <person name="Anders J."/>
            <person name="Kjar S."/>
            <person name="Ibanez C.F."/>
        </authorList>
    </citation>
    <scope>COFACTOR</scope>
    <scope>MUTAGENESIS OF TYR-36; TYR-41 AND TRP-85</scope>
</reference>
<reference key="15">
    <citation type="journal article" date="2004" name="J. Biol. Chem.">
        <title>Identification of RET autophosphorylation sites by mass spectrometry.</title>
        <authorList>
            <person name="Kawamoto Y."/>
            <person name="Takeda K."/>
            <person name="Okuno Y."/>
            <person name="Yamakawa Y."/>
            <person name="Ito Y."/>
            <person name="Taguchi R."/>
            <person name="Kato M."/>
            <person name="Suzuki H."/>
            <person name="Takahashi M."/>
            <person name="Nakashima I."/>
        </authorList>
    </citation>
    <scope>PHOSPHORYLATION AT TYR-806; TYR-809; TYR-900; TYR-905; TYR-981; TYR-1015; TYR-1062; TYR-1090 AND TYR-1096</scope>
</reference>
<reference key="16">
    <citation type="journal article" date="2003" name="Mutat. Res.">
        <title>Novel tumorigenic rearrangement, Delta rfp/ret, in a papillary thyroid carcinoma from externally irradiated patient.</title>
        <authorList>
            <person name="Saenko V."/>
            <person name="Rogounovitch T."/>
            <person name="Shimizu-Yoshida Y."/>
            <person name="Abrosimov A."/>
            <person name="Lushnikov E."/>
            <person name="Roumiantsev P."/>
            <person name="Matsumoto N."/>
            <person name="Nakashima M."/>
            <person name="Meirmanov S."/>
            <person name="Ohtsuru A."/>
            <person name="Namba H."/>
            <person name="Tsyb A."/>
            <person name="Yamashita S."/>
        </authorList>
    </citation>
    <scope>CHROMOSOMAL TRANSLOCATION WITH TRIM27</scope>
</reference>
<reference key="17">
    <citation type="journal article" date="2006" name="Cancer Res.">
        <title>The receptor-type protein tyrosine phosphatase J antagonizes the biochemical and biological effects of RET-derived oncoproteins.</title>
        <authorList>
            <person name="Iervolino A."/>
            <person name="Iuliano R."/>
            <person name="Trapasso F."/>
            <person name="Viglietto G."/>
            <person name="Melillo R.M."/>
            <person name="Carlomagno F."/>
            <person name="Santoro M."/>
            <person name="Fusco A."/>
        </authorList>
    </citation>
    <scope>RETRACTED PAPER</scope>
</reference>
<reference key="18">
    <citation type="journal article" date="2018" name="Cancer Res.">
        <authorList>
            <person name="Iervolino A."/>
            <person name="Iuliano R."/>
            <person name="Trapasso F."/>
            <person name="Viglietto G."/>
            <person name="Melillo R.M."/>
            <person name="Carlomagno F."/>
            <person name="Santoro M."/>
            <person name="Fusco A."/>
        </authorList>
    </citation>
    <scope>RETRACTION NOTICE OF PUBMED:16778204</scope>
</reference>
<reference key="19">
    <citation type="journal article" date="2007" name="Bioorg. Med. Chem. Lett.">
        <title>The discovery of substituted 4-(3-hydroxyanilino)-quinolines as potent RET kinase inhibitors.</title>
        <authorList>
            <person name="Graham Robinett R."/>
            <person name="Freemerman A.J."/>
            <person name="Skinner M.A."/>
            <person name="Shewchuk L."/>
            <person name="Lackey K."/>
        </authorList>
    </citation>
    <scope>ACTIVITY REGULATION</scope>
</reference>
<reference key="20">
    <citation type="journal article" date="2007" name="J. Biol. Chem.">
        <title>Sorafenib functions to potently suppress RET tyrosine kinase activity by direct enzymatic inhibition and promoting RET lysosomal degradation independent of proteasomal targeting.</title>
        <authorList>
            <person name="Plaza-Menacho I."/>
            <person name="Mologni L."/>
            <person name="Sala E."/>
            <person name="Gambacorti-Passerini C."/>
            <person name="Magee A.I."/>
            <person name="Links T.P."/>
            <person name="Hofstra R.M.W."/>
            <person name="Barford D."/>
            <person name="Isacke C.M."/>
        </authorList>
    </citation>
    <scope>ACTIVITY REGULATION BY SORAFENIB</scope>
</reference>
<reference key="21">
    <citation type="journal article" date="2008" name="J. Med. Chem.">
        <title>Synthesis, modeling, and RET protein kinase inhibitory activity of 3- and 4-substituted beta-carbolin-1-ones.</title>
        <authorList>
            <person name="Cincinelli R."/>
            <person name="Cassinelli G."/>
            <person name="Dallavalle S."/>
            <person name="Lanzi C."/>
            <person name="Merlini L."/>
            <person name="Botta M."/>
            <person name="Tuccinardi T."/>
            <person name="Martinelli A."/>
            <person name="Penco S."/>
            <person name="Zunino F."/>
        </authorList>
    </citation>
    <scope>ACTIVITY REGULATION BY 3- AND 4-SUBSTITUTED BETA-CARBOLIN-1-ONES</scope>
</reference>
<reference key="22">
    <citation type="journal article" date="2008" name="J. Neurosci.">
        <title>CD2AP and Cbl-3/Cbl-c constitute a critical checkpoint in the regulation of ret signal transduction.</title>
        <authorList>
            <person name="Tsui C.C."/>
            <person name="Pierchala B.A."/>
        </authorList>
    </citation>
    <scope>INTERACTION WITH CD2AP</scope>
    <scope>MUTAGENESIS OF LYS-758</scope>
</reference>
<reference key="23">
    <citation type="journal article" date="2009" name="J. Clin. Endocrinol. Metab.">
        <title>The tyrosine kinase receptor RET interacts in vivo with aryl hydrocarbon receptor-interacting protein to alter survivin availability.</title>
        <authorList>
            <person name="Vargiolu M."/>
            <person name="Fusco D."/>
            <person name="Kurelac I."/>
            <person name="Dirnberger D."/>
            <person name="Baumeister R."/>
            <person name="Morra I."/>
            <person name="Melcarne A."/>
            <person name="Rimondini R."/>
            <person name="Romeo G."/>
            <person name="Bonora E."/>
        </authorList>
    </citation>
    <scope>INTERACTION WITH AIP</scope>
</reference>
<reference key="24">
    <citation type="journal article" date="2009" name="J. Pediatr. Surg.">
        <title>Transcriptional regulation of RET by Nkx2-1, Phox2b, Sox10, and Pax3.</title>
        <authorList>
            <person name="Leon T.Y.Y."/>
            <person name="Ngan E.S.W."/>
            <person name="Poon H.-C."/>
            <person name="So M.-T."/>
            <person name="Lui V.C.H."/>
            <person name="Tam P.K.H."/>
            <person name="Garcia-Barcelo M.M."/>
        </authorList>
    </citation>
    <scope>INDUCTION BY NKX2-1; PHOX2B; SOX10 AND PAX3</scope>
</reference>
<reference key="25">
    <citation type="journal article" date="2009" name="Mol. Cell. Proteomics">
        <title>Large-scale proteomics analysis of the human kinome.</title>
        <authorList>
            <person name="Oppermann F.S."/>
            <person name="Gnad F."/>
            <person name="Olsen J.V."/>
            <person name="Hornberger R."/>
            <person name="Greff Z."/>
            <person name="Keri G."/>
            <person name="Mann M."/>
            <person name="Daub H."/>
        </authorList>
    </citation>
    <scope>PHOSPHORYLATION [LARGE SCALE ANALYSIS] AT SER-696</scope>
    <scope>IDENTIFICATION BY MASS SPECTROMETRY [LARGE SCALE ANALYSIS]</scope>
</reference>
<reference key="26">
    <citation type="journal article" date="2009" name="Neuron">
        <title>RETouching upon mechanoreceptors.</title>
        <authorList>
            <person name="Ma Q."/>
        </authorList>
    </citation>
    <scope>FUNCTION IN DEVELOPMENT OF MECHANORECEPTORS</scope>
</reference>
<reference key="27">
    <citation type="journal article" date="2010" name="Endocr. Rev.">
        <title>The evolving field of tyrosine kinase inhibitors in the treatment of endocrine tumors.</title>
        <authorList>
            <person name="Ye L."/>
            <person name="Santarpia L."/>
            <person name="Gagel R.F."/>
        </authorList>
    </citation>
    <scope>ACTIVITY REGULATION</scope>
    <scope>REVIEW ON KINASE INHIBITORS</scope>
</reference>
<reference key="28">
    <citation type="journal article" date="2010" name="Eur. J. Med. Chem.">
        <title>Inhibitors of the RET tyrosine kinase based on a 2-(alkylsulfanyl)-4-(3-thienyl)nicotinonitrile scaffold.</title>
        <authorList>
            <person name="Brandt W."/>
            <person name="Mologni L."/>
            <person name="Preu L."/>
            <person name="Lemcke T."/>
            <person name="Gambacorti-Passerini C."/>
            <person name="Kunick C."/>
        </authorList>
    </citation>
    <scope>ACTIVITY REGULATION</scope>
</reference>
<reference key="29">
    <citation type="journal article" date="2010" name="Front. Horm. Res.">
        <title>Functional role of the RET dependence receptor, GFRa co-receptors and ligands in the pituitary.</title>
        <authorList>
            <person name="Garcia-Lavandeira M."/>
            <person name="Diaz-Rodriguez E."/>
            <person name="Garcia-Rendueles M.E."/>
            <person name="Rodrigues J.S."/>
            <person name="Perez-Romero S."/>
            <person name="Bravo S.B."/>
            <person name="Alvarez C.V."/>
        </authorList>
    </citation>
    <scope>FUNCTION IN PITUITARY</scope>
</reference>
<reference key="30">
    <citation type="journal article" date="2010" name="J. Clin. Endocrinol. Metab.">
        <title>RET-mediated cell adhesion and migration require multiple integrin subunits.</title>
        <authorList>
            <person name="Cockburn J.G."/>
            <person name="Richardson D.S."/>
            <person name="Gujral T.S."/>
            <person name="Mulligan L.M."/>
        </authorList>
    </citation>
    <scope>FUNCTION IN CELL ADHESION/MIGRATION</scope>
</reference>
<reference key="31">
    <citation type="journal article" date="2010" name="J. Fluoresc.">
        <title>Direct visualization of vesicle maturation and plasma membrane protein trafficking.</title>
        <authorList>
            <person name="Richardson D.S."/>
            <person name="Mulligan L.M."/>
        </authorList>
    </citation>
    <scope>SUBCELLULAR LOCATION</scope>
</reference>
<reference key="32">
    <citation type="journal article" date="2010" name="Surgery">
        <title>A novel RET inhibitor with potent efficacy against medullary thyroid cancer in vivo.</title>
        <authorList>
            <person name="Samadi A.K."/>
            <person name="Mukerji R."/>
            <person name="Shah A."/>
            <person name="Timmermann B.N."/>
            <person name="Cohen M.S."/>
        </authorList>
    </citation>
    <scope>ACTIVITY REGULATION</scope>
</reference>
<reference key="33">
    <citation type="journal article" date="2011" name="J. Biol. Chem.">
        <title>RET modulates cell adhesion via its cleavage by caspase in sympathetic neurons.</title>
        <authorList>
            <person name="Cabrera J.R."/>
            <person name="Bouzas-Rodriguez J."/>
            <person name="Tauszig-Delamasure S."/>
            <person name="Mehlen P."/>
        </authorList>
    </citation>
    <scope>FUNCTION IN CELL ADHESION</scope>
    <scope>FUNCTION IN APOPTOSIS</scope>
    <scope>PROTEOLYTIC PROCESSING BY CASPASE-3 AT ASP-707 AND ASP-1017</scope>
    <scope>MUTAGENESIS OF ASP-707; LYS-758 AND 708-ALA--SER-1114</scope>
    <scope>SUBUNIT</scope>
</reference>
<reference key="34">
    <citation type="journal article" date="2011" name="J. Biol. Chem.">
        <title>Focal adhesion kinase (FAK) binds RET kinase via its FERM domain, priming a direct and reciprocal RET-FAK transactivation mechanism.</title>
        <authorList>
            <person name="Plaza-Menacho I."/>
            <person name="Morandi A."/>
            <person name="Mologni L."/>
            <person name="Boender P."/>
            <person name="Gambacorti-Passerini C."/>
            <person name="Magee A.I."/>
            <person name="Hofstra R.M.W."/>
            <person name="Knowles P."/>
            <person name="McDonald N.Q."/>
            <person name="Isacke C.M."/>
        </authorList>
    </citation>
    <scope>INTERACTION WITH PTK2/FAK1</scope>
    <scope>FUNCTION IN PTK2/FAK1 PHOSPHORYLATION</scope>
</reference>
<reference key="35">
    <citation type="journal article" date="2011" name="J. Biol. Chem.">
        <title>Sorting protein-related receptor SorLA controls regulated secretion of glial cell line-derived neurotrophic factor.</title>
        <authorList>
            <person name="Geng Z."/>
            <person name="Xu F.Y."/>
            <person name="Huang S.H."/>
            <person name="Chen Z.Y."/>
        </authorList>
    </citation>
    <scope>FUNCTION</scope>
    <scope>SUBCELLULAR LOCATION</scope>
</reference>
<reference key="36">
    <citation type="journal article" date="2013" name="Cell Rep.">
        <title>SorLA controls neurotrophic activity by sorting of GDNF and its receptors GFRalpha1 and RET.</title>
        <authorList>
            <person name="Glerup S."/>
            <person name="Lume M."/>
            <person name="Olsen D."/>
            <person name="Nyengaard J.R."/>
            <person name="Vaegter C.B."/>
            <person name="Gustafsen C."/>
            <person name="Christensen E.I."/>
            <person name="Kjolby M."/>
            <person name="Hay-Schmidt A."/>
            <person name="Bender D."/>
            <person name="Madsen P."/>
            <person name="Saarma M."/>
            <person name="Nykjaer A."/>
            <person name="Petersen C.M."/>
        </authorList>
    </citation>
    <scope>FUNCTION</scope>
    <scope>SUBCELLULAR LOCATION</scope>
</reference>
<reference key="37">
    <citation type="journal article" date="2017" name="Nature">
        <title>Non-homeostatic body weight regulation through a brainstem-restricted receptor for GDF15.</title>
        <authorList>
            <person name="Hsu J.Y."/>
            <person name="Crawley S."/>
            <person name="Chen M."/>
            <person name="Ayupova D.A."/>
            <person name="Lindhout D.A."/>
            <person name="Higbee J."/>
            <person name="Kutach A."/>
            <person name="Joo W."/>
            <person name="Gao Z."/>
            <person name="Fu D."/>
            <person name="To C."/>
            <person name="Mondal K."/>
            <person name="Li B."/>
            <person name="Kekatpure A."/>
            <person name="Wang M."/>
            <person name="Laird T."/>
            <person name="Horner G."/>
            <person name="Chan J."/>
            <person name="McEntee M."/>
            <person name="Lopez M."/>
            <person name="Lakshminarasimhan D."/>
            <person name="White A."/>
            <person name="Wang S.P."/>
            <person name="Yao J."/>
            <person name="Yie J."/>
            <person name="Matern H."/>
            <person name="Solloway M."/>
            <person name="Haldankar R."/>
            <person name="Parsons T."/>
            <person name="Tang J."/>
            <person name="Shen W.D."/>
            <person name="Alice Chen Y."/>
            <person name="Tian H."/>
            <person name="Allan B.B."/>
        </authorList>
    </citation>
    <scope>INTERACTION WITH GFRAL</scope>
    <scope>SUBCELLULAR LOCATION</scope>
    <scope>FUNCTION</scope>
    <scope>MUTAGENESIS OF TYR-1062</scope>
</reference>
<reference key="38">
    <citation type="journal article" date="2017" name="Nature">
        <title>Non-homeostatic body weight regulation through a brainstem-restricted receptor for GDF15.</title>
        <authorList>
            <person name="Hsu J.Y."/>
            <person name="Crawley S."/>
            <person name="Chen M."/>
            <person name="Ayupova D.A."/>
            <person name="Lindhout D.A."/>
            <person name="Higbee J."/>
            <person name="Kutach A."/>
            <person name="Joo W."/>
            <person name="Gao Z."/>
            <person name="Fu D."/>
            <person name="To C."/>
            <person name="Mondal K."/>
            <person name="Li B."/>
            <person name="Kekatpure A."/>
            <person name="Wang M."/>
            <person name="Laird T."/>
            <person name="Horner G."/>
            <person name="Chan J."/>
            <person name="McEntee M."/>
            <person name="Lopez M."/>
            <person name="Lakshminarasimhan D."/>
            <person name="White A."/>
            <person name="Wang S.P."/>
            <person name="Yao J."/>
            <person name="Yie J."/>
            <person name="Matern H."/>
            <person name="Solloway M."/>
            <person name="Haldankar R."/>
            <person name="Parsons T."/>
            <person name="Tang J."/>
            <person name="Shen W.D."/>
            <person name="Alice Chen Y."/>
            <person name="Tian H."/>
            <person name="Allan B.B."/>
        </authorList>
    </citation>
    <scope>ERRATUM OF PUBMED:28953886</scope>
</reference>
<reference key="39">
    <citation type="journal article" date="2017" name="Nat. Med.">
        <title>GFRAL is the receptor for GDF15 and the ligand promotes weight loss in mice and nonhuman primates.</title>
        <authorList>
            <person name="Mullican S.E."/>
            <person name="Lin-Schmidt X."/>
            <person name="Chin C.N."/>
            <person name="Chavez J.A."/>
            <person name="Furman J.L."/>
            <person name="Armstrong A.A."/>
            <person name="Beck S.C."/>
            <person name="South V.J."/>
            <person name="Dinh T.Q."/>
            <person name="Cash-Mason T.D."/>
            <person name="Cavanaugh C.R."/>
            <person name="Nelson S."/>
            <person name="Huang C."/>
            <person name="Hunter M.J."/>
            <person name="Rangwala S.M."/>
        </authorList>
    </citation>
    <scope>FUNCTION</scope>
    <scope>INTERACTION WITH GFRAL</scope>
</reference>
<reference key="40">
    <citation type="journal article" date="2017" name="Nat. Med.">
        <title>GFRAL is the receptor for GDF15 and is required for the anti-obesity effects of the ligand.</title>
        <authorList>
            <person name="Yang L."/>
            <person name="Chang C.C."/>
            <person name="Sun Z."/>
            <person name="Madsen D."/>
            <person name="Zhu H."/>
            <person name="Padkjaer S.B."/>
            <person name="Wu X."/>
            <person name="Huang T."/>
            <person name="Hultman K."/>
            <person name="Paulsen S.J."/>
            <person name="Wang J."/>
            <person name="Bugge A."/>
            <person name="Frantzen J.B."/>
            <person name="Noergaard P."/>
            <person name="Jeppesen J.F."/>
            <person name="Yang Z."/>
            <person name="Secher A."/>
            <person name="Chen H."/>
            <person name="Li X."/>
            <person name="John L.M."/>
            <person name="Shan B."/>
            <person name="He Z."/>
            <person name="Gao X."/>
            <person name="Su J."/>
            <person name="Hansen K.T."/>
            <person name="Yang W."/>
            <person name="Joergensen S.B."/>
        </authorList>
    </citation>
    <scope>FUNCTION</scope>
    <scope>CATALYTIC ACTIVITY</scope>
    <scope>INTERACTION WITH GFRAL</scope>
    <scope>PHOSPHORYLATION AT TYR-905 AND TYR-1062</scope>
</reference>
<reference key="41">
    <citation type="journal article" date="2015" name="Nat. Struct. Mol. Biol.">
        <title>The active site of O-GlcNAc transferase imposes constraints on substrate sequence.</title>
        <authorList>
            <person name="Pathak S."/>
            <person name="Alonso J."/>
            <person name="Schimpl M."/>
            <person name="Rafie K."/>
            <person name="Blair D.E."/>
            <person name="Borodkin V.S."/>
            <person name="Albarbarawi O."/>
            <person name="van Aalten D.M.F."/>
        </authorList>
    </citation>
    <scope>GLYCOSYLATION AT SER-688</scope>
</reference>
<reference evidence="118 119 120 121" key="42">
    <citation type="journal article" date="2006" name="J. Biol. Chem.">
        <title>Structure and chemical inhibition of the RET tyrosine kinase domain.</title>
        <authorList>
            <person name="Knowles P.P."/>
            <person name="Murray-Rust J."/>
            <person name="Kjaer S."/>
            <person name="Scott R.P."/>
            <person name="Hanrahan S."/>
            <person name="Santoro M."/>
            <person name="Ibanez C.F."/>
            <person name="McDonald N.Q."/>
        </authorList>
    </citation>
    <scope>X-RAY CRYSTALLOGRAPHY (2.0 ANGSTROMS) OF 705-1013 ALONE AND IN COMPLEX WITH INHIBITORS</scope>
    <scope>IDENTIFICATION BY MASS SPECTROMETRY</scope>
    <scope>PHOSPHORYLATION AT TYR-900 AND TYR-905</scope>
</reference>
<reference evidence="122 123 124" key="43">
    <citation type="journal article" date="2010" name="Bioorg. Med. Chem.">
        <title>Synthesis, structure-activity relationship and crystallographic studies of 3-substituted indolin-2-one RET inhibitors.</title>
        <authorList>
            <person name="Mologni L."/>
            <person name="Rostagno R."/>
            <person name="Brussolo S."/>
            <person name="Knowles P.P."/>
            <person name="Kjaer S."/>
            <person name="Murray-Rust J."/>
            <person name="Rosso E."/>
            <person name="Zambon A."/>
            <person name="Scapozza L."/>
            <person name="McDonald N.Q."/>
            <person name="Lucchini V."/>
            <person name="Gambacorti-Passerini C."/>
        </authorList>
    </citation>
    <scope>X-RAY CRYSTALLOGRAPHY (2.00 ANGSTROMS) OF 705-1013 IN COMPLEX WITH INHIBITORS</scope>
    <scope>ACTIVITY REGULATION</scope>
    <scope>PHOSPHORYLATION AT TYR-905</scope>
</reference>
<reference evidence="125" key="44">
    <citation type="journal article" date="2010" name="Nat. Struct. Mol. Biol.">
        <title>Mammal-restricted elements predispose human RET to folding impairment by HSCR mutations.</title>
        <authorList>
            <person name="Kjaer S."/>
            <person name="Hanrahan S."/>
            <person name="Totty N."/>
            <person name="McDonald N.Q."/>
        </authorList>
    </citation>
    <scope>X-RAY CRYSTALLOGRAPHY (2.00 ANGSTROMS) OF 29-270</scope>
    <scope>GLYCOSYLATION AT ASN-151</scope>
    <scope>DISULFIDE BONDS</scope>
</reference>
<reference evidence="128" key="45">
    <citation type="journal article" date="2014" name="Cell Rep.">
        <title>RET recognition of GDNF-GFRalpha1 ligand by a composite binding site promotes membrane-proximal self-association.</title>
        <authorList>
            <person name="Goodman K.M."/>
            <person name="Kjaer S."/>
            <person name="Beuron F."/>
            <person name="Knowles P.P."/>
            <person name="Nawrotek A."/>
            <person name="Burns E.M."/>
            <person name="Purkiss A.G."/>
            <person name="George R."/>
            <person name="Santoro M."/>
            <person name="Morris E.P."/>
            <person name="McDonald N.Q."/>
        </authorList>
    </citation>
    <scope>STRUCTURE BY ELECTRON MICROSCOPY (24.00 ANGSTROMS) OF 29-635 IN COMPLEX WITH GFRA1; GDNF AND CALCIUM</scope>
    <scope>FUNCTION</scope>
    <scope>COFACTOR</scope>
    <scope>DISULFIDE BONDS</scope>
</reference>
<reference evidence="126 127" key="46">
    <citation type="journal article" date="2014" name="Mol. Cell">
        <title>Oncogenic RET kinase domain mutations perturb the autophosphorylation trajectory by enhancing substrate presentation in trans.</title>
        <authorList>
            <person name="Plaza-Menacho I."/>
            <person name="Barnouin K."/>
            <person name="Goodman K."/>
            <person name="Martinez-Torres R.J."/>
            <person name="Borg A."/>
            <person name="Murray-Rust J."/>
            <person name="Mouilleron S."/>
            <person name="Knowles P."/>
            <person name="McDonald N.Q."/>
        </authorList>
    </citation>
    <scope>X-RAY CRYSTALLOGRAPHY (1.65 ANGSTROMS) OF 705-1013 IN COMPLEX WITH ADENOSINE</scope>
    <scope>FUNCTION</scope>
    <scope>CATALYTIC ACTIVITY</scope>
    <scope>PHOSPHORYLATION AT TYR-687; TYR-826; TYR-900; TYR-905; TYR-981; TYR-1015; TYR-1029 AND TYR-1062</scope>
    <scope>MUTAGENESIS OF GLU-734; LYS-758; ARG-912 AND ILE-913</scope>
    <scope>VARIANT MEN2B THR-918</scope>
    <scope>CHARACTERIZATION OF VARIANT MEN2B THR-918</scope>
    <scope>VARIANT MTC MET-804</scope>
    <scope>CHARACTERIZATION OF VARIANT MTC MET-804</scope>
</reference>
<reference evidence="130 131 132" key="47">
    <citation type="journal article" date="2019" name="J. Biol. Chem.">
        <title>Structural basis of resistance of mutant RET protein-tyrosine kinase to its inhibitors nintedanib and vandetanib.</title>
        <authorList>
            <person name="Terzyan S.S."/>
            <person name="Shen T."/>
            <person name="Liu X."/>
            <person name="Huang Q."/>
            <person name="Teng P."/>
            <person name="Zhou M."/>
            <person name="Hilberg F."/>
            <person name="Cai J."/>
            <person name="Mooers B.H.M."/>
            <person name="Wu J."/>
        </authorList>
    </citation>
    <scope>X-RAY CRYSTALLOGRAPHY (1.87 ANGSTROMS) OF 705-1013</scope>
    <scope>FUNCTION</scope>
    <scope>ACTIVITY REGULATION</scope>
    <scope>VARIANT MTC VAL-881</scope>
    <scope>CHARACTERIZATION OF VARIANT MTC VAL-881</scope>
    <scope>VARIANT ALA-810</scope>
    <scope>CHARACTERIZATION OF VARIANT ALA-810</scope>
</reference>
<reference evidence="133 134 135 136 137" key="48">
    <citation type="journal article" date="2019" name="Elife">
        <title>Cryo-EM analyses reveal the common mechanism and diversification in the activation of RET by different ligands.</title>
        <authorList>
            <person name="Li J."/>
            <person name="Shang G."/>
            <person name="Chen Y.J."/>
            <person name="Brautigam C.A."/>
            <person name="Liou J."/>
            <person name="Zhang X."/>
            <person name="Bai X.C."/>
        </authorList>
    </citation>
    <scope>STRUCTURE BY ELECTRON MICROSCOPY (3.65 ANGSTROMS) OF 29-635 IN COMPLEX WITH CALCIUM; GDF15; GFRAL; GFRA1; GFRA2; GFRA3; GDNF; NRTN AND ARTN</scope>
    <scope>COFACTOR</scope>
    <scope>DISULFIDE BONDS</scope>
</reference>
<reference key="49">
    <citation type="journal article" date="1997" name="Eur. J. Hum. Genet.">
        <title>Mutations in Hirschsprung disease: when does a mutation contribute to the phenotype.</title>
        <authorList>
            <person name="Hofstra R.M.W."/>
            <person name="Osinga J."/>
            <person name="Buys C.H.C.M."/>
        </authorList>
    </citation>
    <scope>REVIEW ON HSCR VARIANTS</scope>
</reference>
<reference key="50">
    <citation type="journal article" date="1997" name="Hum. Mutat.">
        <title>Mutations of the RET proto-oncogene in the multiple endocrine neoplasia type 2 syndromes, related sporadic tumours, and Hirschsprung disease.</title>
        <authorList>
            <person name="Eng C."/>
            <person name="Mulligan L.M."/>
        </authorList>
    </citation>
    <scope>VARIANTS MEN2A/MTC TYR-611; PHE-618; GLY-620 AND PHE-630</scope>
</reference>
<reference key="51">
    <citation type="journal article" date="1993" name="Hum. Mol. Genet.">
        <title>Mutations in the RET proto-oncogene are associated with MEN 2A and FMTC.</title>
        <authorList>
            <person name="Donis-Keller H."/>
            <person name="Dou S."/>
            <person name="Chi D."/>
            <person name="Carlson K.M."/>
            <person name="Toshima K."/>
            <person name="Lairmore T.C."/>
            <person name="Howe J.R."/>
            <person name="Moley J.F."/>
            <person name="Goodfellow P."/>
            <person name="Wells S.A. Jr."/>
        </authorList>
    </citation>
    <scope>VARIANTS MEN2A/MTC TRP-611; SER-618; TYR-618; ARG-620; TYR-620 AND ARG-634</scope>
</reference>
<reference key="52">
    <citation type="journal article" date="1993" name="Nature">
        <title>Germ-line mutations of the RET proto-oncogene in multiple endocrine neoplasia type 2A.</title>
        <authorList>
            <person name="Mulligan L.M."/>
            <person name="Kwok J.B.J."/>
            <person name="Healey C.S."/>
            <person name="Elsdon M.J."/>
            <person name="Eng C."/>
            <person name="Gardner E."/>
            <person name="Love D.R."/>
            <person name="Mole S.E."/>
            <person name="Moore J.K."/>
            <person name="Papi L."/>
            <person name="Ponder M.A."/>
            <person name="Telenius H."/>
            <person name="Tunnacliffe A."/>
            <person name="Ponder B.A.J."/>
        </authorList>
    </citation>
    <scope>VARIANTS MEN2A GLY-618; 632-GLU--CYS-634 DELINS ASP-VAL-ARG; GLY-634; PHE-634; TYR-634 AND SER-634</scope>
</reference>
<reference key="53">
    <citation type="journal article" date="1994" name="Eur. J. Hum. Genet.">
        <title>Heterogeneity and low detection rate of RET mutations in Hirschsprung disease.</title>
        <authorList>
            <person name="Yin L."/>
            <person name="Barone V."/>
            <person name="Seri M."/>
            <person name="Bolino A."/>
            <person name="Bocciardi R."/>
            <person name="Ceccherini I."/>
            <person name="Pasini B."/>
            <person name="Tocco T."/>
            <person name="Lerone M."/>
            <person name="Cywes S."/>
            <person name="Moore S."/>
            <person name="Vanderwinden J.-M."/>
            <person name="Abramowicz M.J."/>
            <person name="Kristoffersson U."/>
            <person name="Larsson L.T."/>
            <person name="Hamel B.C.J."/>
            <person name="Silengo M."/>
            <person name="Martucciello G."/>
            <person name="Romeo G."/>
        </authorList>
    </citation>
    <scope>VARIANTS HSCR1 PRO-40; LEU-399; GLN-762; PRO-765; GLN-897; GLY-972 AND LEU-973</scope>
</reference>
<reference key="54">
    <citation type="journal article" date="1994" name="Hum. Mol. Genet.">
        <title>Point mutation within the tyrosine kinase domain of the RET proto-oncogene in multiple endocrine neoplasia type 2B and related sporadic tumours.</title>
        <authorList>
            <person name="Eng C."/>
            <person name="Smith D.P."/>
            <person name="Mulligan L.M."/>
            <person name="Nagai M.A."/>
            <person name="Healey C.S."/>
            <person name="Ponder M.A."/>
            <person name="Gardner E."/>
            <person name="Scheumann G.F."/>
            <person name="Jackson C.E."/>
            <person name="Tunnacliffe A."/>
            <person name="Ponder B.A.J."/>
        </authorList>
    </citation>
    <scope>VARIANT MEN2B THR-918</scope>
</reference>
<reference key="55">
    <citation type="journal article" date="1994" name="Hum. Mol. Genet.">
        <title>Germline RET mutations in MEN 2A and FMTC and their detection by simple DNA diagnostic tests.</title>
        <authorList>
            <person name="Xue F."/>
            <person name="Yu H."/>
            <person name="Maurer L.H."/>
            <person name="Memoli V.A."/>
            <person name="Nutile-Mcmenemy N."/>
            <person name="Schuster M.K."/>
            <person name="Browden D.W."/>
            <person name="Mao J.-I."/>
            <person name="Noll W.W."/>
        </authorList>
    </citation>
    <scope>VARIANTS MEN2A/MTC ARG-618; SER-618; PHE-620; ARG-620; PHE-634; GLY-634 AND TYR-634</scope>
</reference>
<reference key="56">
    <citation type="journal article" date="1994" name="Hum. Mol. Genet.">
        <title>RET proto-oncogene mutations in inherited and sporadic medullary thyroid cancer.</title>
        <authorList>
            <person name="Blaugrund J.E."/>
            <person name="Johns M.M. Jr."/>
            <person name="Eby Y.J."/>
            <person name="Ball D.W."/>
            <person name="Baylin S.B."/>
            <person name="Hruban R.H."/>
            <person name="Sidransky D."/>
        </authorList>
    </citation>
    <scope>VARIANTS MTC/MEN2A TYR-609; ARG-618; SER-618 AND SER-620</scope>
</reference>
<reference key="57">
    <citation type="journal article" date="1994" name="Hum. Mol. Genet.">
        <title>RET proto-oncogene mutations in French MEN 2A and FMTC families.</title>
        <authorList>
            <person name="Schuffenecker I."/>
            <person name="Billaud M."/>
            <person name="Calender A."/>
            <person name="Chambe B."/>
            <person name="Ginet N."/>
            <person name="Calmettes C."/>
            <person name="Modigliani E."/>
            <person name="Lenoir G.M."/>
        </authorList>
    </citation>
    <scope>VARIANTS MTC</scope>
    <scope>VARIANTS MEN2A</scope>
</reference>
<reference key="58">
    <citation type="journal article" date="1994" name="Hum. Mol. Genet.">
        <title>Diverse phenotypes associated with exon 10 mutations of the RET proto-oncogene.</title>
        <authorList>
            <person name="Mulligan L.M."/>
            <person name="Eng C."/>
            <person name="Attie T."/>
            <person name="Lyonnet S."/>
            <person name="Marsh D.J."/>
            <person name="Hyland V.J."/>
            <person name="Robinson B.G."/>
            <person name="Frilling A."/>
            <person name="Verellen-Dumoulin C."/>
            <person name="Safar A."/>
            <person name="Venter D.J."/>
            <person name="Munnich A."/>
            <person name="Ponder B.A.J."/>
        </authorList>
    </citation>
    <scope>VARIANTS HSCR1 TRP-609; ARG-618 AND ARG-620</scope>
    <scope>VARIANT MEN2A ARG-618</scope>
    <scope>VARIANT MTC ARG-620</scope>
</reference>
<reference key="59">
    <citation type="journal article" date="1994" name="Lancet">
        <title>De-novo mutations of the RET proto-oncogene in Hirschsprung's disease.</title>
        <authorList>
            <person name="Pelet A."/>
            <person name="Attie T."/>
            <person name="Goulet O."/>
            <person name="Eng C."/>
            <person name="Ponder B.A."/>
            <person name="Munnich A."/>
            <person name="Lyonnet S."/>
        </authorList>
    </citation>
    <scope>VARIANT HSCR1 LYS-921</scope>
</reference>
<reference key="60">
    <citation type="journal article" date="1994" name="Nature">
        <title>A mutation in the RET proto-oncogene associated with multiple endocrine neoplasia type 2B and sporadic medullary thyroid carcinoma.</title>
        <authorList>
            <person name="Hofstra R.M.W."/>
            <person name="Landsvater R.M."/>
            <person name="Ceccherini I."/>
            <person name="Stulp R.P."/>
            <person name="Stelwagen T."/>
            <person name="Luo Y."/>
            <person name="Pasini B."/>
            <person name="Hoeppener J.W.M."/>
            <person name="Ploos van Amstel H.K."/>
            <person name="Romeo G."/>
            <person name="Lips C.J.M."/>
            <person name="Buys C.H.C.M."/>
        </authorList>
    </citation>
    <scope>VARIANT MEN2B THR-918</scope>
</reference>
<reference key="61">
    <citation type="journal article" date="1994" name="Nature">
        <title>Point mutations affecting the tyrosine kinase domain of the RET proto-oncogene in Hirschsprung's disease.</title>
        <authorList>
            <person name="Romeo G."/>
            <person name="Ronchetto P."/>
            <person name="Luo Y."/>
            <person name="Barone V."/>
            <person name="Seri M."/>
            <person name="Ceccherini I."/>
            <person name="Pasini B."/>
            <person name="Bocciardi R."/>
            <person name="Lerone M."/>
            <person name="Kaarlainen H."/>
            <person name="Martucciello G."/>
        </authorList>
    </citation>
    <scope>VARIANTS HSCR1 PRO-765; GLN-897 AND GLY-972</scope>
</reference>
<reference key="62">
    <citation type="journal article" date="1994" name="Nature">
        <title>Mutations of the RET proto-oncogene in Hirschsprung's disease.</title>
        <authorList>
            <person name="Edery P."/>
            <person name="Lyonnet S."/>
            <person name="Mulligan L.M."/>
            <person name="Pelet A."/>
            <person name="Dow E."/>
            <person name="Abel L."/>
            <person name="Holder S."/>
            <person name="Nihoul-Fkete C."/>
            <person name="Ponder B.A.J."/>
            <person name="Munnich A."/>
        </authorList>
    </citation>
    <scope>VARIANTS HSCR1 LEU-32; LEU-64; GLN-330 AND LEU-393</scope>
</reference>
<reference key="63">
    <citation type="journal article" date="1994" name="Proc. Natl. Acad. Sci. U.S.A.">
        <title>Single missense mutation in the tyrosine kinase catalytic domain of the RET protooncogene is associated with multiple endocrine neoplasia type 2B.</title>
        <authorList>
            <person name="Carlson K.M."/>
            <person name="Dou S."/>
            <person name="Chi D."/>
            <person name="Scavarda N."/>
            <person name="Toshima K."/>
            <person name="Jackson C.E."/>
            <person name="Wells S.A. Jr."/>
            <person name="Goodfellow P.J."/>
            <person name="Donis-Keller H."/>
        </authorList>
    </citation>
    <scope>VARIANT MEN2B THR-918</scope>
</reference>
<reference key="64">
    <citation type="journal article" date="1995" name="Cancer">
        <title>Analysis of RET protooncogene point mutations distinguishes heritable from nonheritable medullary thyroid carcinomas.</title>
        <authorList>
            <person name="Komminoth P."/>
            <person name="Kunz E.K."/>
            <person name="Matias-Guiu X."/>
            <person name="Hiort O."/>
            <person name="Christiansen G."/>
            <person name="Colomer A."/>
            <person name="Roth J."/>
            <person name="Heitz P.U."/>
        </authorList>
    </citation>
    <scope>VARIANTS MTC; MEN2A AND MEN2B</scope>
</reference>
<reference key="65">
    <citation type="journal article" date="1995" name="Hum. Genet.">
        <title>Germline mutations of the RET proto-oncogene in eight Japanese patients with multiple endocrine neoplasia type 2A (MEN2A).</title>
        <authorList>
            <person name="Takiguchi-Shirahama S."/>
            <person name="Koyama K."/>
            <person name="Miyauchi A."/>
            <person name="Wakasugi T."/>
            <person name="Oishi S."/>
            <person name="Takami H."/>
            <person name="Hikiji K."/>
            <person name="Nakamura Y."/>
        </authorList>
    </citation>
    <scope>VARIANTS MEN2A SER-618; SER-620; ARG-634 AND TYR-634</scope>
</reference>
<reference key="66">
    <citation type="journal article" date="1995" name="Hum. Mol. Genet.">
        <title>Mutation analysis of the RET receptor tyrosine kinase in Hirschsprung disease.</title>
        <authorList>
            <person name="Angrist M."/>
            <person name="Bolk S."/>
            <person name="Thiel B."/>
            <person name="Puffenberger E.G."/>
            <person name="Hofstra R.M.W."/>
            <person name="Buys C.H.C.M."/>
            <person name="Cass D.T."/>
            <person name="Chakravarti A."/>
        </authorList>
    </citation>
    <scope>VARIANTS HSCR1 LEU-20; SER-93; GLN-330; TYR-609 AND ARG-620</scope>
    <scope>VARIANT CYS-982</scope>
    <source>
        <tissue>Blood</tissue>
    </source>
</reference>
<reference key="67">
    <citation type="journal article" date="1995" name="Hum. Mol. Genet.">
        <title>Diversity of RET proto-oncogene mutations in familial and sporadic Hirschsprung disease.</title>
        <authorList>
            <person name="Attie T."/>
            <person name="Pelet A."/>
            <person name="Edery P."/>
            <person name="Eng C."/>
            <person name="Mulligan L.M."/>
            <person name="Amiel J."/>
            <person name="Boutrand L."/>
            <person name="Beldjord C."/>
            <person name="Nihoul-Fekete C."/>
            <person name="Munnich A."/>
            <person name="Ponder B.A.J."/>
            <person name="Lyonnet S."/>
        </authorList>
    </citation>
    <scope>VARIANTS HSCR1 HIS-231 AND LYS-251</scope>
    <source>
        <tissue>Leukocyte</tissue>
    </source>
</reference>
<reference key="68">
    <citation type="journal article" date="1995" name="Hum. Mol. Genet.">
        <title>Two maternally derived missense mutations in the tyrosine kinase domain of the RET protooncogene in a patient with de novo MEN 2B.</title>
        <authorList>
            <person name="Kitamura Y."/>
            <person name="Scavarda N."/>
            <person name="Wells S.A. Jr."/>
            <person name="Jackson C.E."/>
            <person name="Goodfellow P.J."/>
        </authorList>
    </citation>
    <scope>VARIANT MEN2B THR-918</scope>
    <scope>VARIANT TYR-922</scope>
</reference>
<reference key="69">
    <citation type="journal article" date="1995" name="Oncogene">
        <title>A novel point mutation in the tyrosine kinase domain of the RET proto-oncogene in sporadic medullary thyroid carcinoma and in a family with FMTC.</title>
        <authorList>
            <person name="Eng C."/>
            <person name="Smith D.P."/>
            <person name="Mulligan L.M."/>
            <person name="Healey C.S."/>
            <person name="Zvelebil M.J."/>
            <person name="Stonehouse T.J."/>
            <person name="Ponder M.A."/>
            <person name="Jackson C.E."/>
            <person name="Waterfield M.D."/>
            <person name="Ponder B.A.J."/>
        </authorList>
    </citation>
    <scope>VARIANT MTC ASP-768</scope>
</reference>
<reference key="70">
    <citation type="journal article" date="1995" name="Oncogene">
        <title>RET mutations in exons 13 and 14 of FMTC patients.</title>
        <authorList>
            <person name="Bolino A."/>
            <person name="Schuffenecker I."/>
            <person name="Luo Y."/>
            <person name="Seri M."/>
            <person name="Silengo M."/>
            <person name="Tocco T."/>
            <person name="Chabrier G."/>
            <person name="Houdent C."/>
            <person name="Murat A."/>
            <person name="Schlumberger M."/>
            <person name="Tournaire J."/>
            <person name="Lenoir G.M."/>
            <person name="Romeo G."/>
        </authorList>
    </citation>
    <scope>VARIANTS MTC ASP-768 AND LEU-804</scope>
</reference>
<reference key="71">
    <citation type="journal article" date="1996" name="Am. J. Hum. Genet.">
        <title>Mutations in three genes are found associated with the development of Hirschsprung disease: RET, EDNRB and EDN3.</title>
        <authorList>
            <person name="Hofstra R.M.W."/>
            <person name="Osinga J."/>
            <person name="Stulp R.P."/>
            <person name="Scheffer H."/>
            <person name="Meijers C."/>
            <person name="Buys C.H.C.M."/>
        </authorList>
    </citation>
    <scope>VARIANTS HSCR1 TYR-157; LYS-359; TYR-609; ARG-620; ASN-1059 DEL AND PRO-1061</scope>
</reference>
<reference key="72">
    <citation type="journal article" date="1996" name="Eur. J. Hum. Genet.">
        <title>Prevalence and parental origin of de novo RET mutations in Hirschsprung's disease.</title>
        <authorList>
            <person name="Yin L."/>
            <person name="Seri M."/>
            <person name="Barone V."/>
            <person name="Tocco T."/>
            <person name="Scaranari M."/>
            <person name="Romeo G."/>
        </authorList>
    </citation>
    <scope>VARIANTS HSCR1 PRO-40 AND PRO-765</scope>
</reference>
<reference key="73">
    <citation type="journal article" date="1996" name="Hum. Genet.">
        <title>Mutation analysis of the RET proto-oncogene in Dutch families with MEN 2A, MEN 2B and FMTC: two novel mutations and one de novo mutation for MEN 2A.</title>
        <authorList>
            <person name="Landsvater R.M."/>
            <person name="Jansen R.P.M."/>
            <person name="Hofstra R.M.W."/>
            <person name="Buys C.H.C.M."/>
            <person name="Lips C.J.M."/>
            <person name="van Amstel H.K.P."/>
        </authorList>
    </citation>
    <scope>VARIANTS MTC/MEN2A</scope>
</reference>
<reference key="74">
    <citation type="journal article" date="1996" name="Hum. Mutat.">
        <title>Diagnosis of multiple endocrine neoplasia [MEN] 2A, 2B and familial medullary thyroid cancer [FMTC] by multiplex PCR and heteroduplex analyses of RET proto-oncogene mutations.</title>
        <authorList>
            <person name="Kambouris M."/>
            <person name="Jackson C.E."/>
            <person name="Feldman G.L."/>
        </authorList>
    </citation>
    <scope>VARIANT MTC ASP-768</scope>
    <scope>VARIANTS MEN2A ARG-609; GLY-609; SER-611 AND ARG-611</scope>
    <scope>VARIANT MEN2B THR-918</scope>
</reference>
<reference key="75">
    <citation type="journal article" date="1996" name="J. Clin. Endocrinol. Metab.">
        <title>Mutations of the ret protooncogene in German multiple endocrine neoplasia families: relation between genotype and phenotype.</title>
        <authorList>
            <person name="Frank-Raue K."/>
            <person name="Hoeppner W."/>
            <person name="Frilling A."/>
            <person name="Kotzerke J."/>
            <person name="Dralle H."/>
            <person name="Haase R."/>
            <person name="Mann K."/>
            <person name="Seif F."/>
            <person name="Kirchner R."/>
            <person name="Rendl J."/>
            <person name="Deckart H.F."/>
            <person name="Ritter M.M."/>
            <person name="Hampel R."/>
            <person name="Klempa J."/>
            <person name="Scholz G.H."/>
            <person name="Raue F."/>
            <person name="Bogner U."/>
            <person name="Brabant G."/>
            <person name="Grussendorf M."/>
            <person name="Hartenstein C.H."/>
            <person name="Heidemann P."/>
            <person name="Hensen J."/>
            <person name="Doerr A.G."/>
            <person name="Hoehne T."/>
            <person name="Hoernig-Franz I."/>
            <person name="Huefner M."/>
            <person name="Kress J."/>
            <person name="Langer H.J."/>
            <person name="Lottermoser K."/>
            <person name="Schweikert H.U."/>
            <person name="Kusterer K."/>
            <person name="Menken U."/>
            <person name="Mercier J."/>
            <person name="Oelkers W."/>
            <person name="Sauer J."/>
            <person name="Simon D."/>
            <person name="Starrach G."/>
            <person name="Ziegler R."/>
        </authorList>
    </citation>
    <scope>VARIANTS MEN2A</scope>
</reference>
<reference key="76">
    <citation type="journal article" date="1997" name="Bioessays">
        <title>RET in human development and oncogenesis.</title>
        <authorList>
            <person name="Edery P."/>
            <person name="Eng C."/>
            <person name="Munnich A."/>
            <person name="Lyonnet S."/>
        </authorList>
    </citation>
    <scope>VARIANT HSCR1 LEU-893</scope>
</reference>
<reference key="77">
    <citation type="journal article" date="1997" name="Hum. Mol. Genet.">
        <title>A duplication of 12 bp in the critical cysteine rich domain of the RET proto-oncogene results in a distinct phenotype of multiple endocrine neoplasia type 2A.</title>
        <authorList>
            <person name="Hoeppner W."/>
            <person name="Ritter M.M."/>
        </authorList>
    </citation>
    <scope>VARIANT MEN2A HIS-GLU-LEU-CYS-634 INS</scope>
</reference>
<reference key="78">
    <citation type="journal article" date="1997" name="Hum. Mutat.">
        <title>Frequency of RET mutations in long- and short-segment Hirschsprung disease.</title>
        <authorList>
            <person name="Seri M."/>
            <person name="Yin L."/>
            <person name="Barone V."/>
            <person name="Bolino A."/>
            <person name="Celli I."/>
            <person name="Bocciardi R."/>
            <person name="Pasini B."/>
            <person name="Ceccherini I."/>
            <person name="Lerone M."/>
            <person name="Kristoffersson U."/>
            <person name="Larsson L.T."/>
            <person name="Casasa J.M."/>
            <person name="Cass D.T."/>
            <person name="Abramowicz M.J."/>
            <person name="Vanderwinden J.-M."/>
            <person name="Kravcenkiene I."/>
            <person name="Baric I."/>
            <person name="Silengo M."/>
            <person name="Martucciello G."/>
            <person name="Romeo G."/>
        </authorList>
    </citation>
    <scope>VARIANTS HSCR1 PRO-180; GLN-313; ARG-620 AND PHE-791</scope>
</reference>
<reference key="79">
    <citation type="journal article" date="1997" name="Hum. Mutat.">
        <title>Cys 618 Arg mutation in the RET proto-oncogene associated with familial medullary thyroid carcinoma and maternally transmitted Hirschsprung's disease suggesting a role for imprinting.</title>
        <authorList>
            <person name="Peretz H."/>
            <person name="Luboshitsky R."/>
            <person name="Baron E."/>
            <person name="Biton A."/>
            <person name="Gershoni R."/>
            <person name="Usher S."/>
            <person name="Grynberg E."/>
            <person name="Yakobson E."/>
            <person name="Graff E."/>
            <person name="Lapidot M."/>
        </authorList>
    </citation>
    <scope>VARIANT MTC ARG-618</scope>
    <scope>VARIANT HSCR1 ARG-618</scope>
</reference>
<reference key="80">
    <citation type="journal article" date="1997" name="J. Clin. Endocrinol. Metab.">
        <title>Germline dinucleotide mutation in codon 883 of the RET proto-oncogene in multiple endocrine neoplasia type 2B without codon 918 mutation.</title>
        <authorList>
            <person name="Gimm O."/>
            <person name="Marsh D.J."/>
            <person name="Andrew S.D."/>
            <person name="Frilling A."/>
            <person name="Dahia P.L.M."/>
            <person name="Mulligan L.M."/>
            <person name="Zajac J.D."/>
            <person name="Robinson B.G."/>
            <person name="Eng C."/>
        </authorList>
    </citation>
    <scope>VARIANT MEN2B PHE-883</scope>
    <source>
        <tissue>Peripheral blood leukocyte</tissue>
    </source>
</reference>
<reference key="81">
    <citation type="journal article" date="1997" name="J. Clin. Endocrinol. Metab.">
        <title>A novel point mutation in the intracellular domain of the ret protooncogene in a family with medullary thyroid carcinoma.</title>
        <authorList>
            <person name="Hofstra R.M.W."/>
            <person name="Fattoruso O."/>
            <person name="Quadro L."/>
            <person name="Wu Y."/>
            <person name="Libroia A."/>
            <person name="Verga U."/>
            <person name="Colantuoni V."/>
            <person name="Buys C.H.C.M."/>
        </authorList>
    </citation>
    <scope>VARIANT MTC ALA-891</scope>
</reference>
<reference key="82">
    <citation type="journal article" date="1997" name="J. Pediatr. Surg.">
        <title>Mutation analysis of the RET, the endothelin-B receptor, and the endothelin-3 genes in sporadic cases of Hirschsprung's disease.</title>
        <authorList>
            <person name="Kusafuka T."/>
            <person name="Wang Y."/>
            <person name="Puri P."/>
        </authorList>
    </citation>
    <scope>VARIANTS HSCR1 SER-174 AND TYR-197</scope>
</reference>
<reference key="83">
    <citation type="journal article" date="1997" name="Oncogene">
        <title>Novel germline RET proto-oncogene mutations associated with medullary thyroid carcinoma (MTC): mutation analysis in Japanese patients with MTC.</title>
        <authorList>
            <person name="Kitamura Y."/>
            <person name="Goodfellow P.J."/>
            <person name="Shimizu K."/>
            <person name="Nagahama M."/>
            <person name="Ito K."/>
            <person name="Kitagawa W."/>
            <person name="Akasu H."/>
            <person name="Takami H."/>
            <person name="Tanaka S."/>
            <person name="Wells S.A. Jr."/>
        </authorList>
    </citation>
    <scope>VARIANTS MTC TYR-630 AND SER-630</scope>
    <scope>VARIANT SER-691</scope>
</reference>
<reference key="84">
    <citation type="journal article" date="1997" name="Oncogene">
        <title>Germline mutation of RET codon 883 in two cases of de novo MEN 2B.</title>
        <authorList>
            <person name="Smith D.P."/>
            <person name="Houghton C."/>
            <person name="Ponder B.A.J."/>
        </authorList>
    </citation>
    <scope>VARIANT MEN2B PHE-883</scope>
</reference>
<reference key="85">
    <citation type="journal article" date="1998" name="Am. J. Hum. Genet.">
        <title>Mutations of the RET-GDNF signaling pathway in Ondine's curse.</title>
        <authorList>
            <person name="Amiel J."/>
            <person name="Salomon R."/>
            <person name="Attie T."/>
            <person name="Pelet A."/>
            <person name="Trang H."/>
            <person name="Mokhtari M."/>
            <person name="Gaultier C."/>
            <person name="Munnich A."/>
            <person name="Lyonnet S."/>
        </authorList>
    </citation>
    <scope>VARIANT HSCR1 LEU-1039</scope>
    <scope>VARIANT SER-691</scope>
</reference>
<reference key="86">
    <citation type="journal article" date="1998" name="Am. J. Med. Genet.">
        <title>Novel point mutation in exon 10 of the RET proto-oncogene in a family with medullary thyroid carcinoma.</title>
        <authorList>
            <person name="Oriola J."/>
            <person name="Paramo C."/>
            <person name="Halperin I."/>
            <person name="Garcia-Mayor R.V."/>
            <person name="Rivera-Fillat F."/>
        </authorList>
    </citation>
    <scope>VARIANT MTC GLY-611</scope>
</reference>
<reference key="87">
    <citation type="journal article" date="1998" name="Hum. Genet.">
        <title>Phenotypic variation in a family with mutations in two Hirschsprung-related genes (RET and endothelin receptor B).</title>
        <authorList>
            <person name="Svensson P.J."/>
            <person name="Anvret M."/>
            <person name="Molander M.L."/>
            <person name="Nordenskjold A."/>
        </authorList>
    </citation>
    <scope>VARIANT CYS-982</scope>
</reference>
<reference key="88">
    <citation type="journal article" date="1998" name="Hum. Mol. Genet.">
        <title>Hirschsprung disease in MEN 2A: increased spectrum of RET exon 10 genotypes and strong genotype-phenotype correlation.</title>
        <authorList>
            <person name="Decker R.A."/>
            <person name="Peacock M.L."/>
            <person name="Watson P."/>
        </authorList>
    </citation>
    <scope>VARIANTS MEN2A TYR-609; SER-618; ARG-620 AND TRP-620</scope>
    <scope>VARIANTS HSCR1 TYR-609; SER-618; ARG-620 AND TRP-620</scope>
</reference>
<reference key="89">
    <citation type="journal article" date="1998" name="Hum. Mutat. Suppl.">
        <title>Duplication of 9 base pairs in the critical cysteine-rich domain of the RET proto-oncogene causes multiple endocrine neoplasia type 2A.</title>
        <authorList>
            <person name="Hoeppner W."/>
            <person name="Dralle H."/>
            <person name="Brabant G."/>
        </authorList>
    </citation>
    <scope>VARIANT MEN2A CYS-ARG-THR-636 INS</scope>
</reference>
<reference key="90">
    <citation type="journal article" date="1998" name="Hum. Mutat. Suppl.">
        <title>A GTG to ATG novel point mutation at codon 804 in exon 14 of the RET proto-oncogene in two families affected by familial medullary thyroid carcinoma.</title>
        <authorList>
            <person name="Fattoruso O."/>
            <person name="Quadro L."/>
            <person name="Libroia A."/>
            <person name="Verga U."/>
            <person name="Lupoli G."/>
            <person name="Cascone E."/>
            <person name="Colantuoni V."/>
        </authorList>
    </citation>
    <scope>VARIANT MTC MET-804</scope>
</reference>
<reference key="91">
    <citation type="journal article" date="1998" name="J. Clin. Endocrinol. Metab.">
        <title>A new hot spot for mutations in the ret protooncogene causing familial medullary thyroid carcinoma and multiple endocrine neoplasia type 2A.</title>
        <authorList>
            <person name="Berndt I."/>
            <person name="Reuter M."/>
            <person name="Saller B."/>
            <person name="Frank-Raue K."/>
            <person name="Groth P."/>
            <person name="Grussendorf M."/>
            <person name="Raue F."/>
            <person name="Ritter M.M."/>
            <person name="Hoeppner W."/>
        </authorList>
    </citation>
    <scope>VARIANTS MTC/MEN2A PHE-790 AND PHE-791</scope>
</reference>
<reference key="92">
    <citation type="journal article" date="1998" name="J. Hum. Genet.">
        <title>Mutational analysis of the RET proto-oncogene in 71 Japanese patients with medullary thyroid carcinoma.</title>
        <authorList>
            <person name="Shirahama S."/>
            <person name="Ogura K."/>
            <person name="Takami H."/>
            <person name="Ito K."/>
            <person name="Tohsen T."/>
            <person name="Miyauchi A."/>
            <person name="Nakamura Y."/>
        </authorList>
    </citation>
    <scope>VARIANTS MTC AND MEN2A</scope>
</reference>
<reference key="93">
    <citation type="journal article" date="1999" name="Am. J. Hum. Genet.">
        <title>Double heterozygosity for a RET substitution interfering with splicing and an EDNRB missense mutation in Hirschsprung disease.</title>
        <authorList>
            <person name="Auricchio A."/>
            <person name="Griseri P."/>
            <person name="Carpentieri M.L."/>
            <person name="Betsos N."/>
            <person name="Staiano A."/>
            <person name="Tozzi A."/>
            <person name="Priolo M."/>
            <person name="Thompson H."/>
            <person name="Bocciardi R."/>
            <person name="Romeo G."/>
            <person name="Ballabio A."/>
            <person name="Ceccherini I."/>
        </authorList>
    </citation>
    <scope>VARIANTS HSCR1 LYS-626 AND GLN-813</scope>
</reference>
<reference key="94">
    <citation type="journal article" date="1999" name="Hum. Mol. Genet.">
        <title>Two distinct mutations of the RET receptor causing Hirschsprung's disease impair the binding of signalling effectors to a multifunctional docking site.</title>
        <authorList>
            <person name="Geneste O."/>
            <person name="Bidaud C."/>
            <person name="De Vita G."/>
            <person name="Hofstra R.M.W."/>
            <person name="Tartare-Deckert S."/>
            <person name="Buys C.H.C.M."/>
            <person name="Lenoir G.M."/>
            <person name="Santoro M."/>
            <person name="Billaud M."/>
        </authorList>
    </citation>
    <scope>VARIANTS HSCR1 ASN-1059 DEL AND PRO-1061</scope>
</reference>
<reference key="95">
    <citation type="journal article" date="1999" name="J. Clin. Endocrinol. Metab.">
        <title>A novel 9-base pair duplication in RET exon 8 in familial medullary thyroid carcinoma.</title>
        <authorList>
            <person name="Pigny P."/>
            <person name="Bauters C."/>
            <person name="Wemeau J.-L."/>
            <person name="Houcke M.L."/>
            <person name="Crepin M."/>
            <person name="Caron P."/>
            <person name="Giraud S."/>
            <person name="Calender A."/>
            <person name="Buisine M.-P."/>
            <person name="Kerckaert J.-P."/>
            <person name="Porchet N."/>
        </authorList>
    </citation>
    <scope>VARIANT MTC GLU-GLU-CYS-531 INS</scope>
</reference>
<reference key="96">
    <citation type="journal article" date="1999" name="J. Clin. Endocrinol. Metab.">
        <title>A novel case of multiple endocrine neoplasia type 2A associated with two de novo mutations of the RET protooncogene.</title>
        <authorList>
            <person name="Tessitore A."/>
            <person name="Sinisi A.A."/>
            <person name="Pasquali D."/>
            <person name="Cardone M."/>
            <person name="Vitale D."/>
            <person name="Bellastella A."/>
            <person name="Colantuoni V."/>
        </authorList>
    </citation>
    <scope>VARIANT MEN2A GLY-640</scope>
</reference>
<reference key="97">
    <citation type="journal article" date="2000" name="Eur. J. Pediatr.">
        <title>Japanese patients with sporadic Hirschsprung: mutation analysis of the receptor tyrosine kinase proto-oncogene, endothelin-B receptor, endothelin-3, glial cell line-derived neurotrophic factor and neurturin genes: a comparison with similar studies.</title>
        <authorList>
            <person name="Sakai T."/>
            <person name="Nirasawa Y."/>
            <person name="Itoh Y."/>
            <person name="Wakizaka A."/>
        </authorList>
    </citation>
    <scope>VARIANTS HSCR1 GLN-287; PRO-690; ARG-767 AND GLN-873</scope>
</reference>
<reference key="98">
    <citation type="journal article" date="2000" name="Exp. Clin. Endocrinol. Diabetes">
        <title>A RET double mutation in the germline of a kindred with FMTC.</title>
        <authorList>
            <person name="Bartsch D.K."/>
            <person name="Hasse C."/>
            <person name="Schug C."/>
            <person name="Barth P."/>
            <person name="Rothmund M."/>
            <person name="Hoeppner W."/>
        </authorList>
    </citation>
    <scope>VARIANTS MTC MET-804 AND LEU-844</scope>
</reference>
<reference key="99">
    <citation type="journal article" date="2000" name="Hum. Mutat.">
        <title>A new germline mutation, R600Q, within the coding region of RET proto-oncogene: a rare polymorphism or a MEN 2 causing mutation?</title>
        <authorList>
            <person name="Saez M.E."/>
            <person name="Ruiz A."/>
            <person name="Cebrian A."/>
            <person name="Morales F."/>
            <person name="Robledo M."/>
            <person name="Antinolo G."/>
            <person name="Borrego S."/>
        </authorList>
    </citation>
    <scope>VARIANT GLN-600</scope>
</reference>
<reference key="100">
    <citation type="journal article" date="2000" name="Hum. Mutat.">
        <title>RET and GDNF gene scanning in Hirschsprung patients using two dual denaturing gel systems.</title>
        <authorList>
            <person name="Hofstra R.M."/>
            <person name="Wu Y."/>
            <person name="Stulp R.P."/>
            <person name="Elfferich P."/>
            <person name="Osinga J."/>
            <person name="Maas S.M."/>
            <person name="Siderius L."/>
            <person name="Brooks A.S."/>
            <person name="vd Ende J.J."/>
            <person name="Heydendael V.M."/>
            <person name="Severijnen R.S."/>
            <person name="Bax K.M."/>
            <person name="Meijers C."/>
            <person name="Buys C.H."/>
        </authorList>
    </citation>
    <scope>VARIANT HSCR1 GLU-907</scope>
</reference>
<reference key="101">
    <citation type="journal article" date="2000" name="Proc. Natl. Acad. Sci. U.S.A.">
        <title>A human model for multigenic inheritance: phenotypic expression in Hirschsprung disease requires both the RET gene and a new 9q31 locus.</title>
        <authorList>
            <person name="Bolk S."/>
            <person name="Pelet A."/>
            <person name="Hofstra R.M.W."/>
            <person name="Angrist M."/>
            <person name="Salomon R."/>
            <person name="Croaker D."/>
            <person name="Buys C.H.C.M."/>
            <person name="Lyonnet S."/>
            <person name="Chakravarti A."/>
        </authorList>
    </citation>
    <scope>VARIANTS HSCR1 LEU-32; CYS-77; TRP-360 AND LYS-394</scope>
</reference>
<reference key="102">
    <citation type="journal article" date="2001" name="J. Mol. Med.">
        <title>Three novel mutations in the RET proto-oncogene.</title>
        <authorList>
            <person name="Kalinin V.N."/>
            <person name="Amosenko F.A."/>
            <person name="Shabanov M.A."/>
            <person name="Lubchenko L.N."/>
            <person name="Hosch S.B."/>
            <person name="Garkavtseva R.F."/>
            <person name="Izbicki J.R."/>
        </authorList>
    </citation>
    <scope>VARIANTS MTC GLY-639; GLY-641 AND PHE-922</scope>
</reference>
<reference key="103">
    <citation type="journal article" date="2002" name="N. Engl. J. Med.">
        <title>Germ-line mutations in nonsyndromic pheochromocytoma.</title>
        <authorList>
            <consortium name="The Freiburg-Warsaw-Columbus pheochromocytoma study group"/>
            <person name="Neumann H.P.H."/>
            <person name="Bausch B."/>
            <person name="McWhinney S.R."/>
            <person name="Bender B.U."/>
            <person name="Gimm O."/>
            <person name="Franke G."/>
            <person name="Schipper J."/>
            <person name="Klisch J."/>
            <person name="Altehoefer C."/>
            <person name="Zerres K."/>
            <person name="Januszewicz A."/>
            <person name="Smith W.M."/>
            <person name="Munk R."/>
            <person name="Manz T."/>
            <person name="Glaesker S."/>
            <person name="Apel T.W."/>
            <person name="Treier M."/>
            <person name="Reineke M."/>
            <person name="Walz M.K."/>
            <person name="Hoang-Vu C."/>
            <person name="Brauckhoff M."/>
            <person name="Klein-Franke A."/>
            <person name="Klose P."/>
            <person name="Schmidt H."/>
            <person name="Maier-Woelfle M."/>
            <person name="Peczkowska M."/>
            <person name="Szmigielski C."/>
            <person name="Eng C."/>
        </authorList>
    </citation>
    <scope>VARIANTS PHEOCHROMOCYTOMA ARG-634; GLY-634; TYR-634; SER-634; PHE-634; TRP-634 AND PHE-791</scope>
</reference>
<reference key="104">
    <citation type="journal article" date="2002" name="Tohoku J. Exp. Med.">
        <title>Congenital central hypoventilation syndrome: a novel mutation of the RET gene in an isolated case.</title>
        <authorList>
            <person name="Kanai M."/>
            <person name="Numakura C."/>
            <person name="Sasaki A."/>
            <person name="Shirahata E."/>
            <person name="Akaba K."/>
            <person name="Hashimoto M."/>
            <person name="Hasegawa H."/>
            <person name="Shirasawa S."/>
            <person name="Hayasaka K."/>
        </authorList>
    </citation>
    <scope>VARIANT HIS-114</scope>
</reference>
<reference key="105">
    <citation type="journal article" date="2003" name="Hum. Genet.">
        <title>Molecular analysis of congenital central hypoventilation syndrome.</title>
        <authorList>
            <person name="Sasaki A."/>
            <person name="Kanai M."/>
            <person name="Kijima K."/>
            <person name="Akaba K."/>
            <person name="Hashimoto M."/>
            <person name="Hasegawa H."/>
            <person name="Otaki S."/>
            <person name="Koizumi T."/>
            <person name="Kusuda S."/>
            <person name="Ogawa Y."/>
            <person name="Tuchiya K."/>
            <person name="Yamamoto W."/>
            <person name="Nakamura T."/>
            <person name="Hayasaka K."/>
        </authorList>
    </citation>
    <scope>VARIANTS HIS-67; HIS-114; GLU-432; ASN-489; SER-691 AND CYS-982</scope>
</reference>
<reference key="106">
    <citation type="journal article" date="2006" name="Science">
        <title>The consensus coding sequences of human breast and colorectal cancers.</title>
        <authorList>
            <person name="Sjoeblom T."/>
            <person name="Jones S."/>
            <person name="Wood L.D."/>
            <person name="Parsons D.W."/>
            <person name="Lin J."/>
            <person name="Barber T.D."/>
            <person name="Mandelker D."/>
            <person name="Leary R.J."/>
            <person name="Ptak J."/>
            <person name="Silliman N."/>
            <person name="Szabo S."/>
            <person name="Buckhaults P."/>
            <person name="Farrell C."/>
            <person name="Meeh P."/>
            <person name="Markowitz S.D."/>
            <person name="Willis J."/>
            <person name="Dawson D."/>
            <person name="Willson J.K.V."/>
            <person name="Gazdar A.F."/>
            <person name="Hartigan J."/>
            <person name="Wu L."/>
            <person name="Liu C."/>
            <person name="Parmigiani G."/>
            <person name="Park B.H."/>
            <person name="Bachman K.E."/>
            <person name="Papadopoulos N."/>
            <person name="Vogelstein B."/>
            <person name="Kinzler K.W."/>
            <person name="Velculescu V.E."/>
        </authorList>
    </citation>
    <scope>VARIANTS [LARGE SCALE ANALYSIS] GLY-145; TRP-360 AND GLU-593</scope>
</reference>
<reference key="107">
    <citation type="journal article" date="2007" name="Nature">
        <title>Patterns of somatic mutation in human cancer genomes.</title>
        <authorList>
            <person name="Greenman C."/>
            <person name="Stephens P."/>
            <person name="Smith R."/>
            <person name="Dalgliesh G.L."/>
            <person name="Hunter C."/>
            <person name="Bignell G."/>
            <person name="Davies H."/>
            <person name="Teague J."/>
            <person name="Butler A."/>
            <person name="Stevens C."/>
            <person name="Edkins S."/>
            <person name="O'Meara S."/>
            <person name="Vastrik I."/>
            <person name="Schmidt E.E."/>
            <person name="Avis T."/>
            <person name="Barthorpe S."/>
            <person name="Bhamra G."/>
            <person name="Buck G."/>
            <person name="Choudhury B."/>
            <person name="Clements J."/>
            <person name="Cole J."/>
            <person name="Dicks E."/>
            <person name="Forbes S."/>
            <person name="Gray K."/>
            <person name="Halliday K."/>
            <person name="Harrison R."/>
            <person name="Hills K."/>
            <person name="Hinton J."/>
            <person name="Jenkinson A."/>
            <person name="Jones D."/>
            <person name="Menzies A."/>
            <person name="Mironenko T."/>
            <person name="Perry J."/>
            <person name="Raine K."/>
            <person name="Richardson D."/>
            <person name="Shepherd R."/>
            <person name="Small A."/>
            <person name="Tofts C."/>
            <person name="Varian J."/>
            <person name="Webb T."/>
            <person name="West S."/>
            <person name="Widaa S."/>
            <person name="Yates A."/>
            <person name="Cahill D.P."/>
            <person name="Louis D.N."/>
            <person name="Goldstraw P."/>
            <person name="Nicholson A.G."/>
            <person name="Brasseur F."/>
            <person name="Looijenga L."/>
            <person name="Weber B.L."/>
            <person name="Chiew Y.-E."/>
            <person name="DeFazio A."/>
            <person name="Greaves M.F."/>
            <person name="Green A.R."/>
            <person name="Campbell P."/>
            <person name="Birney E."/>
            <person name="Easton D.F."/>
            <person name="Chenevix-Trench G."/>
            <person name="Tan M.-H."/>
            <person name="Khoo S.K."/>
            <person name="Teh B.T."/>
            <person name="Yuen S.T."/>
            <person name="Leung S.Y."/>
            <person name="Wooster R."/>
            <person name="Futreal P.A."/>
            <person name="Stratton M.R."/>
        </authorList>
    </citation>
    <scope>VARIANTS [LARGE SCALE ANALYSIS] GLN-163; ASN-278; MET-292; ASN-489; SER-691; THR-749; SER-826; LEU-844; CYS-982 AND TYR-1112</scope>
</reference>
<reference key="108">
    <citation type="journal article" date="2008" name="Am. J. Hum. Genet.">
        <title>Renal aplasia in humans is associated with RET mutations.</title>
        <authorList>
            <person name="Skinner M.A."/>
            <person name="Safford S.D."/>
            <person name="Reeves J.G."/>
            <person name="Jackson M.E."/>
            <person name="Freemerman A.J."/>
        </authorList>
    </citation>
    <scope>VARIANTS THR-198; ALA-376; HIS-394; ILE-778; SER-894; THR-918; LEU-1049 AND SER-1067</scope>
    <scope>POSSIBLE INVOLVEMENT IN RENAL AGENESIS</scope>
    <scope>CHARACTERIZATION OF VARIANTS THR-198; ALA-376; HIS-394; ILE-778; SER-894; LEU-1049 AND SER-1067</scope>
</reference>
<reference key="109">
    <citation type="journal article" date="2011" name="PLoS ONE">
        <title>RET mutational spectrum in Hirschsprung disease: evaluation of 601 Chinese patients.</title>
        <authorList>
            <person name="So M.T."/>
            <person name="Leon T.Y."/>
            <person name="Cheng G."/>
            <person name="Tang C.S."/>
            <person name="Miao X.P."/>
            <person name="Cornes B.K."/>
            <person name="Diem N.N."/>
            <person name="Cui L."/>
            <person name="Ngan E.S."/>
            <person name="Lui V.C."/>
            <person name="Wu X.Z."/>
            <person name="Wang B."/>
            <person name="Wang H."/>
            <person name="Yuan Z.W."/>
            <person name="Huang L.M."/>
            <person name="Li L."/>
            <person name="Xia H."/>
            <person name="Zhu D."/>
            <person name="Liu J."/>
            <person name="Nguyen T.L."/>
            <person name="Chan I.H."/>
            <person name="Chung P.H."/>
            <person name="Liu X.L."/>
            <person name="Zhang R."/>
            <person name="Wong K.K."/>
            <person name="Sham P.C."/>
            <person name="Cherny S.S."/>
            <person name="Tam P.K."/>
            <person name="Garcia-Barcelo M.M."/>
        </authorList>
    </citation>
    <scope>VARIANTS HSCR1 549-LYS-GLY-550 DEL; CYS-114; GLY-145; LEU-155; PRO-175; ALA-278; PRO-278; ASN-300; GLN-313; ILE-316; LEU-339; TYR-353; GLN-360; MET-397; MET-412; ARG-423; LYS-480; GLN-595; LEU-679; GLN-694; SER-783; ARG-830; THR-907; LEU-961; VAL-1052; CYS-1062 AND THR-1064</scope>
    <scope>VARIANTS HIS-114; ASN-278 AND MET-292</scope>
</reference>
<reference key="110">
    <citation type="journal article" date="2018" name="Br. J. Pharmacol.">
        <title>Drug resistance profiles of mutations in the RET kinase domain.</title>
        <authorList>
            <person name="Liu X."/>
            <person name="Shen T."/>
            <person name="Mooers B.H.M."/>
            <person name="Hilberg F."/>
            <person name="Wu J."/>
        </authorList>
    </citation>
    <scope>ACTIVITY REGULATION</scope>
    <scope>VARIANTS ILE-730; VAL-730; LYS-732; ALA-738; ASN-806; VAL-807; ALA-810; SER-810; ILE-871 AND VAL-998</scope>
    <scope>CHARACTERIZATION OF VARIANTS ILE-730; VAL-730; LYS-732; ALA-738; ASN-806; VAL-807; ALA-810; SER-810; ILE-871 AND VAL-998</scope>
    <scope>VARIANTS MTC LEU-804; MET-804 AND THR-918</scope>
    <scope>CHARACTERIZATION OF VARIANTS MTC LEU-804; MET-804 AND THR-918</scope>
</reference>
<name>RET_HUMAN</name>
<organism>
    <name type="scientific">Homo sapiens</name>
    <name type="common">Human</name>
    <dbReference type="NCBI Taxonomy" id="9606"/>
    <lineage>
        <taxon>Eukaryota</taxon>
        <taxon>Metazoa</taxon>
        <taxon>Chordata</taxon>
        <taxon>Craniata</taxon>
        <taxon>Vertebrata</taxon>
        <taxon>Euteleostomi</taxon>
        <taxon>Mammalia</taxon>
        <taxon>Eutheria</taxon>
        <taxon>Euarchontoglires</taxon>
        <taxon>Primates</taxon>
        <taxon>Haplorrhini</taxon>
        <taxon>Catarrhini</taxon>
        <taxon>Hominidae</taxon>
        <taxon>Homo</taxon>
    </lineage>
</organism>